<protein>
    <recommendedName>
        <fullName evidence="61">Fibronectin</fullName>
        <shortName>FN</shortName>
    </recommendedName>
    <alternativeName>
        <fullName>Cold-insoluble globulin</fullName>
        <shortName>CIG</shortName>
    </alternativeName>
    <component>
        <recommendedName>
            <fullName>Anastellin</fullName>
        </recommendedName>
    </component>
    <component>
        <recommendedName>
            <fullName>Ugl-Y1</fullName>
        </recommendedName>
    </component>
    <component>
        <recommendedName>
            <fullName>Ugl-Y2</fullName>
        </recommendedName>
    </component>
    <component>
        <recommendedName>
            <fullName>Ugl-Y3</fullName>
        </recommendedName>
    </component>
</protein>
<comment type="function">
    <text evidence="3 45 47 49 50 54">Fibronectins bind cell surfaces and various compounds including collagen, fibrin, heparin, DNA, and actin (PubMed:3024962, PubMed:3593230, PubMed:3900070, PubMed:7989369). Fibronectins are involved in cell adhesion, cell motility, opsonization, wound healing, and maintenance of cell shape (PubMed:3024962, PubMed:3593230, PubMed:3900070, PubMed:7989369). Involved in osteoblast compaction through the fibronectin fibrillogenesis cell-mediated matrix assembly process, essential for osteoblast mineralization (By similarity). Participates in the regulation of type I collagen deposition by osteoblasts (By similarity). Acts as a ligand for the LILRB4 receptor, inhibiting FCGR1A/CD64-mediated monocyte activation (PubMed:34089617).</text>
</comment>
<comment type="function">
    <molecule>Anastellin</molecule>
    <text evidence="9 21 36 55">Binds fibronectin and induces fibril formation. This fibronectin polymer, named superfibronectin, exhibits enhanced adhesive properties. Both anastellin and superfibronectin inhibit tumor growth, angiogenesis and metastasis. Anastellin activates p38 MAPK and inhibits lysophospholipid signaling.</text>
</comment>
<comment type="function">
    <text evidence="3">Secreted by contracting muscle, induces liver autophagy, a degradative pathway for nutrient mobilization and damage removal, and systemic insulin sensitization via hepatic ITGA5:ITGB1 integrin receptor signaling.</text>
</comment>
<comment type="subunit">
    <text evidence="1 3 12 13 15 18 25 30 32 35 55 58">Mostly heterodimers or multimers of alternatively spliced variants, connected by 2 disulfide bonds near the carboxyl ends; to a lesser extent homodimers. Interacts with FBLN1, AMBP, TNR, LGALS3BP and COL13A1. Interacts with FBLN7 (By similarity). Interacts with COMP (PubMed:12225811). Interacts (via type III repeats 9-14) with TNFAIP6 (via CUB domain); this interaction enhances fibronectin fibril assembly. TNFAIP6 may act as a bridging molecule between FN1 and THBS1 (PubMed:18042364). Interacts with TNR; the interaction inhibits cell adhesion and neurite outgrowth (By similarity). Interacts with FST3 and MYOC. Interacts with SVEP1 (By similarity).</text>
</comment>
<comment type="subunit">
    <text evidence="16">(Microbial infection) Interacts with S.aureus FnbA.</text>
</comment>
<comment type="subunit">
    <text evidence="57">(Microbial infection) Interacts with M.bovis FbpB via the collagen-binding region.</text>
</comment>
<comment type="subunit">
    <text evidence="11">(Microbial infection) Interacts with recombinant S.pneumoniae PavA (rqcH).</text>
</comment>
<comment type="subunit">
    <text evidence="40">(Microbial infection) Interacts with recombinant S.suis FbpS (rqcH) via fibronectin's N-terminal 30 kDa region.</text>
</comment>
<comment type="subunit">
    <text evidence="16">(Microbial infection) Interacts with fibronectin-binding proteins from other Mycobacteria.</text>
</comment>
<comment type="interaction">
    <interactant intactId="EBI-1220319">
        <id>P02751</id>
    </interactant>
    <interactant intactId="EBI-2835375">
        <id>P29279</id>
        <label>CCN2</label>
    </interactant>
    <organismsDiffer>false</organismsDiffer>
    <experiments>5</experiments>
</comment>
<comment type="interaction">
    <interactant intactId="EBI-1220319">
        <id>P02751</id>
    </interactant>
    <interactant intactId="EBI-982999">
        <id>P02452</id>
        <label>COL1A1</label>
    </interactant>
    <organismsDiffer>false</organismsDiffer>
    <experiments>3</experiments>
</comment>
<comment type="interaction">
    <interactant intactId="EBI-1220319">
        <id>P02751</id>
    </interactant>
    <interactant intactId="EBI-9663608">
        <id>P07585</id>
        <label>DCN</label>
    </interactant>
    <organismsDiffer>false</organismsDiffer>
    <experiments>9</experiments>
</comment>
<comment type="interaction">
    <interactant intactId="EBI-1220319">
        <id>P02751</id>
    </interactant>
    <interactant intactId="EBI-2505934">
        <id>P35555</id>
        <label>FBN1</label>
    </interactant>
    <organismsDiffer>false</organismsDiffer>
    <experiments>2</experiments>
</comment>
<comment type="interaction">
    <interactant intactId="EBI-1220319">
        <id>P02751</id>
    </interactant>
    <interactant intactId="EBI-6164392">
        <id>P35556</id>
        <label>FBN2</label>
    </interactant>
    <organismsDiffer>false</organismsDiffer>
    <experiments>2</experiments>
</comment>
<comment type="interaction">
    <interactant intactId="EBI-1220319">
        <id>P02751</id>
    </interactant>
    <interactant intactId="EBI-11786958">
        <id>O75636</id>
        <label>FCN3</label>
    </interactant>
    <organismsDiffer>false</organismsDiffer>
    <experiments>3</experiments>
</comment>
<comment type="interaction">
    <interactant intactId="EBI-1220319">
        <id>P02751</id>
    </interactant>
    <interactant intactId="EBI-1220319">
        <id>P02751</id>
        <label>FN1</label>
    </interactant>
    <organismsDiffer>false</organismsDiffer>
    <experiments>8</experiments>
</comment>
<comment type="interaction">
    <interactant intactId="EBI-1220319">
        <id>P02751</id>
    </interactant>
    <interactant intactId="EBI-20724846">
        <id>PRO_0000018520</id>
        <label>LOX</label>
        <dbReference type="UniProtKB" id="P28300"/>
    </interactant>
    <organismsDiffer>false</organismsDiffer>
    <experiments>2</experiments>
</comment>
<comment type="interaction">
    <interactant intactId="EBI-1220319">
        <id>P02751</id>
    </interactant>
    <interactant intactId="EBI-7172227">
        <id>Q9Y4K0</id>
        <label>LOXL2</label>
    </interactant>
    <organismsDiffer>false</organismsDiffer>
    <experiments>2</experiments>
</comment>
<comment type="interaction">
    <interactant intactId="EBI-1220319">
        <id>P02751</id>
    </interactant>
    <interactant intactId="EBI-9232288">
        <id>P08519</id>
        <label>LPA</label>
    </interactant>
    <organismsDiffer>false</organismsDiffer>
    <experiments>2</experiments>
</comment>
<comment type="interaction">
    <interactant intactId="EBI-1220319">
        <id>P02751</id>
    </interactant>
    <interactant intactId="EBI-7797649">
        <id>P11684</id>
        <label>SCGB1A1</label>
    </interactant>
    <organismsDiffer>false</organismsDiffer>
    <experiments>3</experiments>
</comment>
<comment type="interaction">
    <interactant intactId="EBI-1220319">
        <id>P02751</id>
    </interactant>
    <interactant intactId="EBI-722597">
        <id>P05154</id>
        <label>SERPINA5</label>
    </interactant>
    <organismsDiffer>false</organismsDiffer>
    <experiments>3</experiments>
</comment>
<comment type="interaction">
    <interactant intactId="EBI-1220319">
        <id>P02751</id>
    </interactant>
    <interactant intactId="EBI-2797815">
        <id>Q9NY15</id>
        <label>STAB1</label>
    </interactant>
    <organismsDiffer>false</organismsDiffer>
    <experiments>2</experiments>
</comment>
<comment type="interaction">
    <interactant intactId="EBI-1220319">
        <id>P02751</id>
    </interactant>
    <interactant intactId="EBI-727668">
        <id>P21980</id>
        <label>TGM2</label>
    </interactant>
    <organismsDiffer>false</organismsDiffer>
    <experiments>5</experiments>
</comment>
<comment type="interaction">
    <interactant intactId="EBI-1220319">
        <id>P02751</id>
    </interactant>
    <interactant intactId="EBI-2530274">
        <id>P07996</id>
        <label>THBS1</label>
    </interactant>
    <organismsDiffer>false</organismsDiffer>
    <experiments>2</experiments>
</comment>
<comment type="interaction">
    <interactant intactId="EBI-1220319">
        <id>P02751</id>
    </interactant>
    <interactant intactId="EBI-11700693">
        <id>P98066</id>
        <label>TNFAIP6</label>
    </interactant>
    <organismsDiffer>false</organismsDiffer>
    <experiments>8</experiments>
</comment>
<comment type="interaction">
    <interactant intactId="EBI-1220319">
        <id>P02751</id>
    </interactant>
    <interactant intactId="EBI-741480">
        <id>Q9UMX0</id>
        <label>UBQLN1</label>
    </interactant>
    <organismsDiffer>false</organismsDiffer>
    <experiments>3</experiments>
</comment>
<comment type="interaction">
    <interactant intactId="EBI-1220319">
        <id>P02751</id>
    </interactant>
    <interactant intactId="EBI-301246">
        <id>P40337</id>
        <label>VHL</label>
    </interactant>
    <organismsDiffer>false</organismsDiffer>
    <experiments>2</experiments>
</comment>
<comment type="interaction">
    <interactant intactId="EBI-1220319">
        <id>P02751</id>
    </interactant>
    <interactant intactId="EBI-8398157">
        <id>P14738</id>
        <label>fnbA</label>
    </interactant>
    <organismsDiffer>true</organismsDiffer>
    <experiments>23</experiments>
</comment>
<comment type="interaction">
    <interactant intactId="EBI-1220319">
        <id>P02751</id>
    </interactant>
    <interactant intactId="EBI-8398005">
        <id>Q53682</id>
        <label>fnbB</label>
    </interactant>
    <organismsDiffer>true</organismsDiffer>
    <experiments>19</experiments>
</comment>
<comment type="interaction">
    <interactant intactId="EBI-1220319">
        <id>P02751</id>
    </interactant>
    <interactant intactId="EBI-20719966">
        <id>Q53971</id>
        <label>fnbB</label>
    </interactant>
    <organismsDiffer>true</organismsDiffer>
    <experiments>4</experiments>
</comment>
<comment type="interaction">
    <interactant intactId="EBI-1220319">
        <id>P02751</id>
    </interactant>
    <interactant intactId="EBI-9826140">
        <id>Q93ED6</id>
        <label>fne</label>
    </interactant>
    <organismsDiffer>true</organismsDiffer>
    <experiments>8</experiments>
</comment>
<comment type="interaction">
    <interactant intactId="EBI-1220319">
        <id>P02751</id>
    </interactant>
    <interactant intactId="EBI-2259469">
        <id>P75358</id>
        <label>gapA</label>
    </interactant>
    <organismsDiffer>true</organismsDiffer>
    <experiments>3</experiments>
</comment>
<comment type="interaction">
    <interactant intactId="EBI-1220319">
        <id>P02751</id>
    </interactant>
    <interactant intactId="EBI-14034164">
        <id>Q4AAD6</id>
        <label>MHJ_0194</label>
    </interactant>
    <organismsDiffer>true</organismsDiffer>
    <experiments>3</experiments>
</comment>
<comment type="interaction">
    <interactant intactId="EBI-1220319">
        <id>P02751</id>
    </interactant>
    <interactant intactId="EBI-13948049">
        <id>Q601D1</id>
        <label>mhp271</label>
    </interactant>
    <organismsDiffer>true</organismsDiffer>
    <experiments>2</experiments>
</comment>
<comment type="interaction">
    <interactant intactId="EBI-1220319">
        <id>P02751</id>
    </interactant>
    <interactant intactId="EBI-2259593">
        <id>P75392</id>
        <label>pdhC</label>
    </interactant>
    <organismsDiffer>true</organismsDiffer>
    <experiments>2</experiments>
</comment>
<comment type="interaction">
    <interactant intactId="EBI-1220319">
        <id>P02751</id>
    </interactant>
    <interactant intactId="EBI-11164515">
        <id>Q9CKF6</id>
        <label>PM1665</label>
    </interactant>
    <organismsDiffer>true</organismsDiffer>
    <experiments>5</experiments>
</comment>
<comment type="interaction">
    <interactant intactId="EBI-1220319">
        <id>P02751</id>
    </interactant>
    <interactant intactId="EBI-20729956">
        <id>Q01924</id>
        <label>Sfb</label>
    </interactant>
    <organismsDiffer>true</organismsDiffer>
    <experiments>5</experiments>
</comment>
<comment type="interaction">
    <interactant intactId="EBI-1220319">
        <id>P02751</id>
    </interactant>
    <interactant intactId="EBI-2259072">
        <id>P23568</id>
        <label>tuf</label>
    </interactant>
    <organismsDiffer>true</organismsDiffer>
    <experiments>2</experiments>
</comment>
<comment type="interaction">
    <interactant intactId="EBI-1220319">
        <id>P02751</id>
    </interactant>
    <interactant intactId="EBI-6927928">
        <id>PRO_0000045603</id>
        <dbReference type="UniProtKB" id="Q99IB8"/>
    </interactant>
    <organismsDiffer>true</organismsDiffer>
    <experiments>3</experiments>
</comment>
<comment type="interaction">
    <interactant intactId="EBI-22099195">
        <id>P02751-1</id>
    </interactant>
    <interactant intactId="EBI-2464511">
        <id>P20908</id>
        <label>COL5A1</label>
    </interactant>
    <organismsDiffer>false</organismsDiffer>
    <experiments>2</experiments>
</comment>
<comment type="interaction">
    <interactant intactId="EBI-7133890">
        <id>P02751-7</id>
    </interactant>
    <interactant intactId="EBI-515315">
        <id>P06241</id>
        <label>FYN</label>
    </interactant>
    <organismsDiffer>false</organismsDiffer>
    <experiments>2</experiments>
</comment>
<comment type="interaction">
    <interactant intactId="EBI-15482592">
        <id>PRO_0000390479</id>
    </interactant>
    <interactant intactId="EBI-20724846">
        <id>PRO_0000018520</id>
        <label>LOX</label>
        <dbReference type="UniProtKB" id="P28300"/>
    </interactant>
    <organismsDiffer>false</organismsDiffer>
    <experiments>3</experiments>
</comment>
<comment type="subcellular location">
    <subcellularLocation>
        <location evidence="62">Secreted</location>
        <location evidence="62">Extracellular space</location>
        <location evidence="62">Extracellular matrix</location>
    </subcellularLocation>
    <subcellularLocation>
        <location evidence="3">Secreted</location>
    </subcellularLocation>
</comment>
<comment type="alternative products">
    <event type="alternative splicing"/>
    <isoform>
        <id>P02751-15</id>
        <name>15</name>
        <sequence type="displayed"/>
    </isoform>
    <isoform>
        <id>P02751-1</id>
        <name>1</name>
        <sequence type="described" ref="VSP_060347"/>
    </isoform>
    <isoform>
        <id>P02751-2</id>
        <name>2</name>
        <name>MSF-FN70</name>
        <name>Migration stimulation factor FN70</name>
        <sequence type="described" ref="VSP_060343 VSP_060344 VSP_060345"/>
    </isoform>
    <isoform>
        <id>P02751-3</id>
        <name>3</name>
        <name>V89</name>
        <sequence type="described" ref="VSP_060347 VSP_060353"/>
    </isoform>
    <isoform>
        <id>P02751-4</id>
        <name>4</name>
        <name>Fibronectin III-15X</name>
        <sequence type="described" ref="VSP_060347 VSP_060351 VSP_060354 VSP_060355"/>
    </isoform>
    <isoform>
        <id>P02751-5</id>
        <name>5</name>
        <name>Fibronectin (V+I-10)-</name>
        <sequence type="described" ref="VSP_060347 VSP_060351 VSP_060356"/>
    </isoform>
    <isoform>
        <id>P02751-6</id>
        <name>6</name>
        <name>Fibronectin (V+III-15)-</name>
        <sequence type="described" ref="VSP_060347 VSP_060350"/>
    </isoform>
    <isoform>
        <id>P02751-7</id>
        <name>7</name>
        <name>Fibronectin containing EDB domain</name>
        <sequence type="described" ref="VSP_060353"/>
    </isoform>
    <isoform>
        <id>P02751-8</id>
        <name>8</name>
        <name>Fibronectin not containing EDA domain</name>
        <sequence type="described" ref="VSP_060347 VSP_060349"/>
    </isoform>
    <isoform>
        <id>P02751-9</id>
        <name>9</name>
        <name>Fibronectin not containing EDA and EDB domains and uses V64 variant of IIICS region</name>
        <sequence type="described" ref="VSP_060347 VSP_060349 VSP_060352 VSP_060353"/>
    </isoform>
    <isoform>
        <id>P02751-10</id>
        <name>10</name>
        <sequence type="described" ref="VSP_060347 VSP_060349 VSP_060351"/>
    </isoform>
    <isoform>
        <id>P02751-11</id>
        <name>11</name>
        <name>Fibronectin containing EDB domain</name>
        <name>exon x+2</name>
        <sequence type="described" ref="VSP_060348"/>
    </isoform>
    <isoform>
        <id>P02751-12</id>
        <name>12</name>
        <sequence type="described" ref="VSP_060346 VSP_060349 VSP_060352 VSP_060353"/>
    </isoform>
    <isoform>
        <id>P02751-13</id>
        <name>13</name>
        <sequence type="described" ref="VSP_060349 VSP_060351"/>
    </isoform>
    <isoform>
        <id>P02751-14</id>
        <name>14</name>
        <sequence type="described" ref="VSP_060347 VSP_060349 VSP_060353"/>
    </isoform>
    <isoform>
        <id>P02751-16</id>
        <name>16</name>
        <name>Migration stimulation factor</name>
        <name>MSF</name>
        <sequence type="described" ref="VSP_060344 VSP_060345"/>
    </isoform>
    <isoform>
        <id>P02751-17</id>
        <name>17</name>
        <sequence type="described" ref="VSP_060347 VSP_060352 VSP_060353"/>
    </isoform>
    <text evidence="61">A number of isoforms are produced. The diversity of isoforms depends on the V region and either of the two extra domains which can be either included or excluded (partially or completely for the V region).</text>
</comment>
<comment type="tissue specificity">
    <text evidence="28 42 48">Expressed in the inner limiting membrane and around blood vessels in the retina (at protein level) (PubMed:29777959). Plasma FN (soluble dimeric form) is secreted by hepatocytes. Cellular FN (dimeric or cross-linked multimeric forms), made by fibroblasts, epithelial and other cell types, is deposited as fibrils in the extracellular matrix. Ugl-Y1, Ugl-Y2 and Ugl-Y3 are found in urine (PubMed:17614963).</text>
</comment>
<comment type="developmental stage">
    <text evidence="28 42 48">Expressed between 12 and 19 weeks post-conception (WPC) in Bruch's membrane, with expression in the choroid evident from 14 WPC onwards (at protein level) (PubMed:29777959). Expressed in the inner limiting membrane at 17 WPC (at protein level) (PubMed:29777959). Ugl-Y1, Ugl-Y2 and Ugl-Y3 are present in the urine from 0 to 17 years of age (PubMed:17614963, PubMed:3584091).</text>
</comment>
<comment type="PTM">
    <text evidence="38">Sulfated.</text>
</comment>
<comment type="PTM">
    <text evidence="10 19 22 24 28 33 34 37 48">It is not known whether both or only one of Thr-2155 and Thr-2156 are/is glycosylated.</text>
</comment>
<comment type="PTM">
    <text evidence="3">Forms covalent cross-links mediated by a transglutaminase, such as F13A or TGM2, between a glutamine and the epsilon-amino group of a lysine residue, forming homopolymers and heteropolymers (e.g. fibrinogen-fibronectin, collagen-fibronectin heteropolymers).</text>
</comment>
<comment type="PTM">
    <text evidence="39">Phosphorylated by FAM20C in the extracellular medium.</text>
</comment>
<comment type="PTM">
    <text evidence="63">Proteolytic processing produces the C-terminal NC1 peptide, anastellin.</text>
</comment>
<comment type="PTM">
    <text evidence="3">Some lysine residues are oxidized to allysine by LOXL3, promoting fibronectin activation and matrix formation.</text>
</comment>
<comment type="PTM">
    <text evidence="2">Serotonylated on Gln residues by TGM2 in response to hypoxia.</text>
</comment>
<comment type="disease" evidence="31">
    <disease id="DI-01667">
        <name>Glomerulopathy with fibronectin deposits 2</name>
        <acronym>GFND2</acronym>
        <description>Genetically heterogeneous autosomal dominant disorder characterized clinically by proteinuria, microscopic hematuria, and hypertension that leads to end-stage renal failure in the second to fifth decade of life.</description>
        <dbReference type="MIM" id="601894"/>
    </disease>
    <text>The disease is caused by variants affecting the gene represented in this entry.</text>
</comment>
<comment type="disease" evidence="41">
    <disease id="DI-05167">
        <name>Spondylometaphyseal dysplasia, corner fracture type</name>
        <acronym>SMDCF</acronym>
        <description>An autosomal dominant form of spondylometaphyseal dysplasia, a group of short stature disorders distinguished by abnormalities in the vertebrae and the metaphyses of the tubular bones. SMDCF is characterized by flake-like, triangular, or curvilinear ossification centers at the edges of irregular metaphyses that simulate fractures. These corner fractures involve the distal tibia, the ulnar aspect of the distal radius, the proximal humerus, and the proximal femur. They represent irregular ossification at the growth plates and secondary ossification centers.</description>
        <dbReference type="MIM" id="184255"/>
    </disease>
    <text>The disease is caused by variants affecting the gene represented in this entry.</text>
</comment>
<comment type="miscellaneous">
    <molecule>Isoform 16</molecule>
    <text evidence="61">Expressed by fetal and tumor-associated cells.</text>
</comment>
<comment type="sequence caution" evidence="61">
    <conflict type="erroneous translation">
        <sequence resource="EMBL-CDS" id="AAA52463"/>
    </conflict>
</comment>
<comment type="sequence caution" evidence="61">
    <conflict type="erroneous gene model prediction">
        <sequence resource="EMBL-CDS" id="AAX76513"/>
    </conflict>
</comment>
<comment type="sequence caution" evidence="61">
    <conflict type="erroneous initiation">
        <sequence resource="EMBL-CDS" id="BAD93077"/>
    </conflict>
    <text>Extended N-terminus.</text>
</comment>
<comment type="sequence caution" evidence="61">
    <conflict type="erroneous initiation">
        <sequence resource="EMBL-CDS" id="CAD91166"/>
    </conflict>
    <text>Extended N-terminus.</text>
</comment>
<comment type="sequence caution" evidence="61">
    <conflict type="erroneous initiation">
        <sequence resource="EMBL-CDS" id="CAD97964"/>
    </conflict>
    <text>Extended N-terminus.</text>
</comment>
<comment type="sequence caution" evidence="61">
    <conflict type="erroneous initiation">
        <sequence resource="EMBL-CDS" id="CAD97965"/>
    </conflict>
    <text>Extended N-terminus.</text>
</comment>
<comment type="sequence caution" evidence="61">
    <conflict type="erroneous initiation">
        <sequence resource="EMBL-CDS" id="CAD97984"/>
    </conflict>
    <text>Extended N-terminus.</text>
</comment>
<comment type="sequence caution" evidence="61">
    <conflict type="erroneous initiation">
        <sequence resource="EMBL-CDS" id="CAE45847"/>
    </conflict>
    <text>Extended N-terminus.</text>
</comment>
<comment type="sequence caution" evidence="61">
    <conflict type="erroneous initiation">
        <sequence resource="EMBL-CDS" id="CAH18136"/>
    </conflict>
    <text>Extended N-terminus.</text>
</comment>
<comment type="online information" name="Wikipedia">
    <link uri="https://en.wikipedia.org/wiki/Fibronectin"/>
    <text>Fibronectin entry</text>
</comment>
<accession>P02751</accession>
<accession>B7ZLF0</accession>
<accession>E9PE77</accession>
<accession>E9PG29</accession>
<accession>O95609</accession>
<accession>O95610</accession>
<accession>Q14312</accession>
<accession>Q14325</accession>
<accession>Q14326</accession>
<accession>Q17RV7</accession>
<accession>Q53S27</accession>
<accession>Q564H7</accession>
<accession>Q585T2</accession>
<accession>Q59EH1</accession>
<accession>Q60FE4</accession>
<accession>Q68DP8</accession>
<accession>Q68DP9</accession>
<accession>Q68DT4</accession>
<accession>Q6LDP6</accession>
<accession>Q6MZS0</accession>
<accession>Q6MZU5</accession>
<accession>Q6N025</accession>
<accession>Q6N0A6</accession>
<accession>Q7Z391</accession>
<accession>Q86T27</accession>
<accession>Q8IVI8</accession>
<accession>Q96KP7</accession>
<accession>Q96KP8</accession>
<accession>Q96KP9</accession>
<accession>Q9H1B8</accession>
<accession>Q9HAP3</accession>
<accession>Q9UMK2</accession>
<dbReference type="EMBL" id="AJ276395">
    <property type="protein sequence ID" value="CAC20427.1"/>
    <property type="molecule type" value="mRNA"/>
</dbReference>
<dbReference type="EMBL" id="AJ535086">
    <property type="protein sequence ID" value="CAD59389.1"/>
    <property type="molecule type" value="mRNA"/>
</dbReference>
<dbReference type="EMBL" id="AJ849445">
    <property type="protein sequence ID" value="CAH60958.1"/>
    <property type="molecule type" value="mRNA"/>
</dbReference>
<dbReference type="EMBL" id="AB191261">
    <property type="protein sequence ID" value="BAD52437.1"/>
    <property type="molecule type" value="mRNA"/>
</dbReference>
<dbReference type="EMBL" id="AB209840">
    <property type="protein sequence ID" value="BAD93077.1"/>
    <property type="status" value="ALT_INIT"/>
    <property type="molecule type" value="mRNA"/>
</dbReference>
<dbReference type="EMBL" id="AL832202">
    <property type="protein sequence ID" value="CAD91166.1"/>
    <property type="status" value="ALT_INIT"/>
    <property type="molecule type" value="mRNA"/>
</dbReference>
<dbReference type="EMBL" id="BX537590">
    <property type="protein sequence ID" value="CAD97791.1"/>
    <property type="molecule type" value="mRNA"/>
</dbReference>
<dbReference type="EMBL" id="BX538017">
    <property type="protein sequence ID" value="CAD97964.1"/>
    <property type="status" value="ALT_INIT"/>
    <property type="molecule type" value="mRNA"/>
</dbReference>
<dbReference type="EMBL" id="BX538018">
    <property type="protein sequence ID" value="CAD97965.1"/>
    <property type="status" value="ALT_INIT"/>
    <property type="molecule type" value="mRNA"/>
</dbReference>
<dbReference type="EMBL" id="BX538045">
    <property type="protein sequence ID" value="CAD97984.1"/>
    <property type="status" value="ALT_INIT"/>
    <property type="molecule type" value="mRNA"/>
</dbReference>
<dbReference type="EMBL" id="BX640608">
    <property type="protein sequence ID" value="CAE45714.1"/>
    <property type="molecule type" value="mRNA"/>
</dbReference>
<dbReference type="EMBL" id="BX640731">
    <property type="protein sequence ID" value="CAE45847.1"/>
    <property type="status" value="ALT_INIT"/>
    <property type="molecule type" value="mRNA"/>
</dbReference>
<dbReference type="EMBL" id="BX640875">
    <property type="protein sequence ID" value="CAE45932.1"/>
    <property type="molecule type" value="mRNA"/>
</dbReference>
<dbReference type="EMBL" id="BX640920">
    <property type="protein sequence ID" value="CAE45958.1"/>
    <property type="molecule type" value="mRNA"/>
</dbReference>
<dbReference type="EMBL" id="CR749281">
    <property type="protein sequence ID" value="CAH18136.1"/>
    <property type="status" value="ALT_INIT"/>
    <property type="molecule type" value="mRNA"/>
</dbReference>
<dbReference type="EMBL" id="CR749316">
    <property type="protein sequence ID" value="CAH18171.1"/>
    <property type="molecule type" value="mRNA"/>
</dbReference>
<dbReference type="EMBL" id="CR749317">
    <property type="protein sequence ID" value="CAH18172.1"/>
    <property type="molecule type" value="mRNA"/>
</dbReference>
<dbReference type="EMBL" id="AC012462">
    <property type="protein sequence ID" value="AAX76513.1"/>
    <property type="status" value="ALT_SEQ"/>
    <property type="molecule type" value="Genomic_DNA"/>
</dbReference>
<dbReference type="EMBL" id="AC073284">
    <property type="protein sequence ID" value="AAY24063.1"/>
    <property type="molecule type" value="Genomic_DNA"/>
</dbReference>
<dbReference type="EMBL" id="CH471063">
    <property type="protein sequence ID" value="EAW70536.1"/>
    <property type="molecule type" value="Genomic_DNA"/>
</dbReference>
<dbReference type="EMBL" id="BC117176">
    <property type="protein sequence ID" value="AAI17177.1"/>
    <property type="molecule type" value="mRNA"/>
</dbReference>
<dbReference type="EMBL" id="BC143763">
    <property type="protein sequence ID" value="AAI43764.1"/>
    <property type="molecule type" value="mRNA"/>
</dbReference>
<dbReference type="EMBL" id="M15801">
    <property type="protein sequence ID" value="AAA53376.1"/>
    <property type="molecule type" value="Genomic_DNA"/>
</dbReference>
<dbReference type="EMBL" id="AF312399">
    <property type="protein sequence ID" value="AAG30571.1"/>
    <property type="molecule type" value="mRNA"/>
</dbReference>
<dbReference type="EMBL" id="X02761">
    <property type="protein sequence ID" value="CAA26536.1"/>
    <property type="molecule type" value="mRNA"/>
</dbReference>
<dbReference type="EMBL" id="U41850">
    <property type="protein sequence ID" value="AAD00014.1"/>
    <property type="molecule type" value="mRNA"/>
</dbReference>
<dbReference type="EMBL" id="U42404">
    <property type="protein sequence ID" value="AAD00015.1"/>
    <property type="molecule type" value="mRNA"/>
</dbReference>
<dbReference type="EMBL" id="U42592">
    <property type="protein sequence ID" value="AAD00017.1"/>
    <property type="molecule type" value="mRNA"/>
</dbReference>
<dbReference type="EMBL" id="U42593">
    <property type="protein sequence ID" value="AAD00018.1"/>
    <property type="molecule type" value="mRNA"/>
</dbReference>
<dbReference type="EMBL" id="U42594">
    <property type="protein sequence ID" value="AAD00019.1"/>
    <property type="molecule type" value="mRNA"/>
</dbReference>
<dbReference type="EMBL" id="U42455">
    <property type="protein sequence ID" value="AAD09448.1"/>
    <property type="molecule type" value="mRNA"/>
</dbReference>
<dbReference type="EMBL" id="U42456">
    <property type="protein sequence ID" value="AAD09449.1"/>
    <property type="molecule type" value="mRNA"/>
</dbReference>
<dbReference type="EMBL" id="U42458">
    <property type="protein sequence ID" value="AAD09450.1"/>
    <property type="molecule type" value="mRNA"/>
</dbReference>
<dbReference type="EMBL" id="U42457">
    <property type="protein sequence ID" value="AAD04751.1"/>
    <property type="molecule type" value="mRNA"/>
</dbReference>
<dbReference type="EMBL" id="X07718">
    <property type="protein sequence ID" value="CAB52436.1"/>
    <property type="molecule type" value="Genomic_DNA"/>
</dbReference>
<dbReference type="EMBL" id="X07717">
    <property type="protein sequence ID" value="CAB52437.1"/>
    <property type="molecule type" value="Genomic_DNA"/>
</dbReference>
<dbReference type="EMBL" id="M18179">
    <property type="protein sequence ID" value="AAA52461.1"/>
    <property type="molecule type" value="Genomic_DNA"/>
</dbReference>
<dbReference type="EMBL" id="M18177">
    <property type="protein sequence ID" value="AAA52461.1"/>
    <property type="status" value="JOINED"/>
    <property type="molecule type" value="Genomic_DNA"/>
</dbReference>
<dbReference type="EMBL" id="M18178">
    <property type="protein sequence ID" value="AAA52461.1"/>
    <property type="status" value="JOINED"/>
    <property type="molecule type" value="Genomic_DNA"/>
</dbReference>
<dbReference type="EMBL" id="M12549">
    <property type="protein sequence ID" value="AAA58483.1"/>
    <property type="molecule type" value="Genomic_DNA"/>
</dbReference>
<dbReference type="EMBL" id="M10905">
    <property type="protein sequence ID" value="AAA52462.1"/>
    <property type="molecule type" value="mRNA"/>
</dbReference>
<dbReference type="EMBL" id="M14059">
    <property type="protein sequence ID" value="AAA52463.1"/>
    <property type="status" value="ALT_SEQ"/>
    <property type="molecule type" value="mRNA"/>
</dbReference>
<dbReference type="EMBL" id="AJ320525">
    <property type="protein sequence ID" value="CAC86914.1"/>
    <property type="molecule type" value="mRNA"/>
</dbReference>
<dbReference type="EMBL" id="AJ320526">
    <property type="protein sequence ID" value="CAC86915.1"/>
    <property type="molecule type" value="mRNA"/>
</dbReference>
<dbReference type="EMBL" id="AJ320527">
    <property type="protein sequence ID" value="CAC86916.1"/>
    <property type="molecule type" value="mRNA"/>
</dbReference>
<dbReference type="EMBL" id="M27589">
    <property type="protein sequence ID" value="AAA52465.1"/>
    <property type="molecule type" value="mRNA"/>
</dbReference>
<dbReference type="EMBL" id="X04530">
    <property type="status" value="NOT_ANNOTATED_CDS"/>
    <property type="molecule type" value="Genomic_DNA"/>
</dbReference>
<dbReference type="CCDS" id="CCDS2399.1">
    <molecule id="P02751-3"/>
</dbReference>
<dbReference type="CCDS" id="CCDS2400.1">
    <molecule id="P02751-10"/>
</dbReference>
<dbReference type="CCDS" id="CCDS42813.1">
    <molecule id="P02751-8"/>
</dbReference>
<dbReference type="CCDS" id="CCDS42814.1">
    <molecule id="P02751-15"/>
</dbReference>
<dbReference type="CCDS" id="CCDS46510.1">
    <molecule id="P02751-17"/>
</dbReference>
<dbReference type="CCDS" id="CCDS46512.1">
    <molecule id="P02751-16"/>
</dbReference>
<dbReference type="CCDS" id="CCDS77522.1">
    <molecule id="P02751-9"/>
</dbReference>
<dbReference type="CCDS" id="CCDS77523.1">
    <molecule id="P02751-14"/>
</dbReference>
<dbReference type="CCDS" id="CCDS77525.1">
    <molecule id="P02751-13"/>
</dbReference>
<dbReference type="CCDS" id="CCDS77526.1">
    <molecule id="P02751-7"/>
</dbReference>
<dbReference type="CCDS" id="CCDS92940.1">
    <molecule id="P02751-1"/>
</dbReference>
<dbReference type="PIR" id="A26460">
    <property type="entry name" value="FNHU"/>
</dbReference>
<dbReference type="PIR" id="I52394">
    <property type="entry name" value="I52394"/>
</dbReference>
<dbReference type="PIR" id="S00848">
    <property type="entry name" value="S00848"/>
</dbReference>
<dbReference type="RefSeq" id="NP_001293058.2">
    <molecule id="P02751-7"/>
    <property type="nucleotide sequence ID" value="NM_001306129.2"/>
</dbReference>
<dbReference type="RefSeq" id="NP_001293059.2">
    <molecule id="P02751-13"/>
    <property type="nucleotide sequence ID" value="NM_001306130.2"/>
</dbReference>
<dbReference type="RefSeq" id="NP_001293060.2">
    <molecule id="P02751-14"/>
    <property type="nucleotide sequence ID" value="NM_001306131.2"/>
</dbReference>
<dbReference type="RefSeq" id="NP_001293061.2">
    <molecule id="P02751-9"/>
    <property type="nucleotide sequence ID" value="NM_001306132.2"/>
</dbReference>
<dbReference type="RefSeq" id="NP_001352447.1">
    <molecule id="P02751-1"/>
    <property type="nucleotide sequence ID" value="NM_001365518.2"/>
</dbReference>
<dbReference type="RefSeq" id="NP_002017.2">
    <molecule id="P02751-3"/>
    <property type="nucleotide sequence ID" value="NM_002026.4"/>
</dbReference>
<dbReference type="RefSeq" id="NP_473375.2">
    <molecule id="P02751-16"/>
    <property type="nucleotide sequence ID" value="NM_054034.2"/>
</dbReference>
<dbReference type="RefSeq" id="NP_997639.2">
    <molecule id="P02751-10"/>
    <property type="nucleotide sequence ID" value="NM_212474.3"/>
</dbReference>
<dbReference type="RefSeq" id="NP_997641.2">
    <molecule id="P02751-8"/>
    <property type="nucleotide sequence ID" value="NM_212476.3"/>
</dbReference>
<dbReference type="RefSeq" id="NP_997643.2">
    <molecule id="P02751-17"/>
    <property type="nucleotide sequence ID" value="NM_212478.3"/>
</dbReference>
<dbReference type="RefSeq" id="NP_997647.2">
    <molecule id="P02751-15"/>
    <property type="nucleotide sequence ID" value="NM_212482.4"/>
</dbReference>
<dbReference type="RefSeq" id="XP_005246463.1">
    <property type="nucleotide sequence ID" value="XM_005246406.1"/>
</dbReference>
<dbReference type="PDB" id="1E88">
    <property type="method" value="NMR"/>
    <property type="chains" value="A=305-464"/>
</dbReference>
<dbReference type="PDB" id="1E8B">
    <property type="method" value="NMR"/>
    <property type="chains" value="A=305-464"/>
</dbReference>
<dbReference type="PDB" id="1FBR">
    <property type="method" value="NMR"/>
    <property type="chains" value="A=183-275"/>
</dbReference>
<dbReference type="PDB" id="1FNA">
    <property type="method" value="X-ray"/>
    <property type="resolution" value="1.80 A"/>
    <property type="chains" value="A=1543-1633"/>
</dbReference>
<dbReference type="PDB" id="1FNF">
    <property type="method" value="X-ray"/>
    <property type="resolution" value="2.00 A"/>
    <property type="chains" value="A=1173-1265, A=1357-1631"/>
</dbReference>
<dbReference type="PDB" id="1FNH">
    <property type="method" value="X-ray"/>
    <property type="resolution" value="2.80 A"/>
    <property type="chains" value="A=1812-2082"/>
</dbReference>
<dbReference type="PDB" id="1J8K">
    <property type="method" value="NMR"/>
    <property type="chains" value="A=1722-1815"/>
</dbReference>
<dbReference type="PDB" id="1O9A">
    <property type="method" value="NMR"/>
    <property type="chains" value="A=48-140"/>
</dbReference>
<dbReference type="PDB" id="1OWW">
    <property type="method" value="NMR"/>
    <property type="chains" value="A=608-701"/>
</dbReference>
<dbReference type="PDB" id="1Q38">
    <property type="method" value="NMR"/>
    <property type="chains" value="A=631-705"/>
</dbReference>
<dbReference type="PDB" id="1QGB">
    <property type="method" value="NMR"/>
    <property type="chains" value="A=48-140"/>
</dbReference>
<dbReference type="PDB" id="1QO6">
    <property type="method" value="NMR"/>
    <property type="chains" value="A=305-405"/>
</dbReference>
<dbReference type="PDB" id="1TTF">
    <property type="method" value="NMR"/>
    <property type="chains" value="A=1538-1631"/>
</dbReference>
<dbReference type="PDB" id="1TTG">
    <property type="method" value="NMR"/>
    <property type="chains" value="A=1538-1631"/>
</dbReference>
<dbReference type="PDB" id="2CG6">
    <property type="method" value="X-ray"/>
    <property type="resolution" value="1.55 A"/>
    <property type="chains" value="A=93-182"/>
</dbReference>
<dbReference type="PDB" id="2CG7">
    <property type="method" value="X-ray"/>
    <property type="resolution" value="1.20 A"/>
    <property type="chains" value="A=93-182"/>
</dbReference>
<dbReference type="PDB" id="2CK2">
    <property type="method" value="X-ray"/>
    <property type="resolution" value="2.00 A"/>
    <property type="chains" value="A/B=1538-1633"/>
</dbReference>
<dbReference type="PDB" id="2CKU">
    <property type="method" value="NMR"/>
    <property type="chains" value="A=93-182"/>
</dbReference>
<dbReference type="PDB" id="2EC3">
    <property type="method" value="NMR"/>
    <property type="chains" value="A=2330-2390"/>
</dbReference>
<dbReference type="PDB" id="2FN2">
    <property type="method" value="NMR"/>
    <property type="chains" value="A=406-464"/>
</dbReference>
<dbReference type="PDB" id="2FNB">
    <property type="method" value="NMR"/>
    <property type="chains" value="A=1266-1356"/>
</dbReference>
<dbReference type="PDB" id="2GEE">
    <property type="method" value="X-ray"/>
    <property type="resolution" value="2.01 A"/>
    <property type="chains" value="A=1266-1447"/>
</dbReference>
<dbReference type="PDB" id="2H41">
    <property type="method" value="NMR"/>
    <property type="chains" value="A=721-809"/>
</dbReference>
<dbReference type="PDB" id="2H45">
    <property type="method" value="NMR"/>
    <property type="chains" value="A=721-809"/>
</dbReference>
<dbReference type="PDB" id="2HA1">
    <property type="method" value="NMR"/>
    <property type="chains" value="A=609-809"/>
</dbReference>
<dbReference type="PDB" id="2MNU">
    <property type="method" value="NMR"/>
    <property type="chains" value="A=907-995"/>
</dbReference>
<dbReference type="PDB" id="2N1K">
    <property type="method" value="NMR"/>
    <property type="chains" value="A=808-905"/>
</dbReference>
<dbReference type="PDB" id="2OCF">
    <property type="method" value="X-ray"/>
    <property type="resolution" value="2.95 A"/>
    <property type="chains" value="D=1539-1631"/>
</dbReference>
<dbReference type="PDB" id="2RKY">
    <property type="method" value="X-ray"/>
    <property type="resolution" value="1.80 A"/>
    <property type="chains" value="A/C=183-275"/>
</dbReference>
<dbReference type="PDB" id="2RKZ">
    <property type="method" value="X-ray"/>
    <property type="resolution" value="2.00 A"/>
    <property type="chains" value="A/B/C/D/E/F=93-182"/>
</dbReference>
<dbReference type="PDB" id="2RL0">
    <property type="method" value="X-ray"/>
    <property type="resolution" value="2.00 A"/>
    <property type="chains" value="A/B/D/F/I/K=184-272"/>
</dbReference>
<dbReference type="PDB" id="3CAL">
    <property type="method" value="X-ray"/>
    <property type="resolution" value="1.70 A"/>
    <property type="chains" value="A/C=93-182"/>
</dbReference>
<dbReference type="PDB" id="3EJH">
    <property type="method" value="X-ray"/>
    <property type="resolution" value="2.10 A"/>
    <property type="chains" value="A/B=516-608"/>
</dbReference>
<dbReference type="PDB" id="3GXE">
    <property type="method" value="X-ray"/>
    <property type="resolution" value="2.60 A"/>
    <property type="chains" value="A/B=516-608"/>
</dbReference>
<dbReference type="PDB" id="3M7P">
    <property type="method" value="X-ray"/>
    <property type="resolution" value="2.50 A"/>
    <property type="chains" value="A=297-604"/>
</dbReference>
<dbReference type="PDB" id="3MQL">
    <property type="method" value="X-ray"/>
    <property type="resolution" value="3.00 A"/>
    <property type="chains" value="A=308-515"/>
</dbReference>
<dbReference type="PDB" id="3R8Q">
    <property type="method" value="X-ray"/>
    <property type="resolution" value="2.40 A"/>
    <property type="chains" value="A=1812-2082"/>
</dbReference>
<dbReference type="PDB" id="3T1W">
    <property type="method" value="X-ray"/>
    <property type="resolution" value="2.40 A"/>
    <property type="chains" value="A=1173-1539"/>
</dbReference>
<dbReference type="PDB" id="3ZRZ">
    <property type="method" value="X-ray"/>
    <property type="resolution" value="1.70 A"/>
    <property type="chains" value="A/B=93-182"/>
</dbReference>
<dbReference type="PDB" id="4GH7">
    <property type="method" value="X-ray"/>
    <property type="resolution" value="2.60 A"/>
    <property type="chains" value="B/D=1173-1447"/>
</dbReference>
<dbReference type="PDB" id="4JE4">
    <property type="method" value="X-ray"/>
    <property type="resolution" value="2.31 A"/>
    <property type="chains" value="B=1539-1631"/>
</dbReference>
<dbReference type="PDB" id="4JEG">
    <property type="method" value="X-ray"/>
    <property type="resolution" value="2.30 A"/>
    <property type="chains" value="B=1539-1631"/>
</dbReference>
<dbReference type="PDB" id="4LXO">
    <property type="method" value="X-ray"/>
    <property type="resolution" value="1.42 A"/>
    <property type="chains" value="A/B=1448-1631"/>
</dbReference>
<dbReference type="PDB" id="4MMX">
    <property type="method" value="X-ray"/>
    <property type="resolution" value="3.32 A"/>
    <property type="chains" value="C=1539-1631"/>
</dbReference>
<dbReference type="PDB" id="4MMY">
    <property type="method" value="X-ray"/>
    <property type="resolution" value="3.18 A"/>
    <property type="chains" value="C=1539-1631"/>
</dbReference>
<dbReference type="PDB" id="4MMZ">
    <property type="method" value="X-ray"/>
    <property type="resolution" value="3.10 A"/>
    <property type="chains" value="C=1539-1629"/>
</dbReference>
<dbReference type="PDB" id="4PZ5">
    <property type="method" value="X-ray"/>
    <property type="resolution" value="1.96 A"/>
    <property type="chains" value="A=93-182"/>
</dbReference>
<dbReference type="PDB" id="5DC0">
    <property type="method" value="X-ray"/>
    <property type="resolution" value="2.23 A"/>
    <property type="chains" value="A=1540-1631"/>
</dbReference>
<dbReference type="PDB" id="5DC4">
    <property type="method" value="X-ray"/>
    <property type="resolution" value="1.48 A"/>
    <property type="chains" value="B=1539-1631"/>
</dbReference>
<dbReference type="PDB" id="5DC9">
    <property type="method" value="X-ray"/>
    <property type="resolution" value="1.56 A"/>
    <property type="chains" value="B=1537-1631"/>
</dbReference>
<dbReference type="PDB" id="5DFT">
    <property type="method" value="X-ray"/>
    <property type="resolution" value="2.50 A"/>
    <property type="chains" value="A/B/C/D/E/F/G/H/I/J=1638-1726"/>
</dbReference>
<dbReference type="PDB" id="5J6Z">
    <property type="method" value="NMR"/>
    <property type="chains" value="A=806-834, B=631-705"/>
</dbReference>
<dbReference type="PDB" id="5J7C">
    <property type="method" value="X-ray"/>
    <property type="resolution" value="2.54 A"/>
    <property type="chains" value="C/D=1540-1631"/>
</dbReference>
<dbReference type="PDB" id="5M0A">
    <property type="method" value="NMR"/>
    <property type="chains" value="A=2199-2284"/>
</dbReference>
<dbReference type="PDB" id="5N47">
    <property type="method" value="X-ray"/>
    <property type="resolution" value="3.00 A"/>
    <property type="chains" value="B=1267-1448, D/F=1173-1448"/>
</dbReference>
<dbReference type="PDB" id="5N48">
    <property type="method" value="X-ray"/>
    <property type="resolution" value="1.60 A"/>
    <property type="chains" value="B/D=907-995"/>
</dbReference>
<dbReference type="PDB" id="6HNF">
    <property type="method" value="NMR"/>
    <property type="chains" value="A=1995-2082"/>
</dbReference>
<dbReference type="PDB" id="6MFA">
    <property type="method" value="X-ray"/>
    <property type="resolution" value="1.75 A"/>
    <property type="chains" value="A=903-1268"/>
</dbReference>
<dbReference type="PDB" id="6MSV">
    <property type="method" value="X-ray"/>
    <property type="resolution" value="2.40 A"/>
    <property type="chains" value="A/B/C/D/E/F/G/H/I/J/K/L=1085-1173"/>
</dbReference>
<dbReference type="PDB" id="6NAJ">
    <property type="method" value="X-ray"/>
    <property type="resolution" value="3.10 A"/>
    <property type="chains" value="C=1539-1629"/>
</dbReference>
<dbReference type="PDB" id="6XAX">
    <property type="method" value="X-ray"/>
    <property type="resolution" value="2.40 A"/>
    <property type="chains" value="A/B=1630-1903"/>
</dbReference>
<dbReference type="PDB" id="6XAY">
    <property type="method" value="X-ray"/>
    <property type="resolution" value="2.48 A"/>
    <property type="chains" value="A/B/C/D=1538-1903"/>
</dbReference>
<dbReference type="PDB" id="7NWL">
    <property type="method" value="EM"/>
    <property type="resolution" value="3.10 A"/>
    <property type="chains" value="C=1173-1631"/>
</dbReference>
<dbReference type="PDB" id="8PEQ">
    <property type="method" value="X-ray"/>
    <property type="resolution" value="2.32 A"/>
    <property type="chains" value="A/B/C=1174-1447"/>
</dbReference>
<dbReference type="PDBsum" id="1E88"/>
<dbReference type="PDBsum" id="1E8B"/>
<dbReference type="PDBsum" id="1FBR"/>
<dbReference type="PDBsum" id="1FNA"/>
<dbReference type="PDBsum" id="1FNF"/>
<dbReference type="PDBsum" id="1FNH"/>
<dbReference type="PDBsum" id="1J8K"/>
<dbReference type="PDBsum" id="1O9A"/>
<dbReference type="PDBsum" id="1OWW"/>
<dbReference type="PDBsum" id="1Q38"/>
<dbReference type="PDBsum" id="1QGB"/>
<dbReference type="PDBsum" id="1QO6"/>
<dbReference type="PDBsum" id="1TTF"/>
<dbReference type="PDBsum" id="1TTG"/>
<dbReference type="PDBsum" id="2CG6"/>
<dbReference type="PDBsum" id="2CG7"/>
<dbReference type="PDBsum" id="2CK2"/>
<dbReference type="PDBsum" id="2CKU"/>
<dbReference type="PDBsum" id="2EC3"/>
<dbReference type="PDBsum" id="2FN2"/>
<dbReference type="PDBsum" id="2FNB"/>
<dbReference type="PDBsum" id="2GEE"/>
<dbReference type="PDBsum" id="2H41"/>
<dbReference type="PDBsum" id="2H45"/>
<dbReference type="PDBsum" id="2HA1"/>
<dbReference type="PDBsum" id="2MNU"/>
<dbReference type="PDBsum" id="2N1K"/>
<dbReference type="PDBsum" id="2OCF"/>
<dbReference type="PDBsum" id="2RKY"/>
<dbReference type="PDBsum" id="2RKZ"/>
<dbReference type="PDBsum" id="2RL0"/>
<dbReference type="PDBsum" id="3CAL"/>
<dbReference type="PDBsum" id="3EJH"/>
<dbReference type="PDBsum" id="3GXE"/>
<dbReference type="PDBsum" id="3M7P"/>
<dbReference type="PDBsum" id="3MQL"/>
<dbReference type="PDBsum" id="3R8Q"/>
<dbReference type="PDBsum" id="3T1W"/>
<dbReference type="PDBsum" id="3ZRZ"/>
<dbReference type="PDBsum" id="4GH7"/>
<dbReference type="PDBsum" id="4JE4"/>
<dbReference type="PDBsum" id="4JEG"/>
<dbReference type="PDBsum" id="4LXO"/>
<dbReference type="PDBsum" id="4MMX"/>
<dbReference type="PDBsum" id="4MMY"/>
<dbReference type="PDBsum" id="4MMZ"/>
<dbReference type="PDBsum" id="4PZ5"/>
<dbReference type="PDBsum" id="5DC0"/>
<dbReference type="PDBsum" id="5DC4"/>
<dbReference type="PDBsum" id="5DC9"/>
<dbReference type="PDBsum" id="5DFT"/>
<dbReference type="PDBsum" id="5J6Z"/>
<dbReference type="PDBsum" id="5J7C"/>
<dbReference type="PDBsum" id="5M0A"/>
<dbReference type="PDBsum" id="5N47"/>
<dbReference type="PDBsum" id="5N48"/>
<dbReference type="PDBsum" id="6HNF"/>
<dbReference type="PDBsum" id="6MFA"/>
<dbReference type="PDBsum" id="6MSV"/>
<dbReference type="PDBsum" id="6NAJ"/>
<dbReference type="PDBsum" id="6XAX"/>
<dbReference type="PDBsum" id="6XAY"/>
<dbReference type="PDBsum" id="7NWL"/>
<dbReference type="PDBsum" id="8PEQ"/>
<dbReference type="EMDB" id="EMD-12634"/>
<dbReference type="SMR" id="P02751"/>
<dbReference type="BioGRID" id="108621">
    <property type="interactions" value="816"/>
</dbReference>
<dbReference type="ComplexPortal" id="CPX-6232">
    <property type="entry name" value="Fibronectin complex"/>
</dbReference>
<dbReference type="CORUM" id="P02751"/>
<dbReference type="DIP" id="DIP-29547N"/>
<dbReference type="ELM" id="P02751"/>
<dbReference type="FunCoup" id="P02751">
    <property type="interactions" value="1464"/>
</dbReference>
<dbReference type="IntAct" id="P02751">
    <property type="interactions" value="569"/>
</dbReference>
<dbReference type="MINT" id="P02751"/>
<dbReference type="STRING" id="9606.ENSP00000346839"/>
<dbReference type="BindingDB" id="P02751"/>
<dbReference type="ChEMBL" id="CHEMBL3810"/>
<dbReference type="DrugBank" id="DB06245">
    <property type="generic name" value="Lanoteplase"/>
</dbReference>
<dbReference type="DrugBank" id="DB08888">
    <property type="generic name" value="Ocriplasmin"/>
</dbReference>
<dbReference type="DrugBank" id="DB01593">
    <property type="generic name" value="Zinc"/>
</dbReference>
<dbReference type="DrugBank" id="DB14487">
    <property type="generic name" value="Zinc acetate"/>
</dbReference>
<dbReference type="DrugBank" id="DB14533">
    <property type="generic name" value="Zinc chloride"/>
</dbReference>
<dbReference type="DrugBank" id="DB14548">
    <property type="generic name" value="Zinc sulfate, unspecified form"/>
</dbReference>
<dbReference type="CarbonylDB" id="P02751"/>
<dbReference type="GlyConnect" id="161">
    <property type="glycosylation" value="100 N-Linked glycans (6 sites)"/>
</dbReference>
<dbReference type="GlyCosmos" id="P02751">
    <property type="glycosylation" value="20 sites, 130 glycans"/>
</dbReference>
<dbReference type="GlyGen" id="P02751">
    <property type="glycosylation" value="38 sites, 265 N-linked glycans (8 sites), 7 O-linked glycans (19 sites)"/>
</dbReference>
<dbReference type="iPTMnet" id="P02751"/>
<dbReference type="MetOSite" id="P02751"/>
<dbReference type="PhosphoSitePlus" id="P02751"/>
<dbReference type="SwissPalm" id="P02751"/>
<dbReference type="BioMuta" id="FN1"/>
<dbReference type="DMDM" id="300669710"/>
<dbReference type="CPTAC" id="non-CPTAC-1122"/>
<dbReference type="CPTAC" id="non-CPTAC-2666"/>
<dbReference type="jPOST" id="P02751"/>
<dbReference type="MassIVE" id="P02751"/>
<dbReference type="PaxDb" id="9606-ENSP00000346839"/>
<dbReference type="PeptideAtlas" id="P02751"/>
<dbReference type="ProteomicsDB" id="19829"/>
<dbReference type="ProteomicsDB" id="20230"/>
<dbReference type="ProteomicsDB" id="51567">
    <molecule id="P02751-1"/>
</dbReference>
<dbReference type="ProteomicsDB" id="51568">
    <molecule id="P02751-10"/>
</dbReference>
<dbReference type="ProteomicsDB" id="51569">
    <molecule id="P02751-11"/>
</dbReference>
<dbReference type="ProteomicsDB" id="51570">
    <molecule id="P02751-12"/>
</dbReference>
<dbReference type="ProteomicsDB" id="51571">
    <molecule id="P02751-13"/>
</dbReference>
<dbReference type="ProteomicsDB" id="51572">
    <molecule id="P02751-14"/>
</dbReference>
<dbReference type="ProteomicsDB" id="51573">
    <molecule id="P02751-15"/>
</dbReference>
<dbReference type="ProteomicsDB" id="51574">
    <molecule id="P02751-2"/>
</dbReference>
<dbReference type="ProteomicsDB" id="51575">
    <molecule id="P02751-3"/>
</dbReference>
<dbReference type="ProteomicsDB" id="51576">
    <molecule id="P02751-4"/>
</dbReference>
<dbReference type="ProteomicsDB" id="51577">
    <molecule id="P02751-5"/>
</dbReference>
<dbReference type="ProteomicsDB" id="51578">
    <molecule id="P02751-6"/>
</dbReference>
<dbReference type="ProteomicsDB" id="51579">
    <molecule id="P02751-7"/>
</dbReference>
<dbReference type="ProteomicsDB" id="51580">
    <molecule id="P02751-8"/>
</dbReference>
<dbReference type="ProteomicsDB" id="51581">
    <molecule id="P02751-9"/>
</dbReference>
<dbReference type="Pumba" id="P02751"/>
<dbReference type="ABCD" id="P02751">
    <property type="antibodies" value="21 sequenced antibodies"/>
</dbReference>
<dbReference type="Antibodypedia" id="3522">
    <property type="antibodies" value="2938 antibodies from 49 providers"/>
</dbReference>
<dbReference type="DNASU" id="2335"/>
<dbReference type="Ensembl" id="ENST00000323926.10">
    <molecule id="P02751-7"/>
    <property type="protein sequence ID" value="ENSP00000323534.6"/>
    <property type="gene ID" value="ENSG00000115414.21"/>
</dbReference>
<dbReference type="Ensembl" id="ENST00000336916.8">
    <molecule id="P02751-3"/>
    <property type="protein sequence ID" value="ENSP00000338200.4"/>
    <property type="gene ID" value="ENSG00000115414.21"/>
</dbReference>
<dbReference type="Ensembl" id="ENST00000354785.11">
    <molecule id="P02751-15"/>
    <property type="protein sequence ID" value="ENSP00000346839.4"/>
    <property type="gene ID" value="ENSG00000115414.21"/>
</dbReference>
<dbReference type="Ensembl" id="ENST00000356005.8">
    <molecule id="P02751-8"/>
    <property type="protein sequence ID" value="ENSP00000348285.4"/>
    <property type="gene ID" value="ENSG00000115414.21"/>
</dbReference>
<dbReference type="Ensembl" id="ENST00000357867.8">
    <molecule id="P02751-10"/>
    <property type="protein sequence ID" value="ENSP00000350534.4"/>
    <property type="gene ID" value="ENSG00000115414.21"/>
</dbReference>
<dbReference type="Ensembl" id="ENST00000359671.5">
    <molecule id="P02751-1"/>
    <property type="protein sequence ID" value="ENSP00000352696.1"/>
    <property type="gene ID" value="ENSG00000115414.21"/>
</dbReference>
<dbReference type="Ensembl" id="ENST00000421182.5">
    <molecule id="P02751-9"/>
    <property type="protein sequence ID" value="ENSP00000394423.1"/>
    <property type="gene ID" value="ENSG00000115414.21"/>
</dbReference>
<dbReference type="Ensembl" id="ENST00000426059.1">
    <molecule id="P02751-16"/>
    <property type="protein sequence ID" value="ENSP00000398907.1"/>
    <property type="gene ID" value="ENSG00000115414.21"/>
</dbReference>
<dbReference type="Ensembl" id="ENST00000432072.6">
    <molecule id="P02751-13"/>
    <property type="protein sequence ID" value="ENSP00000399538.2"/>
    <property type="gene ID" value="ENSG00000115414.21"/>
</dbReference>
<dbReference type="Ensembl" id="ENST00000443816.5">
    <molecule id="P02751-14"/>
    <property type="protein sequence ID" value="ENSP00000415018.1"/>
    <property type="gene ID" value="ENSG00000115414.21"/>
</dbReference>
<dbReference type="Ensembl" id="ENST00000446046.5">
    <molecule id="P02751-17"/>
    <property type="protein sequence ID" value="ENSP00000410422.1"/>
    <property type="gene ID" value="ENSG00000115414.21"/>
</dbReference>
<dbReference type="GeneID" id="2335"/>
<dbReference type="KEGG" id="hsa:2335"/>
<dbReference type="MANE-Select" id="ENST00000354785.11">
    <property type="protein sequence ID" value="ENSP00000346839.4"/>
    <property type="RefSeq nucleotide sequence ID" value="NM_212482.4"/>
    <property type="RefSeq protein sequence ID" value="NP_997647.2"/>
</dbReference>
<dbReference type="UCSC" id="uc002vfa.4">
    <molecule id="P02751-15"/>
    <property type="organism name" value="human"/>
</dbReference>
<dbReference type="AGR" id="HGNC:3778"/>
<dbReference type="CTD" id="2335"/>
<dbReference type="DisGeNET" id="2335"/>
<dbReference type="GeneCards" id="FN1"/>
<dbReference type="GeneReviews" id="FN1"/>
<dbReference type="HGNC" id="HGNC:3778">
    <property type="gene designation" value="FN1"/>
</dbReference>
<dbReference type="HPA" id="ENSG00000115414">
    <property type="expression patterns" value="Tissue enhanced (liver, placenta)"/>
</dbReference>
<dbReference type="MalaCards" id="FN1"/>
<dbReference type="MIM" id="135600">
    <property type="type" value="gene"/>
</dbReference>
<dbReference type="MIM" id="184255">
    <property type="type" value="phenotype"/>
</dbReference>
<dbReference type="MIM" id="601894">
    <property type="type" value="phenotype"/>
</dbReference>
<dbReference type="neXtProt" id="NX_P02751"/>
<dbReference type="OpenTargets" id="ENSG00000115414"/>
<dbReference type="Orphanet" id="84090">
    <property type="disease" value="Fibronectin glomerulopathy"/>
</dbReference>
<dbReference type="Orphanet" id="93315">
    <property type="disease" value="Spondylometaphyseal dysplasia, 'corner fracture' type"/>
</dbReference>
<dbReference type="PharmGKB" id="PA28194"/>
<dbReference type="VEuPathDB" id="HostDB:ENSG00000115414"/>
<dbReference type="GeneTree" id="ENSGT00940000155126"/>
<dbReference type="HOGENOM" id="CLU_000916_0_0_1"/>
<dbReference type="InParanoid" id="P02751"/>
<dbReference type="OMA" id="GHCITDS"/>
<dbReference type="OrthoDB" id="261433at2759"/>
<dbReference type="PAN-GO" id="P02751">
    <property type="GO annotations" value="10 GO annotations based on evolutionary models"/>
</dbReference>
<dbReference type="PhylomeDB" id="P02751"/>
<dbReference type="TreeFam" id="TF329915"/>
<dbReference type="PathwayCommons" id="P02751"/>
<dbReference type="Reactome" id="R-HSA-114608">
    <property type="pathway name" value="Platelet degranulation"/>
</dbReference>
<dbReference type="Reactome" id="R-HSA-1474228">
    <property type="pathway name" value="Degradation of the extracellular matrix"/>
</dbReference>
<dbReference type="Reactome" id="R-HSA-1474244">
    <property type="pathway name" value="Extracellular matrix organization"/>
</dbReference>
<dbReference type="Reactome" id="R-HSA-1566977">
    <property type="pathway name" value="Fibronectin matrix formation"/>
</dbReference>
<dbReference type="Reactome" id="R-HSA-202733">
    <property type="pathway name" value="Cell surface interactions at the vascular wall"/>
</dbReference>
<dbReference type="Reactome" id="R-HSA-2129379">
    <property type="pathway name" value="Molecules associated with elastic fibres"/>
</dbReference>
<dbReference type="Reactome" id="R-HSA-216083">
    <property type="pathway name" value="Integrin cell surface interactions"/>
</dbReference>
<dbReference type="Reactome" id="R-HSA-3000170">
    <property type="pathway name" value="Syndecan interactions"/>
</dbReference>
<dbReference type="Reactome" id="R-HSA-3000171">
    <property type="pathway name" value="Non-integrin membrane-ECM interactions"/>
</dbReference>
<dbReference type="Reactome" id="R-HSA-3000178">
    <property type="pathway name" value="ECM proteoglycans"/>
</dbReference>
<dbReference type="Reactome" id="R-HSA-354192">
    <property type="pathway name" value="Integrin signaling"/>
</dbReference>
<dbReference type="Reactome" id="R-HSA-354194">
    <property type="pathway name" value="GRB2:SOS provides linkage to MAPK signaling for Integrins"/>
</dbReference>
<dbReference type="Reactome" id="R-HSA-372708">
    <property type="pathway name" value="p130Cas linkage to MAPK signaling for integrins"/>
</dbReference>
<dbReference type="Reactome" id="R-HSA-381426">
    <property type="pathway name" value="Regulation of Insulin-like Growth Factor (IGF) transport and uptake by Insulin-like Growth Factor Binding Proteins (IGFBPs)"/>
</dbReference>
<dbReference type="Reactome" id="R-HSA-5674135">
    <property type="pathway name" value="MAP2K and MAPK activation"/>
</dbReference>
<dbReference type="Reactome" id="R-HSA-6785807">
    <property type="pathway name" value="Interleukin-4 and Interleukin-13 signaling"/>
</dbReference>
<dbReference type="Reactome" id="R-HSA-6802946">
    <property type="pathway name" value="Signaling by moderate kinase activity BRAF mutants"/>
</dbReference>
<dbReference type="Reactome" id="R-HSA-6802948">
    <property type="pathway name" value="Signaling by high-kinase activity BRAF mutants"/>
</dbReference>
<dbReference type="Reactome" id="R-HSA-6802952">
    <property type="pathway name" value="Signaling by BRAF and RAF1 fusions"/>
</dbReference>
<dbReference type="Reactome" id="R-HSA-6802955">
    <property type="pathway name" value="Paradoxical activation of RAF signaling by kinase inactive BRAF"/>
</dbReference>
<dbReference type="Reactome" id="R-HSA-8874081">
    <property type="pathway name" value="MET activates PTK2 signaling"/>
</dbReference>
<dbReference type="Reactome" id="R-HSA-8957275">
    <property type="pathway name" value="Post-translational protein phosphorylation"/>
</dbReference>
<dbReference type="Reactome" id="R-HSA-9634597">
    <property type="pathway name" value="GPER1 signaling"/>
</dbReference>
<dbReference type="Reactome" id="R-HSA-9649948">
    <property type="pathway name" value="Signaling downstream of RAS mutants"/>
</dbReference>
<dbReference type="Reactome" id="R-HSA-9656223">
    <property type="pathway name" value="Signaling by RAF1 mutants"/>
</dbReference>
<dbReference type="Reactome" id="R-HSA-9700645">
    <property type="pathway name" value="ALK mutants bind TKIs"/>
</dbReference>
<dbReference type="Reactome" id="R-HSA-9725370">
    <property type="pathway name" value="Signaling by ALK fusions and activated point mutants"/>
</dbReference>
<dbReference type="Reactome" id="R-HSA-9860927">
    <property type="pathway name" value="Turbulent (oscillatory, disturbed) flow shear stress activates signaling by PIEZO1 and integrins in endothelial cells"/>
</dbReference>
<dbReference type="SignaLink" id="P02751"/>
<dbReference type="SIGNOR" id="P02751"/>
<dbReference type="BioGRID-ORCS" id="2335">
    <property type="hits" value="11 hits in 1162 CRISPR screens"/>
</dbReference>
<dbReference type="ChiTaRS" id="FN1">
    <property type="organism name" value="human"/>
</dbReference>
<dbReference type="EvolutionaryTrace" id="P02751"/>
<dbReference type="GeneWiki" id="Fibronectin"/>
<dbReference type="GenomeRNAi" id="2335"/>
<dbReference type="Pharos" id="P02751">
    <property type="development level" value="Tchem"/>
</dbReference>
<dbReference type="PRO" id="PR:P02751"/>
<dbReference type="Proteomes" id="UP000005640">
    <property type="component" value="Chromosome 2"/>
</dbReference>
<dbReference type="RNAct" id="P02751">
    <property type="molecule type" value="protein"/>
</dbReference>
<dbReference type="Bgee" id="ENSG00000115414">
    <property type="expression patterns" value="Expressed in synovial joint and 202 other cell types or tissues"/>
</dbReference>
<dbReference type="ExpressionAtlas" id="P02751">
    <property type="expression patterns" value="baseline and differential"/>
</dbReference>
<dbReference type="GO" id="GO:0016324">
    <property type="term" value="C:apical plasma membrane"/>
    <property type="evidence" value="ECO:0007669"/>
    <property type="project" value="Ensembl"/>
</dbReference>
<dbReference type="GO" id="GO:0005604">
    <property type="term" value="C:basement membrane"/>
    <property type="evidence" value="ECO:0007669"/>
    <property type="project" value="Ensembl"/>
</dbReference>
<dbReference type="GO" id="GO:0072562">
    <property type="term" value="C:blood microparticle"/>
    <property type="evidence" value="ECO:0007005"/>
    <property type="project" value="UniProtKB"/>
</dbReference>
<dbReference type="GO" id="GO:0062023">
    <property type="term" value="C:collagen-containing extracellular matrix"/>
    <property type="evidence" value="ECO:0000314"/>
    <property type="project" value="UniProtKB"/>
</dbReference>
<dbReference type="GO" id="GO:0005788">
    <property type="term" value="C:endoplasmic reticulum lumen"/>
    <property type="evidence" value="ECO:0000304"/>
    <property type="project" value="Reactome"/>
</dbReference>
<dbReference type="GO" id="GO:0005793">
    <property type="term" value="C:endoplasmic reticulum-Golgi intermediate compartment"/>
    <property type="evidence" value="ECO:0000314"/>
    <property type="project" value="UniProtKB"/>
</dbReference>
<dbReference type="GO" id="GO:0070062">
    <property type="term" value="C:extracellular exosome"/>
    <property type="evidence" value="ECO:0000314"/>
    <property type="project" value="UniProtKB"/>
</dbReference>
<dbReference type="GO" id="GO:0031012">
    <property type="term" value="C:extracellular matrix"/>
    <property type="evidence" value="ECO:0000314"/>
    <property type="project" value="MGI"/>
</dbReference>
<dbReference type="GO" id="GO:0005576">
    <property type="term" value="C:extracellular region"/>
    <property type="evidence" value="ECO:0007005"/>
    <property type="project" value="BHF-UCL"/>
</dbReference>
<dbReference type="GO" id="GO:0005615">
    <property type="term" value="C:extracellular space"/>
    <property type="evidence" value="ECO:0000314"/>
    <property type="project" value="CAFA"/>
</dbReference>
<dbReference type="GO" id="GO:0005577">
    <property type="term" value="C:fibrinogen complex"/>
    <property type="evidence" value="ECO:0000314"/>
    <property type="project" value="BHF-UCL"/>
</dbReference>
<dbReference type="GO" id="GO:0005886">
    <property type="term" value="C:plasma membrane"/>
    <property type="evidence" value="ECO:0000304"/>
    <property type="project" value="Reactome"/>
</dbReference>
<dbReference type="GO" id="GO:0031093">
    <property type="term" value="C:platelet alpha granule lumen"/>
    <property type="evidence" value="ECO:0000304"/>
    <property type="project" value="Reactome"/>
</dbReference>
<dbReference type="GO" id="GO:0005518">
    <property type="term" value="F:collagen binding"/>
    <property type="evidence" value="ECO:0000303"/>
    <property type="project" value="UniProtKB"/>
</dbReference>
<dbReference type="GO" id="GO:0005201">
    <property type="term" value="F:extracellular matrix structural constituent"/>
    <property type="evidence" value="ECO:0007005"/>
    <property type="project" value="BHF-UCL"/>
</dbReference>
<dbReference type="GO" id="GO:0008201">
    <property type="term" value="F:heparin binding"/>
    <property type="evidence" value="ECO:0000303"/>
    <property type="project" value="UniProtKB"/>
</dbReference>
<dbReference type="GO" id="GO:0042802">
    <property type="term" value="F:identical protein binding"/>
    <property type="evidence" value="ECO:0000353"/>
    <property type="project" value="IntAct"/>
</dbReference>
<dbReference type="GO" id="GO:0005178">
    <property type="term" value="F:integrin binding"/>
    <property type="evidence" value="ECO:0000314"/>
    <property type="project" value="UniProtKB"/>
</dbReference>
<dbReference type="GO" id="GO:0016504">
    <property type="term" value="F:peptidase activator activity"/>
    <property type="evidence" value="ECO:0007669"/>
    <property type="project" value="Ensembl"/>
</dbReference>
<dbReference type="GO" id="GO:0002020">
    <property type="term" value="F:protease binding"/>
    <property type="evidence" value="ECO:0000353"/>
    <property type="project" value="BHF-UCL"/>
</dbReference>
<dbReference type="GO" id="GO:0043394">
    <property type="term" value="F:proteoglycan binding"/>
    <property type="evidence" value="ECO:0000314"/>
    <property type="project" value="MGI"/>
</dbReference>
<dbReference type="GO" id="GO:0048018">
    <property type="term" value="F:receptor ligand activity"/>
    <property type="evidence" value="ECO:0007669"/>
    <property type="project" value="Ensembl"/>
</dbReference>
<dbReference type="GO" id="GO:0005102">
    <property type="term" value="F:signaling receptor binding"/>
    <property type="evidence" value="ECO:0000314"/>
    <property type="project" value="UniProtKB"/>
</dbReference>
<dbReference type="GO" id="GO:0006953">
    <property type="term" value="P:acute-phase response"/>
    <property type="evidence" value="ECO:0007669"/>
    <property type="project" value="UniProtKB-KW"/>
</dbReference>
<dbReference type="GO" id="GO:0001525">
    <property type="term" value="P:angiogenesis"/>
    <property type="evidence" value="ECO:0007669"/>
    <property type="project" value="UniProtKB-KW"/>
</dbReference>
<dbReference type="GO" id="GO:0051702">
    <property type="term" value="P:biological process involved in interaction with symbiont"/>
    <property type="evidence" value="ECO:0000314"/>
    <property type="project" value="CAFA"/>
</dbReference>
<dbReference type="GO" id="GO:0007161">
    <property type="term" value="P:calcium-independent cell-matrix adhesion"/>
    <property type="evidence" value="ECO:0007669"/>
    <property type="project" value="Ensembl"/>
</dbReference>
<dbReference type="GO" id="GO:0007155">
    <property type="term" value="P:cell adhesion"/>
    <property type="evidence" value="ECO:0000303"/>
    <property type="project" value="UniProtKB"/>
</dbReference>
<dbReference type="GO" id="GO:0007160">
    <property type="term" value="P:cell-matrix adhesion"/>
    <property type="evidence" value="ECO:0000318"/>
    <property type="project" value="GO_Central"/>
</dbReference>
<dbReference type="GO" id="GO:0007044">
    <property type="term" value="P:cell-substrate junction assembly"/>
    <property type="evidence" value="ECO:0000318"/>
    <property type="project" value="GO_Central"/>
</dbReference>
<dbReference type="GO" id="GO:0035987">
    <property type="term" value="P:endodermal cell differentiation"/>
    <property type="evidence" value="ECO:0000314"/>
    <property type="project" value="UniProtKB"/>
</dbReference>
<dbReference type="GO" id="GO:0043542">
    <property type="term" value="P:endothelial cell migration"/>
    <property type="evidence" value="ECO:0000314"/>
    <property type="project" value="BHF-UCL"/>
</dbReference>
<dbReference type="GO" id="GO:0007507">
    <property type="term" value="P:heart development"/>
    <property type="evidence" value="ECO:0000318"/>
    <property type="project" value="GO_Central"/>
</dbReference>
<dbReference type="GO" id="GO:0033622">
    <property type="term" value="P:integrin activation"/>
    <property type="evidence" value="ECO:0000315"/>
    <property type="project" value="UniProtKB"/>
</dbReference>
<dbReference type="GO" id="GO:0007229">
    <property type="term" value="P:integrin-mediated signaling pathway"/>
    <property type="evidence" value="ECO:0000314"/>
    <property type="project" value="BHF-UCL"/>
</dbReference>
<dbReference type="GO" id="GO:0150102">
    <property type="term" value="P:negative regulation of monocyte activation"/>
    <property type="evidence" value="ECO:0000314"/>
    <property type="project" value="UniProtKB"/>
</dbReference>
<dbReference type="GO" id="GO:0071635">
    <property type="term" value="P:negative regulation of transforming growth factor beta production"/>
    <property type="evidence" value="ECO:0000314"/>
    <property type="project" value="UniProtKB"/>
</dbReference>
<dbReference type="GO" id="GO:0007399">
    <property type="term" value="P:nervous system development"/>
    <property type="evidence" value="ECO:0000318"/>
    <property type="project" value="GO_Central"/>
</dbReference>
<dbReference type="GO" id="GO:1901166">
    <property type="term" value="P:neural crest cell migration involved in autonomic nervous system development"/>
    <property type="evidence" value="ECO:0000314"/>
    <property type="project" value="MGI"/>
</dbReference>
<dbReference type="GO" id="GO:0018149">
    <property type="term" value="P:peptide cross-linking"/>
    <property type="evidence" value="ECO:0000314"/>
    <property type="project" value="BHF-UCL"/>
</dbReference>
<dbReference type="GO" id="GO:0045773">
    <property type="term" value="P:positive regulation of axon extension"/>
    <property type="evidence" value="ECO:0007669"/>
    <property type="project" value="Ensembl"/>
</dbReference>
<dbReference type="GO" id="GO:0008284">
    <property type="term" value="P:positive regulation of cell population proliferation"/>
    <property type="evidence" value="ECO:0000314"/>
    <property type="project" value="UniProtKB"/>
</dbReference>
<dbReference type="GO" id="GO:0048146">
    <property type="term" value="P:positive regulation of fibroblast proliferation"/>
    <property type="evidence" value="ECO:0000314"/>
    <property type="project" value="UniProtKB"/>
</dbReference>
<dbReference type="GO" id="GO:0010628">
    <property type="term" value="P:positive regulation of gene expression"/>
    <property type="evidence" value="ECO:0000314"/>
    <property type="project" value="UniProtKB"/>
</dbReference>
<dbReference type="GO" id="GO:0051897">
    <property type="term" value="P:positive regulation of phosphatidylinositol 3-kinase/protein kinase B signal transduction"/>
    <property type="evidence" value="ECO:0000314"/>
    <property type="project" value="BHF-UCL"/>
</dbReference>
<dbReference type="GO" id="GO:1904237">
    <property type="term" value="P:positive regulation of substrate-dependent cell migration, cell attachment to substrate"/>
    <property type="evidence" value="ECO:0000314"/>
    <property type="project" value="UniProtKB"/>
</dbReference>
<dbReference type="GO" id="GO:0008360">
    <property type="term" value="P:regulation of cell shape"/>
    <property type="evidence" value="ECO:0007669"/>
    <property type="project" value="UniProtKB-KW"/>
</dbReference>
<dbReference type="GO" id="GO:0070372">
    <property type="term" value="P:regulation of ERK1 and ERK2 cascade"/>
    <property type="evidence" value="ECO:0000314"/>
    <property type="project" value="UniProtKB"/>
</dbReference>
<dbReference type="GO" id="GO:0001932">
    <property type="term" value="P:regulation of protein phosphorylation"/>
    <property type="evidence" value="ECO:0000314"/>
    <property type="project" value="UniProtKB"/>
</dbReference>
<dbReference type="GO" id="GO:0014850">
    <property type="term" value="P:response to muscle activity"/>
    <property type="evidence" value="ECO:0007669"/>
    <property type="project" value="Ensembl"/>
</dbReference>
<dbReference type="GO" id="GO:0009611">
    <property type="term" value="P:response to wounding"/>
    <property type="evidence" value="ECO:0000303"/>
    <property type="project" value="UniProtKB"/>
</dbReference>
<dbReference type="GO" id="GO:0034446">
    <property type="term" value="P:substrate adhesion-dependent cell spreading"/>
    <property type="evidence" value="ECO:0000314"/>
    <property type="project" value="BHF-UCL"/>
</dbReference>
<dbReference type="GO" id="GO:0042060">
    <property type="term" value="P:wound healing"/>
    <property type="evidence" value="ECO:0007669"/>
    <property type="project" value="Ensembl"/>
</dbReference>
<dbReference type="CDD" id="cd00061">
    <property type="entry name" value="FN1"/>
    <property type="match status" value="12"/>
</dbReference>
<dbReference type="CDD" id="cd00062">
    <property type="entry name" value="FN2"/>
    <property type="match status" value="2"/>
</dbReference>
<dbReference type="CDD" id="cd00063">
    <property type="entry name" value="FN3"/>
    <property type="match status" value="17"/>
</dbReference>
<dbReference type="FunFam" id="2.10.70.10:FF:000004">
    <property type="entry name" value="Fibronectin 1"/>
    <property type="match status" value="1"/>
</dbReference>
<dbReference type="FunFam" id="2.10.70.10:FF:000006">
    <property type="entry name" value="Fibronectin 1"/>
    <property type="match status" value="3"/>
</dbReference>
<dbReference type="FunFam" id="2.10.70.10:FF:000007">
    <property type="entry name" value="Fibronectin 1"/>
    <property type="match status" value="2"/>
</dbReference>
<dbReference type="FunFam" id="2.10.70.10:FF:000018">
    <property type="entry name" value="Fibronectin 1"/>
    <property type="match status" value="1"/>
</dbReference>
<dbReference type="FunFam" id="2.10.70.10:FF:000027">
    <property type="entry name" value="Fibronectin 1"/>
    <property type="match status" value="1"/>
</dbReference>
<dbReference type="FunFam" id="2.60.40.10:FF:000099">
    <property type="entry name" value="Fibronectin 1"/>
    <property type="match status" value="3"/>
</dbReference>
<dbReference type="FunFam" id="2.60.40.10:FF:000417">
    <property type="entry name" value="Fibronectin 1"/>
    <property type="match status" value="1"/>
</dbReference>
<dbReference type="FunFam" id="2.60.40.10:FF:000579">
    <property type="entry name" value="Fibronectin 1"/>
    <property type="match status" value="1"/>
</dbReference>
<dbReference type="FunFam" id="2.60.40.10:FF:000622">
    <property type="entry name" value="Fibronectin 1"/>
    <property type="match status" value="1"/>
</dbReference>
<dbReference type="FunFam" id="2.60.40.10:FF:001069">
    <property type="entry name" value="Fibronectin 1"/>
    <property type="match status" value="1"/>
</dbReference>
<dbReference type="FunFam" id="2.10.10.10:FF:000001">
    <property type="entry name" value="Fibronectin 1a isoform 1"/>
    <property type="match status" value="2"/>
</dbReference>
<dbReference type="FunFam" id="2.10.70.10:FF:000017">
    <property type="entry name" value="Fibronectin isoform X1"/>
    <property type="match status" value="1"/>
</dbReference>
<dbReference type="FunFam" id="2.60.40.10:FF:000227">
    <property type="entry name" value="Fibronectin isoform X1"/>
    <property type="match status" value="1"/>
</dbReference>
<dbReference type="FunFam" id="2.10.70.10:FF:000020">
    <property type="entry name" value="fibronectin isoform X1"/>
    <property type="match status" value="1"/>
</dbReference>
<dbReference type="FunFam" id="2.10.70.10:FF:000021">
    <property type="entry name" value="fibronectin isoform X1"/>
    <property type="match status" value="1"/>
</dbReference>
<dbReference type="FunFam" id="2.10.70.10:FF:000022">
    <property type="entry name" value="fibronectin isoform X1"/>
    <property type="match status" value="1"/>
</dbReference>
<dbReference type="FunFam" id="2.60.40.10:FF:000275">
    <property type="entry name" value="fibronectin isoform X1"/>
    <property type="match status" value="1"/>
</dbReference>
<dbReference type="FunFam" id="2.60.40.10:FF:000300">
    <property type="entry name" value="fibronectin isoform X1"/>
    <property type="match status" value="1"/>
</dbReference>
<dbReference type="FunFam" id="2.60.40.10:FF:000306">
    <property type="entry name" value="fibronectin isoform X1"/>
    <property type="match status" value="1"/>
</dbReference>
<dbReference type="FunFam" id="2.60.40.10:FF:000317">
    <property type="entry name" value="fibronectin isoform X1"/>
    <property type="match status" value="1"/>
</dbReference>
<dbReference type="FunFam" id="2.60.40.10:FF:000336">
    <property type="entry name" value="fibronectin isoform X1"/>
    <property type="match status" value="1"/>
</dbReference>
<dbReference type="FunFam" id="2.60.40.10:FF:000364">
    <property type="entry name" value="fibronectin isoform X1"/>
    <property type="match status" value="1"/>
</dbReference>
<dbReference type="FunFam" id="2.60.40.10:FF:000382">
    <property type="entry name" value="fibronectin isoform X1"/>
    <property type="match status" value="1"/>
</dbReference>
<dbReference type="FunFam" id="2.60.40.10:FF:000447">
    <property type="entry name" value="fibronectin isoform X1"/>
    <property type="match status" value="1"/>
</dbReference>
<dbReference type="FunFam" id="2.60.40.10:FF:000433">
    <property type="entry name" value="fibronectin isoform X5"/>
    <property type="match status" value="1"/>
</dbReference>
<dbReference type="Gene3D" id="2.10.70.10">
    <property type="entry name" value="Complement Module, domain 1"/>
    <property type="match status" value="12"/>
</dbReference>
<dbReference type="Gene3D" id="2.10.10.10">
    <property type="entry name" value="Fibronectin, type II, collagen-binding"/>
    <property type="match status" value="2"/>
</dbReference>
<dbReference type="Gene3D" id="2.60.40.10">
    <property type="entry name" value="Immunoglobulins"/>
    <property type="match status" value="17"/>
</dbReference>
<dbReference type="InterPro" id="IPR050991">
    <property type="entry name" value="ECM_Regulatory_Proteins"/>
</dbReference>
<dbReference type="InterPro" id="IPR000083">
    <property type="entry name" value="Fibronectin_type1"/>
</dbReference>
<dbReference type="InterPro" id="IPR003961">
    <property type="entry name" value="FN3_dom"/>
</dbReference>
<dbReference type="InterPro" id="IPR036116">
    <property type="entry name" value="FN3_sf"/>
</dbReference>
<dbReference type="InterPro" id="IPR000562">
    <property type="entry name" value="FN_type2_dom"/>
</dbReference>
<dbReference type="InterPro" id="IPR036943">
    <property type="entry name" value="FN_type2_sf"/>
</dbReference>
<dbReference type="InterPro" id="IPR013783">
    <property type="entry name" value="Ig-like_fold"/>
</dbReference>
<dbReference type="InterPro" id="IPR013806">
    <property type="entry name" value="Kringle-like"/>
</dbReference>
<dbReference type="PANTHER" id="PTHR46708:SF8">
    <property type="entry name" value="FIBRONECTIN"/>
    <property type="match status" value="1"/>
</dbReference>
<dbReference type="PANTHER" id="PTHR46708">
    <property type="entry name" value="TENASCIN"/>
    <property type="match status" value="1"/>
</dbReference>
<dbReference type="Pfam" id="PF00039">
    <property type="entry name" value="fn1"/>
    <property type="match status" value="11"/>
</dbReference>
<dbReference type="Pfam" id="PF00040">
    <property type="entry name" value="fn2"/>
    <property type="match status" value="2"/>
</dbReference>
<dbReference type="Pfam" id="PF00041">
    <property type="entry name" value="fn3"/>
    <property type="match status" value="17"/>
</dbReference>
<dbReference type="PRINTS" id="PR00013">
    <property type="entry name" value="FNTYPEII"/>
</dbReference>
<dbReference type="SMART" id="SM00058">
    <property type="entry name" value="FN1"/>
    <property type="match status" value="12"/>
</dbReference>
<dbReference type="SMART" id="SM00059">
    <property type="entry name" value="FN2"/>
    <property type="match status" value="2"/>
</dbReference>
<dbReference type="SMART" id="SM00060">
    <property type="entry name" value="FN3"/>
    <property type="match status" value="17"/>
</dbReference>
<dbReference type="SUPFAM" id="SSF49265">
    <property type="entry name" value="Fibronectin type III"/>
    <property type="match status" value="11"/>
</dbReference>
<dbReference type="SUPFAM" id="SSF57603">
    <property type="entry name" value="FnI-like domain"/>
    <property type="match status" value="12"/>
</dbReference>
<dbReference type="SUPFAM" id="SSF57440">
    <property type="entry name" value="Kringle-like"/>
    <property type="match status" value="2"/>
</dbReference>
<dbReference type="PROSITE" id="PS00022">
    <property type="entry name" value="EGF_1"/>
    <property type="match status" value="2"/>
</dbReference>
<dbReference type="PROSITE" id="PS01253">
    <property type="entry name" value="FN1_1"/>
    <property type="match status" value="12"/>
</dbReference>
<dbReference type="PROSITE" id="PS51091">
    <property type="entry name" value="FN1_2"/>
    <property type="match status" value="12"/>
</dbReference>
<dbReference type="PROSITE" id="PS00023">
    <property type="entry name" value="FN2_1"/>
    <property type="match status" value="2"/>
</dbReference>
<dbReference type="PROSITE" id="PS51092">
    <property type="entry name" value="FN2_2"/>
    <property type="match status" value="2"/>
</dbReference>
<dbReference type="PROSITE" id="PS50853">
    <property type="entry name" value="FN3"/>
    <property type="match status" value="17"/>
</dbReference>
<organism>
    <name type="scientific">Homo sapiens</name>
    <name type="common">Human</name>
    <dbReference type="NCBI Taxonomy" id="9606"/>
    <lineage>
        <taxon>Eukaryota</taxon>
        <taxon>Metazoa</taxon>
        <taxon>Chordata</taxon>
        <taxon>Craniata</taxon>
        <taxon>Vertebrata</taxon>
        <taxon>Euteleostomi</taxon>
        <taxon>Mammalia</taxon>
        <taxon>Eutheria</taxon>
        <taxon>Euarchontoglires</taxon>
        <taxon>Primates</taxon>
        <taxon>Haplorrhini</taxon>
        <taxon>Catarrhini</taxon>
        <taxon>Hominidae</taxon>
        <taxon>Homo</taxon>
    </lineage>
</organism>
<name>FINC_HUMAN</name>
<feature type="signal peptide" evidence="53">
    <location>
        <begin position="1"/>
        <end position="31"/>
    </location>
</feature>
<feature type="chain" id="PRO_0000019235" description="Fibronectin">
    <location>
        <begin position="32"/>
        <end position="2477"/>
    </location>
</feature>
<feature type="chain" id="PRO_0000390479" description="Anastellin">
    <location>
        <begin position="627"/>
        <end position="702"/>
    </location>
</feature>
<feature type="chain" id="PRO_0000300249" description="Ugl-Y1" evidence="48 60">
    <location>
        <begin position="723"/>
        <end position="911"/>
    </location>
</feature>
<feature type="chain" id="PRO_0000300250" description="Ugl-Y2">
    <location>
        <begin position="723"/>
        <end position="903"/>
    </location>
</feature>
<feature type="chain" id="PRO_0000300251" description="Ugl-Y3">
    <location>
        <begin position="723"/>
        <end status="unknown"/>
    </location>
</feature>
<feature type="domain" description="Fibronectin type-I 1" evidence="6">
    <location>
        <begin position="50"/>
        <end position="90"/>
    </location>
</feature>
<feature type="domain" description="Fibronectin type-I 2" evidence="6">
    <location>
        <begin position="95"/>
        <end position="138"/>
    </location>
</feature>
<feature type="domain" description="Fibronectin type-I 3" evidence="6">
    <location>
        <begin position="139"/>
        <end position="182"/>
    </location>
</feature>
<feature type="domain" description="Fibronectin type-I 4" evidence="6">
    <location>
        <begin position="184"/>
        <end position="228"/>
    </location>
</feature>
<feature type="domain" description="Fibronectin type-I 5" evidence="6">
    <location>
        <begin position="229"/>
        <end position="273"/>
    </location>
</feature>
<feature type="domain" description="Fibronectin type-I 6" evidence="6">
    <location>
        <begin position="306"/>
        <end position="345"/>
    </location>
</feature>
<feature type="domain" description="Fibronectin type-II 1" evidence="6 7">
    <location>
        <begin position="355"/>
        <end position="403"/>
    </location>
</feature>
<feature type="domain" description="Fibronectin type-II 2" evidence="6 7">
    <location>
        <begin position="415"/>
        <end position="463"/>
    </location>
</feature>
<feature type="domain" description="Fibronectin type-I 7" evidence="6">
    <location>
        <begin position="468"/>
        <end position="511"/>
    </location>
</feature>
<feature type="domain" description="Fibronectin type-I 8" evidence="6">
    <location>
        <begin position="516"/>
        <end position="558"/>
    </location>
</feature>
<feature type="domain" description="Fibronectin type-I 9" evidence="6">
    <location>
        <begin position="559"/>
        <end position="602"/>
    </location>
</feature>
<feature type="domain" description="Fibronectin type-III 1">
    <location>
        <begin position="610"/>
        <end position="702"/>
    </location>
</feature>
<feature type="domain" description="Fibronectin type-III 2" evidence="5 6 7">
    <location>
        <begin position="722"/>
        <end position="812"/>
    </location>
</feature>
<feature type="domain" description="Fibronectin type-III 3" evidence="5 6 7">
    <location>
        <begin position="813"/>
        <end position="904"/>
    </location>
</feature>
<feature type="domain" description="Fibronectin type-III 4" evidence="5 6 7">
    <location>
        <begin position="909"/>
        <end position="998"/>
    </location>
</feature>
<feature type="domain" description="Fibronectin type-III 5" evidence="5 6 7">
    <location>
        <begin position="999"/>
        <end position="1088"/>
    </location>
</feature>
<feature type="domain" description="Fibronectin type-III 6" evidence="5 6 7">
    <location>
        <begin position="1089"/>
        <end position="1175"/>
    </location>
</feature>
<feature type="domain" description="Fibronectin type-III 7" evidence="5 6 7">
    <location>
        <begin position="1176"/>
        <end position="1270"/>
    </location>
</feature>
<feature type="domain" description="Fibronectin type-III 8; extra domain B" evidence="5 6 7">
    <location>
        <begin position="1271"/>
        <end position="1359"/>
    </location>
</feature>
<feature type="domain" description="Fibronectin type-III 9" evidence="5 6 7">
    <location>
        <begin position="1360"/>
        <end position="1452"/>
    </location>
</feature>
<feature type="domain" description="Fibronectin type-III 10" evidence="5">
    <location>
        <begin position="1453"/>
        <end position="1540"/>
    </location>
</feature>
<feature type="domain" description="Fibronectin type-III 11" evidence="5">
    <location>
        <begin position="1541"/>
        <end position="1634"/>
    </location>
</feature>
<feature type="domain" description="Fibronectin type-III 12" evidence="5 6 7">
    <location>
        <begin position="1635"/>
        <end position="1726"/>
    </location>
</feature>
<feature type="domain" description="Fibronectin type-III 13; extra domain A" evidence="5">
    <location>
        <begin position="1727"/>
        <end position="1814"/>
    </location>
</feature>
<feature type="domain" description="Fibronectin type-III 14" evidence="5">
    <location>
        <begin position="1815"/>
        <end position="1908"/>
    </location>
</feature>
<feature type="domain" description="Fibronectin type-III 15" evidence="5">
    <location>
        <begin position="1909"/>
        <end position="1995"/>
    </location>
</feature>
<feature type="domain" description="Fibronectin type-III 16" evidence="5">
    <location>
        <begin position="1996"/>
        <end position="2086"/>
    </location>
</feature>
<feature type="domain" description="Fibronectin type-III 17" evidence="5">
    <location>
        <begin position="2194"/>
        <end position="2288"/>
    </location>
</feature>
<feature type="domain" description="Fibronectin type-I 10" evidence="6">
    <location>
        <begin position="2295"/>
        <end position="2339"/>
    </location>
</feature>
<feature type="domain" description="Fibronectin type-I 11" evidence="6">
    <location>
        <begin position="2340"/>
        <end position="2382"/>
    </location>
</feature>
<feature type="domain" description="Fibronectin type-I 12" evidence="6">
    <location>
        <begin position="2384"/>
        <end position="2427"/>
    </location>
</feature>
<feature type="DNA-binding region">
    <location>
        <begin position="907"/>
        <end position="1172"/>
    </location>
</feature>
<feature type="region of interest" description="Disordered" evidence="8">
    <location>
        <begin position="27"/>
        <end position="48"/>
    </location>
</feature>
<feature type="region of interest" description="Fibrin- and heparin-binding 1" evidence="54">
    <location>
        <begin position="52"/>
        <end position="272"/>
    </location>
</feature>
<feature type="region of interest" description="Required for binding to LILRB4" evidence="47">
    <location>
        <begin position="123"/>
        <end position="142"/>
    </location>
</feature>
<feature type="region of interest" description="Collagen-binding">
    <location>
        <begin position="308"/>
        <end position="608"/>
    </location>
</feature>
<feature type="region of interest" description="Critical for collagen binding">
    <location>
        <begin position="464"/>
        <end position="477"/>
    </location>
</feature>
<feature type="region of interest" description="Cell-attachment">
    <location>
        <begin position="1358"/>
        <end position="1631"/>
    </location>
</feature>
<feature type="region of interest" description="Disordered" evidence="8">
    <location>
        <begin position="1660"/>
        <end position="1684"/>
    </location>
</feature>
<feature type="region of interest" description="Heparin-binding 2">
    <location>
        <begin position="1812"/>
        <end position="2082"/>
    </location>
</feature>
<feature type="region of interest" description="Binds to FBLN1">
    <location>
        <begin position="1904"/>
        <end position="2082"/>
    </location>
</feature>
<feature type="region of interest" description="V region (type III connecting segment, IIICS)">
    <location>
        <begin position="2083"/>
        <end position="2202"/>
    </location>
</feature>
<feature type="region of interest" description="Disordered" evidence="8">
    <location>
        <begin position="2149"/>
        <end position="2169"/>
    </location>
</feature>
<feature type="region of interest" description="Fibrin-binding 2">
    <location>
        <begin position="2297"/>
        <end position="2428"/>
    </location>
</feature>
<feature type="short sequence motif" description="Cell attachment site">
    <location>
        <begin position="1615"/>
        <end position="1617"/>
    </location>
</feature>
<feature type="compositionally biased region" description="Low complexity" evidence="8">
    <location>
        <begin position="1666"/>
        <end position="1683"/>
    </location>
</feature>
<feature type="compositionally biased region" description="Low complexity" evidence="8">
    <location>
        <begin position="2150"/>
        <end position="2159"/>
    </location>
</feature>
<feature type="site" description="Important for superfibronectin formation">
    <location>
        <position position="663"/>
    </location>
</feature>
<feature type="site" description="Important for superfibronectin formation">
    <location>
        <position position="666"/>
    </location>
</feature>
<feature type="modified residue" description="Pyrrolidone carboxylic acid" evidence="53">
    <location>
        <position position="32"/>
    </location>
</feature>
<feature type="modified residue" description="Sulfotyrosine" evidence="4">
    <location>
        <position position="876"/>
    </location>
</feature>
<feature type="modified residue" description="Sulfotyrosine" evidence="4">
    <location>
        <position position="881"/>
    </location>
</feature>
<feature type="modified residue" description="Phosphothreonine" evidence="68">
    <location>
        <position position="2454"/>
    </location>
</feature>
<feature type="modified residue" description="Phosphoserine; by FAM20C" evidence="39 65 66 68">
    <location>
        <position position="2475"/>
    </location>
</feature>
<feature type="glycosylation site" description="O-linked (GalNAc...) threonine" evidence="22">
    <location>
        <position position="279"/>
    </location>
</feature>
<feature type="glycosylation site" description="N-linked (GlcNAc...) asparagine" evidence="10 22 24">
    <location>
        <position position="430"/>
    </location>
</feature>
<feature type="glycosylation site" description="N-linked (GlcNAc...) (complex) asparagine" evidence="19 22 24 33 34">
    <location>
        <position position="528"/>
    </location>
</feature>
<feature type="glycosylation site" description="N-linked (GlcNAc...) (complex) asparagine" evidence="22 24 33">
    <location>
        <position position="542"/>
    </location>
</feature>
<feature type="glycosylation site" description="N-linked (GlcNAc...) asparagine" evidence="22 28">
    <location>
        <position position="877"/>
    </location>
</feature>
<feature type="glycosylation site" description="N-linked (GlcNAc...) (complex) asparagine" evidence="22 24 33 34">
    <location>
        <position position="1007"/>
    </location>
</feature>
<feature type="glycosylation site" description="N-linked (GlcNAc...) asparagine" evidence="22 24">
    <location>
        <position position="1244"/>
    </location>
</feature>
<feature type="glycosylation site" description="N-linked (GlcNAc...) asparagine" evidence="22">
    <location>
        <position position="2199"/>
    </location>
</feature>
<feature type="disulfide bond" evidence="16">
    <location>
        <begin position="52"/>
        <end position="78"/>
    </location>
</feature>
<feature type="disulfide bond" evidence="16">
    <location>
        <begin position="76"/>
        <end position="87"/>
    </location>
</feature>
<feature type="disulfide bond" evidence="16 27">
    <location>
        <begin position="97"/>
        <end position="125"/>
    </location>
</feature>
<feature type="disulfide bond" evidence="27">
    <location>
        <begin position="123"/>
        <end position="135"/>
    </location>
</feature>
<feature type="disulfide bond" evidence="27">
    <location>
        <begin position="141"/>
        <end position="169"/>
    </location>
</feature>
<feature type="disulfide bond" evidence="27">
    <location>
        <begin position="167"/>
        <end position="179"/>
    </location>
</feature>
<feature type="disulfide bond" evidence="56">
    <location>
        <begin position="186"/>
        <end position="215"/>
    </location>
</feature>
<feature type="disulfide bond" evidence="56">
    <location>
        <begin position="213"/>
        <end position="225"/>
    </location>
</feature>
<feature type="disulfide bond" evidence="56">
    <location>
        <begin position="231"/>
        <end position="260"/>
    </location>
</feature>
<feature type="disulfide bond" evidence="56">
    <location>
        <begin position="258"/>
        <end position="270"/>
    </location>
</feature>
<feature type="disulfide bond" evidence="10">
    <location>
        <begin position="308"/>
        <end position="335"/>
    </location>
</feature>
<feature type="disulfide bond" evidence="10">
    <location>
        <begin position="333"/>
        <end position="342"/>
    </location>
</feature>
<feature type="disulfide bond" evidence="10">
    <location>
        <begin position="360"/>
        <end position="386"/>
    </location>
</feature>
<feature type="disulfide bond" evidence="10">
    <location>
        <begin position="374"/>
        <end position="401"/>
    </location>
</feature>
<feature type="disulfide bond" evidence="10">
    <location>
        <begin position="420"/>
        <end position="446"/>
    </location>
</feature>
<feature type="disulfide bond" evidence="10">
    <location>
        <begin position="434"/>
        <end position="461"/>
    </location>
</feature>
<feature type="disulfide bond" evidence="6">
    <location>
        <begin position="470"/>
        <end position="498"/>
    </location>
</feature>
<feature type="disulfide bond" evidence="6">
    <location>
        <begin position="496"/>
        <end position="508"/>
    </location>
</feature>
<feature type="disulfide bond" evidence="6">
    <location>
        <begin position="518"/>
        <end position="545"/>
    </location>
</feature>
<feature type="disulfide bond" evidence="6">
    <location>
        <begin position="543"/>
        <end position="555"/>
    </location>
</feature>
<feature type="disulfide bond" evidence="6">
    <location>
        <begin position="561"/>
        <end position="589"/>
    </location>
</feature>
<feature type="disulfide bond" evidence="6">
    <location>
        <begin position="587"/>
        <end position="599"/>
    </location>
</feature>
<feature type="disulfide bond" evidence="6">
    <location>
        <begin position="2297"/>
        <end position="2326"/>
    </location>
</feature>
<feature type="disulfide bond" evidence="6">
    <location>
        <begin position="2324"/>
        <end position="2336"/>
    </location>
</feature>
<feature type="disulfide bond" evidence="6">
    <location>
        <begin position="2342"/>
        <end position="2369"/>
    </location>
</feature>
<feature type="disulfide bond" evidence="6">
    <location>
        <begin position="2367"/>
        <end position="2379"/>
    </location>
</feature>
<feature type="disulfide bond" evidence="6">
    <location>
        <begin position="2386"/>
        <end position="2410"/>
    </location>
</feature>
<feature type="disulfide bond" evidence="6">
    <location>
        <begin position="2408"/>
        <end position="2424"/>
    </location>
</feature>
<feature type="disulfide bond" description="Interchain (with C-2462)">
    <location>
        <position position="2458"/>
    </location>
</feature>
<feature type="disulfide bond" description="Interchain (with C-2458)">
    <location>
        <position position="2462"/>
    </location>
</feature>
<feature type="cross-link" description="Isoglutamyl lysine isopeptide (Gln-Lys) (interchain with K-?)" evidence="3">
    <location>
        <position position="34"/>
    </location>
</feature>
<feature type="cross-link" description="Isoglutamyl lysine isopeptide (Gln-Lys) (interchain with K-?)" evidence="3">
    <location>
        <position position="35"/>
    </location>
</feature>
<feature type="cross-link" description="Isoglutamyl lysine isopeptide (Gln-Lys) (interchain with K-?)" evidence="3">
    <location>
        <position position="47"/>
    </location>
</feature>
<feature type="splice variant" id="VSP_060343" description="In isoform 2.">
    <original>GRTFYSCTTEGRQDGHLWC</original>
    <variation>DRTD</variation>
    <location>
        <begin position="368"/>
        <end position="386"/>
    </location>
</feature>
<feature type="splice variant" id="VSP_060344" description="In isoform 2 and isoform 16.">
    <original>KNSVGRWKEA</original>
    <variation>VSIPPRNLGY</variation>
    <location>
        <begin position="648"/>
        <end position="657"/>
    </location>
</feature>
<feature type="splice variant" id="VSP_060345" description="In isoform 2 and isoform 16.">
    <location>
        <begin position="658"/>
        <end position="2477"/>
    </location>
</feature>
<feature type="splice variant" id="VSP_060346" description="In isoform 12.">
    <location>
        <begin position="1256"/>
        <end position="1578"/>
    </location>
</feature>
<feature type="splice variant" id="VSP_060347" description="In isoform 1, isoform 3, isoform 4, isoform 5, isoform 6, isoform 8, isoform 9, isoform 10, isoform 14 and isoform 17.">
    <location>
        <begin position="1266"/>
        <end position="1356"/>
    </location>
</feature>
<feature type="splice variant" id="VSP_060348" description="In isoform 11.">
    <location>
        <begin position="1367"/>
        <end position="1457"/>
    </location>
</feature>
<feature type="splice variant" id="VSP_060349" description="In isoform 8, isoform 9, isoform 10, isoform 12, isoform 13 and isoform 14.">
    <original>NIDRPKGLAFTDVDVDSIKIAWESPQGQVSRYRVTYSSPEDGIHELFPAPDGEEDTAELQGLRPGSEYTVSVVALHDDMESQPLIGTQSTAI</original>
    <variation>TI</variation>
    <location>
        <begin position="1722"/>
        <end position="1813"/>
    </location>
</feature>
<feature type="splice variant" id="VSP_060350" description="In isoform 6.">
    <original>KTDELPQLVTLPHPNLHGPEILDVPSTVQKTPFVTHPGYDTGNGIQLPGTSGQQPSVGQQMIFEEHGFRRTTPPTTATPIRHRPRPYPPNVGEEIQIGHIPREDVDYHLYPHGPGLNPNASTGQEALSQTTISWAPFQDTSEYIISCHPVGTDEEPLQFRVPGTSTSATLTGLTRGATYNVIVEALKDQQRHKVREEVVTVGNS</original>
    <variation>KT</variation>
    <location>
        <begin position="2081"/>
        <end position="2284"/>
    </location>
</feature>
<feature type="splice variant" id="VSP_060351" description="In isoform 4, isoform 5, isoform 10 and isoform 13.">
    <original>KTDELPQLVTLPHPNLHGPEILDVPSTVQKTPFVTHPGYDTGNGIQLPGTSGQQPSVGQQMIFEEHGFRRTTPPTTATPIRHRPRPYPPNVGEEIQIGHIPREDVDYHLYPHGPGLNPNAS</original>
    <variation>K</variation>
    <location>
        <begin position="2081"/>
        <end position="2201"/>
    </location>
</feature>
<feature type="splice variant" id="VSP_060352" description="In isoform 9, isoform 12 and isoform 17.">
    <original>KTDELPQLVTLPHPNLHGPEILDVPS</original>
    <variation>K</variation>
    <location>
        <begin position="2081"/>
        <end position="2106"/>
    </location>
</feature>
<feature type="splice variant" id="VSP_060353" description="In isoform 3, isoform 7, isoform 9, isoform 12, isoform 14 and isoform 17.">
    <location>
        <begin position="2173"/>
        <end position="2203"/>
    </location>
</feature>
<feature type="splice variant" id="VSP_060354" description="In isoform 4.">
    <original>FRVP</original>
    <variation>STKA</variation>
    <location>
        <begin position="2239"/>
        <end position="2242"/>
    </location>
</feature>
<feature type="splice variant" id="VSP_060355" description="In isoform 4.">
    <location>
        <begin position="2243"/>
        <end position="2477"/>
    </location>
</feature>
<feature type="splice variant" id="VSP_060356" description="In isoform 5.">
    <location>
        <begin position="2285"/>
        <end position="2339"/>
    </location>
</feature>
<feature type="sequence variant" id="VAR_043917" description="In dbSNP:rs1250259." evidence="20 29 31 46 59">
    <original>Q</original>
    <variation>L</variation>
    <location>
        <position position="15"/>
    </location>
</feature>
<feature type="sequence variant" id="VAR_080523" description="In SMDCF; the mutant is not secreted; dbSNP:rs1553669703." evidence="41">
    <original>C</original>
    <variation>F</variation>
    <location>
        <position position="87"/>
    </location>
</feature>
<feature type="sequence variant" id="VAR_080524" description="In SMDCF; dbSNP:rs1553667072." evidence="41">
    <original>C</original>
    <variation>R</variation>
    <location>
        <position position="123"/>
    </location>
</feature>
<feature type="sequence variant" id="VAR_080525" description="In SMDCF; dbSNP:rs1181638652." evidence="41">
    <original>C</original>
    <variation>W</variation>
    <location>
        <position position="225"/>
    </location>
</feature>
<feature type="sequence variant" id="VAR_080526" description="In SMDCF; the mutant is not secreted; dbSNP:rs1553659131." evidence="41">
    <original>Y</original>
    <variation>D</variation>
    <location>
        <position position="240"/>
    </location>
</feature>
<feature type="sequence variant" id="VAR_080527" description="In SMDCF; the mutant is not secreted; dbSNP:rs1553658926." evidence="41">
    <original>C</original>
    <variation>G</variation>
    <location>
        <position position="260"/>
    </location>
</feature>
<feature type="sequence variant" id="VAR_080528" description="In SMDCF; uncertain significance; dbSNP:rs1553636502." evidence="41">
    <location>
        <position position="809"/>
    </location>
</feature>
<feature type="sequence variant" id="VAR_059529" description="In dbSNP:rs2577301." evidence="20 23 28 29 44 59">
    <original>T</original>
    <variation>P</variation>
    <location>
        <position position="817"/>
    </location>
</feature>
<feature type="sequence variant" id="VAR_036018" description="In a breast cancer sample; somatic mutation; dbSNP:rs752106647." evidence="26">
    <original>D</original>
    <variation>N</variation>
    <location>
        <position position="940"/>
    </location>
</feature>
<feature type="sequence variant" id="VAR_043918" description="In GFND2; dbSNP:rs137854488." evidence="31">
    <original>Y</original>
    <variation>C</variation>
    <location>
        <position position="973"/>
    </location>
</feature>
<feature type="sequence variant" id="VAR_036019" description="In a breast cancer sample; somatic mutation." evidence="26">
    <original>R</original>
    <variation>P</variation>
    <location>
        <position position="1120"/>
    </location>
</feature>
<feature type="sequence variant" id="VAR_056576" description="In dbSNP:rs11687611.">
    <original>S</original>
    <variation>R</variation>
    <location>
        <position position="1558"/>
    </location>
</feature>
<feature type="sequence variant" id="VAR_043919" description="In GFND2; reduced binding to heparin, endothelial cells and podocytes; impaired capability to induce stress-fiber formation; dbSNP:rs137854486." evidence="31">
    <original>W</original>
    <variation>R</variation>
    <location>
        <position position="1925"/>
    </location>
</feature>
<feature type="sequence variant" id="VAR_043920" description="In GFND2; reduced binding to heparin, endothelial cells and podocytes; impaired capability to induce stress-fiber formation; dbSNP:rs137854487." evidence="31">
    <original>L</original>
    <variation>R</variation>
    <location>
        <position position="1974"/>
    </location>
</feature>
<feature type="sequence variant" id="VAR_043921" description="In dbSNP:rs1250209." evidence="31">
    <original>I</original>
    <variation>V</variation>
    <location>
        <position position="2051"/>
    </location>
</feature>
<feature type="sequence variant" id="VAR_056577" description="In dbSNP:rs17449032.">
    <original>I</original>
    <variation>V</variation>
    <location>
        <position position="2212"/>
    </location>
</feature>
<feature type="sequence variant" id="VAR_061486" description="In dbSNP:rs1250209." evidence="14 20 23 29 37 43 44 51 52 59 67">
    <original>V</original>
    <variation>I</variation>
    <location>
        <position position="2261"/>
    </location>
</feature>
<feature type="sequence variant" id="VAR_036020" description="In a colorectal cancer sample; somatic mutation; dbSNP:rs1373375768." evidence="26">
    <original>D</original>
    <variation>N</variation>
    <location>
        <position position="2471"/>
    </location>
</feature>
<feature type="mutagenesis site" description="Severely compromised ability to form fibronectin aggregates; when associated with A-681 and A-683." evidence="17">
    <original>Y</original>
    <variation>A</variation>
    <location>
        <position position="641"/>
    </location>
</feature>
<feature type="mutagenesis site" description="Little effect on ability to form fibronectin aggregates; when associated with A-682; A-684 and A-692." evidence="17">
    <original>I</original>
    <variation>A</variation>
    <location>
        <position position="642"/>
    </location>
</feature>
<feature type="mutagenesis site" description="No effect on secondary structure nor on fibronectin binding nor on activation of p38 K but abolishes polymerization activity; when associated with A-666." evidence="17 36">
    <original>L</original>
    <variation>A</variation>
    <location>
        <position position="663"/>
    </location>
</feature>
<feature type="mutagenesis site" description="No effect on secondary structure nor on fibronectin binding nor on activation of p38 kinase but abolishes polymerization activity; when associated with A-663." evidence="17 36">
    <original>Y</original>
    <variation>A</variation>
    <location>
        <position position="666"/>
    </location>
</feature>
<feature type="mutagenesis site" description="Severely compromised ability to form fibronectin aggregates; when associated with A-641 and A-683." evidence="17">
    <original>L</original>
    <variation>A</variation>
    <location>
        <position position="681"/>
    </location>
</feature>
<feature type="mutagenesis site" description="Little effect on ability to form fibronectin aggregates; when associated with A-642; A-684 and A-692." evidence="17">
    <original>I</original>
    <variation>A</variation>
    <location>
        <position position="682"/>
    </location>
</feature>
<feature type="mutagenesis site" description="Severely compromised ability to form fibronectin aggregates; when associated with A-641 and A-681." evidence="17">
    <original>S</original>
    <variation>A</variation>
    <location>
        <position position="683"/>
    </location>
</feature>
<feature type="mutagenesis site" description="Little effect on ability to form fibronectin aggregates; when associated with A-642; A-682 and A-692." evidence="17">
    <original>I</original>
    <variation>A</variation>
    <location>
        <position position="684"/>
    </location>
</feature>
<feature type="mutagenesis site" description="Slightly enhanced ability to form fibronectin aggregates; when associated with A-694 and A-696." evidence="17">
    <original>E</original>
    <variation>A</variation>
    <location>
        <position position="691"/>
    </location>
</feature>
<feature type="mutagenesis site" description="Little effect on ability to form fibronectin aggregates; when associated with A-642; A-682 and A-684." evidence="17">
    <original>V</original>
    <variation>A</variation>
    <location>
        <position position="692"/>
    </location>
</feature>
<feature type="mutagenesis site" description="Slightly enhanced ability to form fibronectin aggregates; when associated with A-691 and A-696." evidence="17">
    <original>R</original>
    <variation>A</variation>
    <location>
        <position position="694"/>
    </location>
</feature>
<feature type="mutagenesis site" description="Loss of ability to form fibronectin aggregates; when associated with A-697." evidence="17">
    <original>F</original>
    <variation>A</variation>
    <location>
        <position position="695"/>
    </location>
</feature>
<feature type="mutagenesis site" description="Slightly enhanced ability to form fibronectin aggregates; when associated with A-691 and A-694." evidence="17">
    <original>D</original>
    <variation>A</variation>
    <location>
        <position position="696"/>
    </location>
</feature>
<feature type="mutagenesis site" description="Loss of ability to form fibronectin aggregates; when associated with A-695." evidence="17">
    <original>F</original>
    <variation>A</variation>
    <location>
        <position position="697"/>
    </location>
</feature>
<feature type="sequence conflict" description="In Ref. 5; CAH18171." evidence="61" ref="5">
    <original>Q</original>
    <variation>R</variation>
    <location>
        <position position="32"/>
    </location>
</feature>
<feature type="sequence conflict" description="In Ref. 12; AA sequence." evidence="61" ref="12">
    <original>S</original>
    <variation>C</variation>
    <location>
        <position position="48"/>
    </location>
</feature>
<feature type="sequence conflict" description="In Ref. 12; AA sequence." evidence="61" ref="12">
    <original>C</original>
    <variation>S</variation>
    <location>
        <position position="52"/>
    </location>
</feature>
<feature type="sequence conflict" description="In Ref. 5; CAH18172." evidence="61" ref="5">
    <original>Y</original>
    <variation>N</variation>
    <location>
        <position position="69"/>
    </location>
</feature>
<feature type="sequence conflict" description="In Ref. 11; CAA26536." evidence="61" ref="11">
    <original>A</original>
    <variation>V</variation>
    <location>
        <position position="73"/>
    </location>
</feature>
<feature type="sequence conflict" description="In Ref. 5; CAH18136." evidence="61" ref="5">
    <original>I</original>
    <variation>V</variation>
    <location>
        <position position="126"/>
    </location>
</feature>
<feature type="sequence conflict" description="In Ref. 5; CAD91166." evidence="61" ref="5">
    <original>E</original>
    <variation>G</variation>
    <location>
        <position position="199"/>
    </location>
</feature>
<feature type="sequence conflict" description="In Ref. 1; CAD59389 and 2; CAH60958." evidence="61" ref="1 2">
    <original>S</original>
    <variation>R</variation>
    <location>
        <position position="247"/>
    </location>
</feature>
<feature type="sequence conflict" description="In Ref. 5; CAH18172." evidence="61" ref="5">
    <original>C</original>
    <variation>R</variation>
    <location>
        <position position="260"/>
    </location>
</feature>
<feature type="sequence conflict" description="In Ref. 5; CAE45847." evidence="61" ref="5">
    <original>V</original>
    <variation>A</variation>
    <location>
        <position position="289"/>
    </location>
</feature>
<feature type="sequence conflict" description="In Ref. 11; CAA26536 and 13; AAD00015." evidence="61" ref="11 13">
    <original>S</original>
    <variation>L</variation>
    <location>
        <position position="355"/>
    </location>
</feature>
<feature type="sequence conflict" description="In Ref. 5; CAD97984." evidence="61" ref="5">
    <original>G</original>
    <variation>E</variation>
    <location>
        <position position="357"/>
    </location>
</feature>
<feature type="sequence conflict" description="In Ref. 5; CAH18136." evidence="61" ref="5">
    <original>T</original>
    <variation>A</variation>
    <location>
        <position position="375"/>
    </location>
</feature>
<feature type="sequence conflict" description="In Ref. 11; CAA26536 and 13; AAD00015." evidence="61" ref="11 13">
    <original>R</original>
    <variation>Q</variation>
    <location>
        <position position="411"/>
    </location>
</feature>
<feature type="sequence conflict" description="In Ref. 5; CAD97791." evidence="61" ref="5">
    <original>C</original>
    <variation>R</variation>
    <location>
        <position position="518"/>
    </location>
</feature>
<feature type="sequence conflict" description="In Ref. 5; CAD97965/CAD97964." evidence="61" ref="5">
    <original>R</original>
    <variation>K</variation>
    <location>
        <position position="552"/>
    </location>
</feature>
<feature type="sequence conflict" description="In Ref. 5; CAH18172." evidence="61" ref="5">
    <original>V</original>
    <variation>A</variation>
    <location>
        <position position="580"/>
    </location>
</feature>
<feature type="sequence conflict" description="In Ref. 16; AA sequence." evidence="61" ref="16">
    <original>E</original>
    <variation>Q</variation>
    <location>
        <position position="678"/>
    </location>
</feature>
<feature type="sequence conflict" description="In Ref. 16; AA sequence." evidence="61" ref="16">
    <original>TP</original>
    <variation>PT</variation>
    <location>
        <begin position="704"/>
        <end position="705"/>
    </location>
</feature>
<feature type="sequence conflict" description="In Ref. 5; CAD97791." evidence="61" ref="5">
    <original>V</original>
    <variation>L</variation>
    <location>
        <position position="980"/>
    </location>
</feature>
<feature type="sequence conflict" description="In Ref. 5; CAH18136." evidence="61" ref="5">
    <original>T</original>
    <variation>A</variation>
    <location>
        <position position="1030"/>
    </location>
</feature>
<feature type="sequence conflict" description="In Ref. 5; CAD97965/CAD97964." evidence="61" ref="5">
    <original>V</original>
    <variation>D</variation>
    <location>
        <position position="1048"/>
    </location>
</feature>
<feature type="sequence conflict" description="In Ref. 5; CAH18136." evidence="61" ref="5">
    <original>D</original>
    <variation>G</variation>
    <location>
        <position position="1134"/>
    </location>
</feature>
<feature type="sequence conflict" description="In Ref. 5; CAD97965/CAD97964." evidence="61" ref="5">
    <original>S</original>
    <variation>N</variation>
    <location>
        <position position="1137"/>
    </location>
</feature>
<feature type="sequence conflict" description="In Ref. 5; CAH18136." evidence="61" ref="5">
    <original>T</original>
    <variation>I</variation>
    <location>
        <position position="1152"/>
    </location>
</feature>
<feature type="sequence conflict" description="In Ref. 5; CAD97791." evidence="61" ref="5">
    <original>E</original>
    <variation>G</variation>
    <location>
        <position position="1222"/>
    </location>
</feature>
<feature type="sequence conflict" description="In Ref. 5; CAE45932." evidence="61" ref="5">
    <original>H</original>
    <variation>Q</variation>
    <location>
        <position position="1226"/>
    </location>
</feature>
<feature type="sequence conflict" description="In Ref. 5; CAE45714." evidence="61" ref="5">
    <original>D</original>
    <variation>G</variation>
    <location>
        <position position="1646"/>
    </location>
</feature>
<feature type="sequence conflict" description="In Ref. 5; CAD97965/CAD97964." evidence="61" ref="5">
    <original>G</original>
    <variation>S</variation>
    <location>
        <position position="1692"/>
    </location>
</feature>
<feature type="sequence conflict" description="In Ref. 27; AA sequence." evidence="61" ref="27">
    <original>Q</original>
    <variation>E</variation>
    <location>
        <position position="1713"/>
    </location>
</feature>
<feature type="sequence conflict" description="In Ref. 29; AAA52463." evidence="61" ref="29">
    <original>IGTQSTA</original>
    <variation>VQTAVTT</variation>
    <location>
        <begin position="1806"/>
        <end position="1812"/>
    </location>
</feature>
<feature type="sequence conflict" description="In Ref. 5; CAE45847." evidence="61" ref="5">
    <original>T</original>
    <variation>A</variation>
    <location>
        <position position="1817"/>
    </location>
</feature>
<feature type="sequence conflict" description="In Ref. 5; CAH18136." evidence="61" ref="5">
    <original>R</original>
    <variation>W</variation>
    <location>
        <position position="1846"/>
    </location>
</feature>
<feature type="sequence conflict" description="In Ref. 19; CAB52436." evidence="61" ref="19">
    <original>I</original>
    <variation>V</variation>
    <location>
        <position position="1859"/>
    </location>
</feature>
<feature type="sequence conflict" description="In Ref. 5; CAE45932." evidence="61" ref="5">
    <original>M</original>
    <variation>T</variation>
    <location>
        <position position="1874"/>
    </location>
</feature>
<feature type="sequence conflict" description="In Ref. 13; AAD00014." evidence="61" ref="13">
    <original>R</original>
    <variation>C</variation>
    <location>
        <position position="2018"/>
    </location>
</feature>
<feature type="sequence conflict" description="In Ref. 5; CAH18172." evidence="61" ref="5">
    <original>I</original>
    <variation>V</variation>
    <location>
        <position position="2025"/>
    </location>
</feature>
<feature type="sequence conflict" description="In Ref. 5; CAD97965/CAD97964." evidence="61" ref="5">
    <original>D</original>
    <variation>G</variation>
    <location>
        <position position="2083"/>
    </location>
</feature>
<feature type="sequence conflict" description="In Ref. 5; CAD97965/CAD97964." evidence="61" ref="5">
    <original>V</original>
    <variation>A</variation>
    <location>
        <position position="2114"/>
    </location>
</feature>
<feature type="sequence conflict" description="In Ref. 5; CAD97965/CAD97964." evidence="61" ref="5">
    <original>G</original>
    <variation>R</variation>
    <location>
        <position position="2118"/>
    </location>
</feature>
<feature type="sequence conflict" description="In Ref. 5; CAH18172." evidence="61" ref="5">
    <original>C</original>
    <variation>R</variation>
    <location>
        <position position="2342"/>
    </location>
</feature>
<feature type="sequence conflict" description="In Ref. 5; CAD97965/CAD97964." evidence="61" ref="5">
    <original>Y</original>
    <variation>N</variation>
    <location>
        <position position="2403"/>
    </location>
</feature>
<feature type="sequence conflict" description="In Ref. 5; CAE45714/CAH18171/CAH18172/CAE45958." evidence="61" ref="5">
    <original>S</original>
    <variation>T</variation>
    <location>
        <position position="2432"/>
    </location>
</feature>
<feature type="sequence conflict" description="In Ref. 5; CAE45932." evidence="61" ref="5">
    <original>C</original>
    <variation>Y</variation>
    <location>
        <position position="2458"/>
    </location>
</feature>
<feature type="strand" evidence="75">
    <location>
        <begin position="52"/>
        <end position="54"/>
    </location>
</feature>
<feature type="strand" evidence="75">
    <location>
        <begin position="57"/>
        <end position="59"/>
    </location>
</feature>
<feature type="strand" evidence="72">
    <location>
        <begin position="64"/>
        <end position="69"/>
    </location>
</feature>
<feature type="strand" evidence="72">
    <location>
        <begin position="72"/>
        <end position="78"/>
    </location>
</feature>
<feature type="turn" evidence="75">
    <location>
        <begin position="81"/>
        <end position="83"/>
    </location>
</feature>
<feature type="strand" evidence="72">
    <location>
        <begin position="85"/>
        <end position="89"/>
    </location>
</feature>
<feature type="strand" evidence="76">
    <location>
        <begin position="96"/>
        <end position="98"/>
    </location>
</feature>
<feature type="turn" evidence="76">
    <location>
        <begin position="100"/>
        <end position="102"/>
    </location>
</feature>
<feature type="strand" evidence="76">
    <location>
        <begin position="105"/>
        <end position="107"/>
    </location>
</feature>
<feature type="strand" evidence="76">
    <location>
        <begin position="111"/>
        <end position="116"/>
    </location>
</feature>
<feature type="strand" evidence="76">
    <location>
        <begin position="119"/>
        <end position="127"/>
    </location>
</feature>
<feature type="turn" evidence="76">
    <location>
        <begin position="128"/>
        <end position="131"/>
    </location>
</feature>
<feature type="strand" evidence="76">
    <location>
        <begin position="132"/>
        <end position="136"/>
    </location>
</feature>
<feature type="strand" evidence="76">
    <location>
        <begin position="140"/>
        <end position="143"/>
    </location>
</feature>
<feature type="strand" evidence="76">
    <location>
        <begin position="146"/>
        <end position="149"/>
    </location>
</feature>
<feature type="strand" evidence="76">
    <location>
        <begin position="153"/>
        <end position="157"/>
    </location>
</feature>
<feature type="strand" evidence="76">
    <location>
        <begin position="161"/>
        <end position="171"/>
    </location>
</feature>
<feature type="turn" evidence="76">
    <location>
        <begin position="172"/>
        <end position="175"/>
    </location>
</feature>
<feature type="strand" evidence="76">
    <location>
        <begin position="176"/>
        <end position="181"/>
    </location>
</feature>
<feature type="strand" evidence="82">
    <location>
        <begin position="185"/>
        <end position="188"/>
    </location>
</feature>
<feature type="turn" evidence="82">
    <location>
        <begin position="189"/>
        <end position="192"/>
    </location>
</feature>
<feature type="strand" evidence="82">
    <location>
        <begin position="193"/>
        <end position="196"/>
    </location>
</feature>
<feature type="strand" evidence="82">
    <location>
        <begin position="200"/>
        <end position="205"/>
    </location>
</feature>
<feature type="turn" evidence="82">
    <location>
        <begin position="206"/>
        <end position="208"/>
    </location>
</feature>
<feature type="strand" evidence="82">
    <location>
        <begin position="209"/>
        <end position="217"/>
    </location>
</feature>
<feature type="turn" evidence="82">
    <location>
        <begin position="218"/>
        <end position="221"/>
    </location>
</feature>
<feature type="strand" evidence="82">
    <location>
        <begin position="222"/>
        <end position="226"/>
    </location>
</feature>
<feature type="strand" evidence="82">
    <location>
        <begin position="230"/>
        <end position="233"/>
    </location>
</feature>
<feature type="turn" evidence="82">
    <location>
        <begin position="234"/>
        <end position="237"/>
    </location>
</feature>
<feature type="strand" evidence="82">
    <location>
        <begin position="238"/>
        <end position="241"/>
    </location>
</feature>
<feature type="strand" evidence="82">
    <location>
        <begin position="245"/>
        <end position="249"/>
    </location>
</feature>
<feature type="strand" evidence="82">
    <location>
        <begin position="251"/>
        <end position="253"/>
    </location>
</feature>
<feature type="strand" evidence="82">
    <location>
        <begin position="255"/>
        <end position="262"/>
    </location>
</feature>
<feature type="turn" evidence="82">
    <location>
        <begin position="263"/>
        <end position="266"/>
    </location>
</feature>
<feature type="strand" evidence="82">
    <location>
        <begin position="267"/>
        <end position="271"/>
    </location>
</feature>
<feature type="strand" evidence="84">
    <location>
        <begin position="302"/>
        <end position="304"/>
    </location>
</feature>
<feature type="strand" evidence="84">
    <location>
        <begin position="307"/>
        <end position="309"/>
    </location>
</feature>
<feature type="turn" evidence="69">
    <location>
        <begin position="311"/>
        <end position="313"/>
    </location>
</feature>
<feature type="strand" evidence="84">
    <location>
        <begin position="315"/>
        <end position="317"/>
    </location>
</feature>
<feature type="strand" evidence="84">
    <location>
        <begin position="321"/>
        <end position="326"/>
    </location>
</feature>
<feature type="strand" evidence="84">
    <location>
        <begin position="329"/>
        <end position="336"/>
    </location>
</feature>
<feature type="strand" evidence="84">
    <location>
        <begin position="339"/>
        <end position="344"/>
    </location>
</feature>
<feature type="turn" evidence="84">
    <location>
        <begin position="353"/>
        <end position="356"/>
    </location>
</feature>
<feature type="strand" evidence="84">
    <location>
        <begin position="360"/>
        <end position="366"/>
    </location>
</feature>
<feature type="strand" evidence="84">
    <location>
        <begin position="369"/>
        <end position="373"/>
    </location>
</feature>
<feature type="strand" evidence="69">
    <location>
        <begin position="381"/>
        <end position="383"/>
    </location>
</feature>
<feature type="strand" evidence="84">
    <location>
        <begin position="385"/>
        <end position="391"/>
    </location>
</feature>
<feature type="helix" evidence="84">
    <location>
        <begin position="392"/>
        <end position="395"/>
    </location>
</feature>
<feature type="strand" evidence="84">
    <location>
        <begin position="398"/>
        <end position="401"/>
    </location>
</feature>
<feature type="helix" evidence="70">
    <location>
        <begin position="403"/>
        <end position="405"/>
    </location>
</feature>
<feature type="turn" evidence="84">
    <location>
        <begin position="413"/>
        <end position="417"/>
    </location>
</feature>
<feature type="strand" evidence="84">
    <location>
        <begin position="422"/>
        <end position="426"/>
    </location>
</feature>
<feature type="strand" evidence="84">
    <location>
        <begin position="429"/>
        <end position="433"/>
    </location>
</feature>
<feature type="strand" evidence="78">
    <location>
        <begin position="440"/>
        <end position="442"/>
    </location>
</feature>
<feature type="strand" evidence="84">
    <location>
        <begin position="445"/>
        <end position="451"/>
    </location>
</feature>
<feature type="helix" evidence="84">
    <location>
        <begin position="452"/>
        <end position="455"/>
    </location>
</feature>
<feature type="strand" evidence="84">
    <location>
        <begin position="458"/>
        <end position="460"/>
    </location>
</feature>
<feature type="helix" evidence="85">
    <location>
        <begin position="465"/>
        <end position="467"/>
    </location>
</feature>
<feature type="strand" evidence="84">
    <location>
        <begin position="469"/>
        <end position="471"/>
    </location>
</feature>
<feature type="strand" evidence="84">
    <location>
        <begin position="477"/>
        <end position="479"/>
    </location>
</feature>
<feature type="strand" evidence="84">
    <location>
        <begin position="483"/>
        <end position="485"/>
    </location>
</feature>
<feature type="strand" evidence="84">
    <location>
        <begin position="490"/>
        <end position="492"/>
    </location>
</feature>
<feature type="strand" evidence="84">
    <location>
        <begin position="495"/>
        <end position="500"/>
    </location>
</feature>
<feature type="turn" evidence="84">
    <location>
        <begin position="501"/>
        <end position="504"/>
    </location>
</feature>
<feature type="strand" evidence="84">
    <location>
        <begin position="505"/>
        <end position="513"/>
    </location>
</feature>
<feature type="strand" evidence="83">
    <location>
        <begin position="517"/>
        <end position="520"/>
    </location>
</feature>
<feature type="strand" evidence="83">
    <location>
        <begin position="523"/>
        <end position="526"/>
    </location>
</feature>
<feature type="strand" evidence="83">
    <location>
        <begin position="529"/>
        <end position="534"/>
    </location>
</feature>
<feature type="strand" evidence="83">
    <location>
        <begin position="540"/>
        <end position="547"/>
    </location>
</feature>
<feature type="turn" evidence="83">
    <location>
        <begin position="548"/>
        <end position="551"/>
    </location>
</feature>
<feature type="strand" evidence="83">
    <location>
        <begin position="552"/>
        <end position="557"/>
    </location>
</feature>
<feature type="strand" evidence="83">
    <location>
        <begin position="559"/>
        <end position="562"/>
    </location>
</feature>
<feature type="turn" evidence="83">
    <location>
        <begin position="564"/>
        <end position="566"/>
    </location>
</feature>
<feature type="strand" evidence="83">
    <location>
        <begin position="569"/>
        <end position="571"/>
    </location>
</feature>
<feature type="strand" evidence="83">
    <location>
        <begin position="575"/>
        <end position="578"/>
    </location>
</feature>
<feature type="strand" evidence="83">
    <location>
        <begin position="585"/>
        <end position="591"/>
    </location>
</feature>
<feature type="turn" evidence="83">
    <location>
        <begin position="592"/>
        <end position="595"/>
    </location>
</feature>
<feature type="strand" evidence="83">
    <location>
        <begin position="596"/>
        <end position="601"/>
    </location>
</feature>
<feature type="strand" evidence="73">
    <location>
        <begin position="613"/>
        <end position="615"/>
    </location>
</feature>
<feature type="strand" evidence="73">
    <location>
        <begin position="626"/>
        <end position="631"/>
    </location>
</feature>
<feature type="strand" evidence="73">
    <location>
        <begin position="634"/>
        <end position="636"/>
    </location>
</feature>
<feature type="strand" evidence="73">
    <location>
        <begin position="638"/>
        <end position="647"/>
    </location>
</feature>
<feature type="turn" evidence="74">
    <location>
        <begin position="648"/>
        <end position="651"/>
    </location>
</feature>
<feature type="strand" evidence="73">
    <location>
        <begin position="655"/>
        <end position="659"/>
    </location>
</feature>
<feature type="strand" evidence="74">
    <location>
        <begin position="661"/>
        <end position="664"/>
    </location>
</feature>
<feature type="strand" evidence="73">
    <location>
        <begin position="665"/>
        <end position="668"/>
    </location>
</feature>
<feature type="strand" evidence="73">
    <location>
        <begin position="673"/>
        <end position="688"/>
    </location>
</feature>
<feature type="strand" evidence="73">
    <location>
        <begin position="690"/>
        <end position="699"/>
    </location>
</feature>
<feature type="helix" evidence="80">
    <location>
        <begin position="732"/>
        <end position="734"/>
    </location>
</feature>
<feature type="strand" evidence="80">
    <location>
        <begin position="736"/>
        <end position="739"/>
    </location>
</feature>
<feature type="strand" evidence="80">
    <location>
        <begin position="747"/>
        <end position="756"/>
    </location>
</feature>
<feature type="turn" evidence="80">
    <location>
        <begin position="757"/>
        <end position="759"/>
    </location>
</feature>
<feature type="strand" evidence="80">
    <location>
        <begin position="764"/>
        <end position="769"/>
    </location>
</feature>
<feature type="strand" evidence="80">
    <location>
        <begin position="774"/>
        <end position="777"/>
    </location>
</feature>
<feature type="strand" evidence="80">
    <location>
        <begin position="785"/>
        <end position="794"/>
    </location>
</feature>
<feature type="strand" evidence="80">
    <location>
        <begin position="799"/>
        <end position="808"/>
    </location>
</feature>
<feature type="strand" evidence="81">
    <location>
        <begin position="818"/>
        <end position="822"/>
    </location>
</feature>
<feature type="strand" evidence="81">
    <location>
        <begin position="824"/>
        <end position="830"/>
    </location>
</feature>
<feature type="strand" evidence="81">
    <location>
        <begin position="839"/>
        <end position="847"/>
    </location>
</feature>
<feature type="strand" evidence="81">
    <location>
        <begin position="854"/>
        <end position="859"/>
    </location>
</feature>
<feature type="strand" evidence="81">
    <location>
        <begin position="864"/>
        <end position="869"/>
    </location>
</feature>
<feature type="strand" evidence="81">
    <location>
        <begin position="875"/>
        <end position="883"/>
    </location>
</feature>
<feature type="strand" evidence="81">
    <location>
        <begin position="892"/>
        <end position="897"/>
    </location>
</feature>
<feature type="strand" evidence="94">
    <location>
        <begin position="911"/>
        <end position="918"/>
    </location>
</feature>
<feature type="strand" evidence="94">
    <location>
        <begin position="923"/>
        <end position="928"/>
    </location>
</feature>
<feature type="strand" evidence="94">
    <location>
        <begin position="936"/>
        <end position="945"/>
    </location>
</feature>
<feature type="strand" evidence="94">
    <location>
        <begin position="947"/>
        <end position="949"/>
    </location>
</feature>
<feature type="strand" evidence="94">
    <location>
        <begin position="951"/>
        <end position="958"/>
    </location>
</feature>
<feature type="strand" evidence="94">
    <location>
        <begin position="960"/>
        <end position="964"/>
    </location>
</feature>
<feature type="strand" evidence="94">
    <location>
        <begin position="972"/>
        <end position="981"/>
    </location>
</feature>
<feature type="strand" evidence="94">
    <location>
        <begin position="989"/>
        <end position="994"/>
    </location>
</feature>
<feature type="strand" evidence="94">
    <location>
        <begin position="1001"/>
        <end position="1007"/>
    </location>
</feature>
<feature type="strand" evidence="94">
    <location>
        <begin position="1009"/>
        <end position="1011"/>
    </location>
</feature>
<feature type="strand" evidence="94">
    <location>
        <begin position="1013"/>
        <end position="1018"/>
    </location>
</feature>
<feature type="strand" evidence="94">
    <location>
        <begin position="1025"/>
        <end position="1033"/>
    </location>
</feature>
<feature type="strand" evidence="94">
    <location>
        <begin position="1040"/>
        <end position="1044"/>
    </location>
</feature>
<feature type="strand" evidence="94">
    <location>
        <begin position="1049"/>
        <end position="1053"/>
    </location>
</feature>
<feature type="strand" evidence="94">
    <location>
        <begin position="1061"/>
        <end position="1070"/>
    </location>
</feature>
<feature type="strand" evidence="94">
    <location>
        <begin position="1078"/>
        <end position="1083"/>
    </location>
</feature>
<feature type="strand" evidence="94">
    <location>
        <begin position="1094"/>
        <end position="1098"/>
    </location>
</feature>
<feature type="strand" evidence="94">
    <location>
        <begin position="1103"/>
        <end position="1107"/>
    </location>
</feature>
<feature type="strand" evidence="94">
    <location>
        <begin position="1113"/>
        <end position="1121"/>
    </location>
</feature>
<feature type="strand" evidence="94">
    <location>
        <begin position="1129"/>
        <end position="1140"/>
    </location>
</feature>
<feature type="strand" evidence="94">
    <location>
        <begin position="1148"/>
        <end position="1157"/>
    </location>
</feature>
<feature type="strand" evidence="94">
    <location>
        <begin position="1166"/>
        <end position="1171"/>
    </location>
</feature>
<feature type="strand" evidence="94">
    <location>
        <begin position="1178"/>
        <end position="1184"/>
    </location>
</feature>
<feature type="turn" evidence="94">
    <location>
        <begin position="1186"/>
        <end position="1188"/>
    </location>
</feature>
<feature type="strand" evidence="94">
    <location>
        <begin position="1191"/>
        <end position="1196"/>
    </location>
</feature>
<feature type="strand" evidence="96">
    <location>
        <begin position="1199"/>
        <end position="1202"/>
    </location>
</feature>
<feature type="strand" evidence="94">
    <location>
        <begin position="1205"/>
        <end position="1212"/>
    </location>
</feature>
<feature type="turn" evidence="71">
    <location>
        <begin position="1213"/>
        <end position="1215"/>
    </location>
</feature>
<feature type="strand" evidence="94">
    <location>
        <begin position="1221"/>
        <end position="1225"/>
    </location>
</feature>
<feature type="strand" evidence="94">
    <location>
        <begin position="1230"/>
        <end position="1234"/>
    </location>
</feature>
<feature type="strand" evidence="91">
    <location>
        <begin position="1239"/>
        <end position="1241"/>
    </location>
</feature>
<feature type="strand" evidence="94">
    <location>
        <begin position="1243"/>
        <end position="1251"/>
    </location>
</feature>
<feature type="strand" evidence="94">
    <location>
        <begin position="1259"/>
        <end position="1263"/>
    </location>
</feature>
<feature type="strand" evidence="92">
    <location>
        <begin position="1274"/>
        <end position="1277"/>
    </location>
</feature>
<feature type="strand" evidence="92">
    <location>
        <begin position="1280"/>
        <end position="1286"/>
    </location>
</feature>
<feature type="strand" evidence="79">
    <location>
        <begin position="1291"/>
        <end position="1294"/>
    </location>
</feature>
<feature type="strand" evidence="92">
    <location>
        <begin position="1295"/>
        <end position="1304"/>
    </location>
</feature>
<feature type="turn" evidence="97">
    <location>
        <begin position="1305"/>
        <end position="1308"/>
    </location>
</feature>
<feature type="strand" evidence="92">
    <location>
        <begin position="1311"/>
        <end position="1317"/>
    </location>
</feature>
<feature type="strand" evidence="92">
    <location>
        <begin position="1322"/>
        <end position="1327"/>
    </location>
</feature>
<feature type="strand" evidence="92">
    <location>
        <begin position="1333"/>
        <end position="1342"/>
    </location>
</feature>
<feature type="strand" evidence="92">
    <location>
        <begin position="1350"/>
        <end position="1355"/>
    </location>
</feature>
<feature type="strand" evidence="71">
    <location>
        <begin position="1362"/>
        <end position="1368"/>
    </location>
</feature>
<feature type="strand" evidence="71">
    <location>
        <begin position="1374"/>
        <end position="1379"/>
    </location>
</feature>
<feature type="strand" evidence="71">
    <location>
        <begin position="1387"/>
        <end position="1395"/>
    </location>
</feature>
<feature type="helix" evidence="87">
    <location>
        <begin position="1396"/>
        <end position="1398"/>
    </location>
</feature>
<feature type="helix" evidence="79">
    <location>
        <begin position="1399"/>
        <end position="1401"/>
    </location>
</feature>
<feature type="strand" evidence="71">
    <location>
        <begin position="1403"/>
        <end position="1407"/>
    </location>
</feature>
<feature type="strand" evidence="71">
    <location>
        <begin position="1413"/>
        <end position="1416"/>
    </location>
</feature>
<feature type="strand" evidence="71">
    <location>
        <begin position="1424"/>
        <end position="1433"/>
    </location>
</feature>
<feature type="strand" evidence="71">
    <location>
        <begin position="1441"/>
        <end position="1446"/>
    </location>
</feature>
<feature type="strand" evidence="88">
    <location>
        <begin position="1453"/>
        <end position="1459"/>
    </location>
</feature>
<feature type="strand" evidence="88">
    <location>
        <begin position="1465"/>
        <end position="1470"/>
    </location>
</feature>
<feature type="strand" evidence="88">
    <location>
        <begin position="1477"/>
        <end position="1485"/>
    </location>
</feature>
<feature type="strand" evidence="88">
    <location>
        <begin position="1493"/>
        <end position="1497"/>
    </location>
</feature>
<feature type="strand" evidence="88">
    <location>
        <begin position="1503"/>
        <end position="1506"/>
    </location>
</feature>
<feature type="strand" evidence="88">
    <location>
        <begin position="1514"/>
        <end position="1523"/>
    </location>
</feature>
<feature type="strand" evidence="88">
    <location>
        <begin position="1531"/>
        <end position="1536"/>
    </location>
</feature>
<feature type="strand" evidence="88">
    <location>
        <begin position="1543"/>
        <end position="1551"/>
    </location>
</feature>
<feature type="strand" evidence="88">
    <location>
        <begin position="1554"/>
        <end position="1560"/>
    </location>
</feature>
<feature type="strand" evidence="88">
    <location>
        <begin position="1567"/>
        <end position="1575"/>
    </location>
</feature>
<feature type="strand" evidence="89">
    <location>
        <begin position="1578"/>
        <end position="1580"/>
    </location>
</feature>
<feature type="strand" evidence="88">
    <location>
        <begin position="1583"/>
        <end position="1588"/>
    </location>
</feature>
<feature type="strand" evidence="88">
    <location>
        <begin position="1593"/>
        <end position="1596"/>
    </location>
</feature>
<feature type="strand" evidence="88">
    <location>
        <begin position="1604"/>
        <end position="1613"/>
    </location>
</feature>
<feature type="strand" evidence="88">
    <location>
        <begin position="1616"/>
        <end position="1618"/>
    </location>
</feature>
<feature type="strand" evidence="88">
    <location>
        <begin position="1625"/>
        <end position="1630"/>
    </location>
</feature>
<feature type="strand" evidence="95">
    <location>
        <begin position="1637"/>
        <end position="1644"/>
    </location>
</feature>
<feature type="strand" evidence="95">
    <location>
        <begin position="1649"/>
        <end position="1654"/>
    </location>
</feature>
<feature type="strand" evidence="95">
    <location>
        <begin position="1661"/>
        <end position="1674"/>
    </location>
</feature>
<feature type="strand" evidence="95">
    <location>
        <begin position="1677"/>
        <end position="1681"/>
    </location>
</feature>
<feature type="strand" evidence="95">
    <location>
        <begin position="1687"/>
        <end position="1690"/>
    </location>
</feature>
<feature type="strand" evidence="95">
    <location>
        <begin position="1698"/>
        <end position="1706"/>
    </location>
</feature>
<feature type="strand" evidence="95">
    <location>
        <begin position="1715"/>
        <end position="1720"/>
    </location>
</feature>
<feature type="strand" evidence="95">
    <location>
        <begin position="1727"/>
        <end position="1733"/>
    </location>
</feature>
<feature type="strand" evidence="95">
    <location>
        <begin position="1739"/>
        <end position="1744"/>
    </location>
</feature>
<feature type="strand" evidence="95">
    <location>
        <begin position="1751"/>
        <end position="1759"/>
    </location>
</feature>
<feature type="turn" evidence="95">
    <location>
        <begin position="1760"/>
        <end position="1762"/>
    </location>
</feature>
<feature type="strand" evidence="95">
    <location>
        <begin position="1763"/>
        <end position="1766"/>
    </location>
</feature>
<feature type="strand" evidence="95">
    <location>
        <begin position="1772"/>
        <end position="1774"/>
    </location>
</feature>
<feature type="strand" evidence="95">
    <location>
        <begin position="1777"/>
        <end position="1780"/>
    </location>
</feature>
<feature type="strand" evidence="95">
    <location>
        <begin position="1788"/>
        <end position="1797"/>
    </location>
</feature>
<feature type="strand" evidence="95">
    <location>
        <begin position="1805"/>
        <end position="1810"/>
    </location>
</feature>
<feature type="strand" evidence="86">
    <location>
        <begin position="1817"/>
        <end position="1824"/>
    </location>
</feature>
<feature type="strand" evidence="86">
    <location>
        <begin position="1829"/>
        <end position="1834"/>
    </location>
</feature>
<feature type="strand" evidence="86">
    <location>
        <begin position="1842"/>
        <end position="1854"/>
    </location>
</feature>
<feature type="strand" evidence="86">
    <location>
        <begin position="1857"/>
        <end position="1861"/>
    </location>
</feature>
<feature type="strand" evidence="86">
    <location>
        <begin position="1867"/>
        <end position="1870"/>
    </location>
</feature>
<feature type="strand" evidence="86">
    <location>
        <begin position="1878"/>
        <end position="1887"/>
    </location>
</feature>
<feature type="strand" evidence="86">
    <location>
        <begin position="1895"/>
        <end position="1900"/>
    </location>
</feature>
<feature type="strand" evidence="86">
    <location>
        <begin position="1909"/>
        <end position="1916"/>
    </location>
</feature>
<feature type="strand" evidence="86">
    <location>
        <begin position="1921"/>
        <end position="1926"/>
    </location>
</feature>
<feature type="strand" evidence="86">
    <location>
        <begin position="1934"/>
        <end position="1944"/>
    </location>
</feature>
<feature type="strand" evidence="86">
    <location>
        <begin position="1948"/>
        <end position="1952"/>
    </location>
</feature>
<feature type="strand" evidence="86">
    <location>
        <begin position="1957"/>
        <end position="1961"/>
    </location>
</feature>
<feature type="strand" evidence="86">
    <location>
        <begin position="1969"/>
        <end position="1978"/>
    </location>
</feature>
<feature type="strand" evidence="86">
    <location>
        <begin position="1986"/>
        <end position="1991"/>
    </location>
</feature>
<feature type="strand" evidence="86">
    <location>
        <begin position="1998"/>
        <end position="2006"/>
    </location>
</feature>
<feature type="strand" evidence="86">
    <location>
        <begin position="2009"/>
        <end position="2015"/>
    </location>
</feature>
<feature type="strand" evidence="86">
    <location>
        <begin position="2023"/>
        <end position="2029"/>
    </location>
</feature>
<feature type="strand" evidence="93">
    <location>
        <begin position="2033"/>
        <end position="2037"/>
    </location>
</feature>
<feature type="strand" evidence="86">
    <location>
        <begin position="2048"/>
        <end position="2051"/>
    </location>
</feature>
<feature type="strand" evidence="86">
    <location>
        <begin position="2059"/>
        <end position="2068"/>
    </location>
</feature>
<feature type="strand" evidence="86">
    <location>
        <begin position="2076"/>
        <end position="2081"/>
    </location>
</feature>
<feature type="strand" evidence="90">
    <location>
        <begin position="2206"/>
        <end position="2213"/>
    </location>
</feature>
<feature type="strand" evidence="90">
    <location>
        <begin position="2221"/>
        <end position="2232"/>
    </location>
</feature>
<feature type="strand" evidence="90">
    <location>
        <begin position="2237"/>
        <end position="2242"/>
    </location>
</feature>
<feature type="strand" evidence="90">
    <location>
        <begin position="2247"/>
        <end position="2254"/>
    </location>
</feature>
<feature type="strand" evidence="90">
    <location>
        <begin position="2257"/>
        <end position="2267"/>
    </location>
</feature>
<feature type="strand" evidence="90">
    <location>
        <begin position="2270"/>
        <end position="2280"/>
    </location>
</feature>
<feature type="strand" evidence="77">
    <location>
        <begin position="2344"/>
        <end position="2346"/>
    </location>
</feature>
<feature type="strand" evidence="77">
    <location>
        <begin position="2354"/>
        <end position="2358"/>
    </location>
</feature>
<feature type="strand" evidence="77">
    <location>
        <begin position="2360"/>
        <end position="2371"/>
    </location>
</feature>
<feature type="turn" evidence="77">
    <location>
        <begin position="2372"/>
        <end position="2375"/>
    </location>
</feature>
<feature type="strand" evidence="77">
    <location>
        <begin position="2376"/>
        <end position="2381"/>
    </location>
</feature>
<evidence type="ECO:0000250" key="1"/>
<evidence type="ECO:0000250" key="2">
    <source>
        <dbReference type="UniProtKB" id="P07589"/>
    </source>
</evidence>
<evidence type="ECO:0000250" key="3">
    <source>
        <dbReference type="UniProtKB" id="P11276"/>
    </source>
</evidence>
<evidence type="ECO:0000255" key="4"/>
<evidence type="ECO:0000255" key="5">
    <source>
        <dbReference type="PROSITE-ProRule" id="PRU00316"/>
    </source>
</evidence>
<evidence type="ECO:0000255" key="6">
    <source>
        <dbReference type="PROSITE-ProRule" id="PRU00478"/>
    </source>
</evidence>
<evidence type="ECO:0000255" key="7">
    <source>
        <dbReference type="PROSITE-ProRule" id="PRU00479"/>
    </source>
</evidence>
<evidence type="ECO:0000256" key="8">
    <source>
        <dbReference type="SAM" id="MobiDB-lite"/>
    </source>
</evidence>
<evidence type="ECO:0000269" key="9">
    <source>
    </source>
</evidence>
<evidence type="ECO:0000269" key="10">
    <source>
    </source>
</evidence>
<evidence type="ECO:0000269" key="11">
    <source>
    </source>
</evidence>
<evidence type="ECO:0000269" key="12">
    <source>
    </source>
</evidence>
<evidence type="ECO:0000269" key="13">
    <source>
    </source>
</evidence>
<evidence type="ECO:0000269" key="14">
    <source>
    </source>
</evidence>
<evidence type="ECO:0000269" key="15">
    <source>
    </source>
</evidence>
<evidence type="ECO:0000269" key="16">
    <source>
    </source>
</evidence>
<evidence type="ECO:0000269" key="17">
    <source>
    </source>
</evidence>
<evidence type="ECO:0000269" key="18">
    <source>
    </source>
</evidence>
<evidence type="ECO:0000269" key="19">
    <source>
    </source>
</evidence>
<evidence type="ECO:0000269" key="20">
    <source>
    </source>
</evidence>
<evidence type="ECO:0000269" key="21">
    <source>
    </source>
</evidence>
<evidence type="ECO:0000269" key="22">
    <source>
    </source>
</evidence>
<evidence type="ECO:0000269" key="23">
    <source>
    </source>
</evidence>
<evidence type="ECO:0000269" key="24">
    <source>
    </source>
</evidence>
<evidence type="ECO:0000269" key="25">
    <source>
    </source>
</evidence>
<evidence type="ECO:0000269" key="26">
    <source>
    </source>
</evidence>
<evidence type="ECO:0000269" key="27">
    <source>
    </source>
</evidence>
<evidence type="ECO:0000269" key="28">
    <source>
    </source>
</evidence>
<evidence type="ECO:0000269" key="29">
    <source>
    </source>
</evidence>
<evidence type="ECO:0000269" key="30">
    <source>
    </source>
</evidence>
<evidence type="ECO:0000269" key="31">
    <source>
    </source>
</evidence>
<evidence type="ECO:0000269" key="32">
    <source>
    </source>
</evidence>
<evidence type="ECO:0000269" key="33">
    <source>
    </source>
</evidence>
<evidence type="ECO:0000269" key="34">
    <source>
    </source>
</evidence>
<evidence type="ECO:0000269" key="35">
    <source>
    </source>
</evidence>
<evidence type="ECO:0000269" key="36">
    <source>
    </source>
</evidence>
<evidence type="ECO:0000269" key="37">
    <source>
    </source>
</evidence>
<evidence type="ECO:0000269" key="38">
    <source>
    </source>
</evidence>
<evidence type="ECO:0000269" key="39">
    <source>
    </source>
</evidence>
<evidence type="ECO:0000269" key="40">
    <source>
    </source>
</evidence>
<evidence type="ECO:0000269" key="41">
    <source>
    </source>
</evidence>
<evidence type="ECO:0000269" key="42">
    <source>
    </source>
</evidence>
<evidence type="ECO:0000269" key="43">
    <source>
    </source>
</evidence>
<evidence type="ECO:0000269" key="44">
    <source>
    </source>
</evidence>
<evidence type="ECO:0000269" key="45">
    <source>
    </source>
</evidence>
<evidence type="ECO:0000269" key="46">
    <source>
    </source>
</evidence>
<evidence type="ECO:0000269" key="47">
    <source>
    </source>
</evidence>
<evidence type="ECO:0000269" key="48">
    <source>
    </source>
</evidence>
<evidence type="ECO:0000269" key="49">
    <source>
    </source>
</evidence>
<evidence type="ECO:0000269" key="50">
    <source>
    </source>
</evidence>
<evidence type="ECO:0000269" key="51">
    <source>
    </source>
</evidence>
<evidence type="ECO:0000269" key="52">
    <source>
    </source>
</evidence>
<evidence type="ECO:0000269" key="53">
    <source>
    </source>
</evidence>
<evidence type="ECO:0000269" key="54">
    <source>
    </source>
</evidence>
<evidence type="ECO:0000269" key="55">
    <source>
    </source>
</evidence>
<evidence type="ECO:0000269" key="56">
    <source>
    </source>
</evidence>
<evidence type="ECO:0000269" key="57">
    <source>
    </source>
</evidence>
<evidence type="ECO:0000269" key="58">
    <source>
    </source>
</evidence>
<evidence type="ECO:0000269" key="59">
    <source ref="4"/>
</evidence>
<evidence type="ECO:0000303" key="60">
    <source>
    </source>
</evidence>
<evidence type="ECO:0000305" key="61"/>
<evidence type="ECO:0000305" key="62">
    <source>
    </source>
</evidence>
<evidence type="ECO:0000305" key="63">
    <source>
    </source>
</evidence>
<evidence type="ECO:0000312" key="64">
    <source>
        <dbReference type="HGNC" id="HGNC:3778"/>
    </source>
</evidence>
<evidence type="ECO:0007744" key="65">
    <source>
    </source>
</evidence>
<evidence type="ECO:0007744" key="66">
    <source>
    </source>
</evidence>
<evidence type="ECO:0007744" key="67">
    <source>
    </source>
</evidence>
<evidence type="ECO:0007744" key="68">
    <source>
    </source>
</evidence>
<evidence type="ECO:0007829" key="69">
    <source>
        <dbReference type="PDB" id="1E88"/>
    </source>
</evidence>
<evidence type="ECO:0007829" key="70">
    <source>
        <dbReference type="PDB" id="1E8B"/>
    </source>
</evidence>
<evidence type="ECO:0007829" key="71">
    <source>
        <dbReference type="PDB" id="1FNF"/>
    </source>
</evidence>
<evidence type="ECO:0007829" key="72">
    <source>
        <dbReference type="PDB" id="1O9A"/>
    </source>
</evidence>
<evidence type="ECO:0007829" key="73">
    <source>
        <dbReference type="PDB" id="1OWW"/>
    </source>
</evidence>
<evidence type="ECO:0007829" key="74">
    <source>
        <dbReference type="PDB" id="1Q38"/>
    </source>
</evidence>
<evidence type="ECO:0007829" key="75">
    <source>
        <dbReference type="PDB" id="1QGB"/>
    </source>
</evidence>
<evidence type="ECO:0007829" key="76">
    <source>
        <dbReference type="PDB" id="2CG7"/>
    </source>
</evidence>
<evidence type="ECO:0007829" key="77">
    <source>
        <dbReference type="PDB" id="2EC3"/>
    </source>
</evidence>
<evidence type="ECO:0007829" key="78">
    <source>
        <dbReference type="PDB" id="2FN2"/>
    </source>
</evidence>
<evidence type="ECO:0007829" key="79">
    <source>
        <dbReference type="PDB" id="2GEE"/>
    </source>
</evidence>
<evidence type="ECO:0007829" key="80">
    <source>
        <dbReference type="PDB" id="2H41"/>
    </source>
</evidence>
<evidence type="ECO:0007829" key="81">
    <source>
        <dbReference type="PDB" id="2N1K"/>
    </source>
</evidence>
<evidence type="ECO:0007829" key="82">
    <source>
        <dbReference type="PDB" id="2RKY"/>
    </source>
</evidence>
<evidence type="ECO:0007829" key="83">
    <source>
        <dbReference type="PDB" id="3EJH"/>
    </source>
</evidence>
<evidence type="ECO:0007829" key="84">
    <source>
        <dbReference type="PDB" id="3M7P"/>
    </source>
</evidence>
<evidence type="ECO:0007829" key="85">
    <source>
        <dbReference type="PDB" id="3MQL"/>
    </source>
</evidence>
<evidence type="ECO:0007829" key="86">
    <source>
        <dbReference type="PDB" id="3R8Q"/>
    </source>
</evidence>
<evidence type="ECO:0007829" key="87">
    <source>
        <dbReference type="PDB" id="3T1W"/>
    </source>
</evidence>
<evidence type="ECO:0007829" key="88">
    <source>
        <dbReference type="PDB" id="4LXO"/>
    </source>
</evidence>
<evidence type="ECO:0007829" key="89">
    <source>
        <dbReference type="PDB" id="5DC9"/>
    </source>
</evidence>
<evidence type="ECO:0007829" key="90">
    <source>
        <dbReference type="PDB" id="5M0A"/>
    </source>
</evidence>
<evidence type="ECO:0007829" key="91">
    <source>
        <dbReference type="PDB" id="5N47"/>
    </source>
</evidence>
<evidence type="ECO:0007829" key="92">
    <source>
        <dbReference type="PDB" id="5N48"/>
    </source>
</evidence>
<evidence type="ECO:0007829" key="93">
    <source>
        <dbReference type="PDB" id="6HNF"/>
    </source>
</evidence>
<evidence type="ECO:0007829" key="94">
    <source>
        <dbReference type="PDB" id="6MFA"/>
    </source>
</evidence>
<evidence type="ECO:0007829" key="95">
    <source>
        <dbReference type="PDB" id="6XAX"/>
    </source>
</evidence>
<evidence type="ECO:0007829" key="96">
    <source>
        <dbReference type="PDB" id="7NWL"/>
    </source>
</evidence>
<evidence type="ECO:0007829" key="97">
    <source>
        <dbReference type="PDB" id="8PEQ"/>
    </source>
</evidence>
<proteinExistence type="evidence at protein level"/>
<reference key="1">
    <citation type="journal article" date="2001" name="Breast Cancer Res.">
        <title>Phenotypic and genetic alterations in mammary stroma: implications for tumour progression.</title>
        <authorList>
            <person name="Schor S.L."/>
            <person name="Schor A.M."/>
        </authorList>
    </citation>
    <scope>NUCLEOTIDE SEQUENCE [MRNA] (ISOFORMS 2 AND 16)</scope>
</reference>
<reference key="2">
    <citation type="journal article" date="2005" name="Cancer Res.">
        <title>The expression of migration stimulating factor, a potent oncofetal cytokine, is uniquely controlled by 3'-untranslated region-dependent nuclear sequestration of its precursor messenger RNA.</title>
        <authorList>
            <person name="Kay R.A."/>
            <person name="Ellis I.R."/>
            <person name="Jones S.J."/>
            <person name="Perrier S."/>
            <person name="Florence M.M."/>
            <person name="Schor A.M."/>
            <person name="Schor S.L."/>
        </authorList>
    </citation>
    <scope>NUCLEOTIDE SEQUENCE [MRNA] (ISOFORM 16)</scope>
</reference>
<reference key="3">
    <citation type="journal article" date="2005" name="DNA Res.">
        <title>Vector-capping: a simple method for preparing a high-quality full-length cDNA library.</title>
        <authorList>
            <person name="Kato S."/>
            <person name="Ohtoko K."/>
            <person name="Ohtake H."/>
            <person name="Kimura T."/>
        </authorList>
    </citation>
    <scope>NUCLEOTIDE SEQUENCE [MRNA] (ISOFORM 14)</scope>
    <scope>VARIANTS PRO-817 AND ILE-2261</scope>
    <source>
        <tissue>Retinal pigment epithelium</tissue>
    </source>
</reference>
<reference key="4">
    <citation type="submission" date="2005-03" db="EMBL/GenBank/DDBJ databases">
        <authorList>
            <person name="Totoki Y."/>
            <person name="Toyoda A."/>
            <person name="Takeda T."/>
            <person name="Sakaki Y."/>
            <person name="Tanaka A."/>
            <person name="Yokoyama S."/>
            <person name="Ohara O."/>
            <person name="Nagase T."/>
            <person name="Kikuno R.F."/>
        </authorList>
    </citation>
    <scope>NUCLEOTIDE SEQUENCE [LARGE SCALE MRNA] (ISOFORM 14)</scope>
    <scope>VARIANTS LEU-15; PRO-817 AND ILE-2261</scope>
    <source>
        <tissue>Aortic endothelium</tissue>
    </source>
</reference>
<reference key="5">
    <citation type="journal article" date="2007" name="BMC Genomics">
        <title>The full-ORF clone resource of the German cDNA consortium.</title>
        <authorList>
            <person name="Bechtel S."/>
            <person name="Rosenfelder H."/>
            <person name="Duda A."/>
            <person name="Schmidt C.P."/>
            <person name="Ernst U."/>
            <person name="Wellenreuther R."/>
            <person name="Mehrle A."/>
            <person name="Schuster C."/>
            <person name="Bahr A."/>
            <person name="Bloecker H."/>
            <person name="Heubner D."/>
            <person name="Hoerlein A."/>
            <person name="Michel G."/>
            <person name="Wedler H."/>
            <person name="Koehrer K."/>
            <person name="Ottenwaelder B."/>
            <person name="Poustka A."/>
            <person name="Wiemann S."/>
            <person name="Schupp I."/>
        </authorList>
    </citation>
    <scope>NUCLEOTIDE SEQUENCE [LARGE SCALE MRNA] (ISOFORMS 3; 7; 8; 9; 10; 13; 14; 15 AND 16)</scope>
    <scope>VARIANTS LEU-15; PRO-817 AND ILE-2261</scope>
    <source>
        <tissue>Amygdala</tissue>
        <tissue>Cervix</tissue>
        <tissue>Colon endothelium</tissue>
        <tissue>Endometrial tumor</tissue>
        <tissue>Uterine endothelium</tissue>
    </source>
</reference>
<reference key="6">
    <citation type="journal article" date="2005" name="Nature">
        <title>Generation and annotation of the DNA sequences of human chromosomes 2 and 4.</title>
        <authorList>
            <person name="Hillier L.W."/>
            <person name="Graves T.A."/>
            <person name="Fulton R.S."/>
            <person name="Fulton L.A."/>
            <person name="Pepin K.H."/>
            <person name="Minx P."/>
            <person name="Wagner-McPherson C."/>
            <person name="Layman D."/>
            <person name="Wylie K."/>
            <person name="Sekhon M."/>
            <person name="Becker M.C."/>
            <person name="Fewell G.A."/>
            <person name="Delehaunty K.D."/>
            <person name="Miner T.L."/>
            <person name="Nash W.E."/>
            <person name="Kremitzki C."/>
            <person name="Oddy L."/>
            <person name="Du H."/>
            <person name="Sun H."/>
            <person name="Bradshaw-Cordum H."/>
            <person name="Ali J."/>
            <person name="Carter J."/>
            <person name="Cordes M."/>
            <person name="Harris A."/>
            <person name="Isak A."/>
            <person name="van Brunt A."/>
            <person name="Nguyen C."/>
            <person name="Du F."/>
            <person name="Courtney L."/>
            <person name="Kalicki J."/>
            <person name="Ozersky P."/>
            <person name="Abbott S."/>
            <person name="Armstrong J."/>
            <person name="Belter E.A."/>
            <person name="Caruso L."/>
            <person name="Cedroni M."/>
            <person name="Cotton M."/>
            <person name="Davidson T."/>
            <person name="Desai A."/>
            <person name="Elliott G."/>
            <person name="Erb T."/>
            <person name="Fronick C."/>
            <person name="Gaige T."/>
            <person name="Haakenson W."/>
            <person name="Haglund K."/>
            <person name="Holmes A."/>
            <person name="Harkins R."/>
            <person name="Kim K."/>
            <person name="Kruchowski S.S."/>
            <person name="Strong C.M."/>
            <person name="Grewal N."/>
            <person name="Goyea E."/>
            <person name="Hou S."/>
            <person name="Levy A."/>
            <person name="Martinka S."/>
            <person name="Mead K."/>
            <person name="McLellan M.D."/>
            <person name="Meyer R."/>
            <person name="Randall-Maher J."/>
            <person name="Tomlinson C."/>
            <person name="Dauphin-Kohlberg S."/>
            <person name="Kozlowicz-Reilly A."/>
            <person name="Shah N."/>
            <person name="Swearengen-Shahid S."/>
            <person name="Snider J."/>
            <person name="Strong J.T."/>
            <person name="Thompson J."/>
            <person name="Yoakum M."/>
            <person name="Leonard S."/>
            <person name="Pearman C."/>
            <person name="Trani L."/>
            <person name="Radionenko M."/>
            <person name="Waligorski J.E."/>
            <person name="Wang C."/>
            <person name="Rock S.M."/>
            <person name="Tin-Wollam A.-M."/>
            <person name="Maupin R."/>
            <person name="Latreille P."/>
            <person name="Wendl M.C."/>
            <person name="Yang S.-P."/>
            <person name="Pohl C."/>
            <person name="Wallis J.W."/>
            <person name="Spieth J."/>
            <person name="Bieri T.A."/>
            <person name="Berkowicz N."/>
            <person name="Nelson J.O."/>
            <person name="Osborne J."/>
            <person name="Ding L."/>
            <person name="Meyer R."/>
            <person name="Sabo A."/>
            <person name="Shotland Y."/>
            <person name="Sinha P."/>
            <person name="Wohldmann P.E."/>
            <person name="Cook L.L."/>
            <person name="Hickenbotham M.T."/>
            <person name="Eldred J."/>
            <person name="Williams D."/>
            <person name="Jones T.A."/>
            <person name="She X."/>
            <person name="Ciccarelli F.D."/>
            <person name="Izaurralde E."/>
            <person name="Taylor J."/>
            <person name="Schmutz J."/>
            <person name="Myers R.M."/>
            <person name="Cox D.R."/>
            <person name="Huang X."/>
            <person name="McPherson J.D."/>
            <person name="Mardis E.R."/>
            <person name="Clifton S.W."/>
            <person name="Warren W.C."/>
            <person name="Chinwalla A.T."/>
            <person name="Eddy S.R."/>
            <person name="Marra M.A."/>
            <person name="Ovcharenko I."/>
            <person name="Furey T.S."/>
            <person name="Miller W."/>
            <person name="Eichler E.E."/>
            <person name="Bork P."/>
            <person name="Suyama M."/>
            <person name="Torrents D."/>
            <person name="Waterston R.H."/>
            <person name="Wilson R.K."/>
        </authorList>
    </citation>
    <scope>NUCLEOTIDE SEQUENCE [LARGE SCALE GENOMIC DNA]</scope>
</reference>
<reference key="7">
    <citation type="submission" date="2005-07" db="EMBL/GenBank/DDBJ databases">
        <authorList>
            <person name="Mural R.J."/>
            <person name="Istrail S."/>
            <person name="Sutton G."/>
            <person name="Florea L."/>
            <person name="Halpern A.L."/>
            <person name="Mobarry C.M."/>
            <person name="Lippert R."/>
            <person name="Walenz B."/>
            <person name="Shatkay H."/>
            <person name="Dew I."/>
            <person name="Miller J.R."/>
            <person name="Flanigan M.J."/>
            <person name="Edwards N.J."/>
            <person name="Bolanos R."/>
            <person name="Fasulo D."/>
            <person name="Halldorsson B.V."/>
            <person name="Hannenhalli S."/>
            <person name="Turner R."/>
            <person name="Yooseph S."/>
            <person name="Lu F."/>
            <person name="Nusskern D.R."/>
            <person name="Shue B.C."/>
            <person name="Zheng X.H."/>
            <person name="Zhong F."/>
            <person name="Delcher A.L."/>
            <person name="Huson D.H."/>
            <person name="Kravitz S.A."/>
            <person name="Mouchard L."/>
            <person name="Reinert K."/>
            <person name="Remington K.A."/>
            <person name="Clark A.G."/>
            <person name="Waterman M.S."/>
            <person name="Eichler E.E."/>
            <person name="Adams M.D."/>
            <person name="Hunkapiller M.W."/>
            <person name="Myers E.W."/>
            <person name="Venter J.C."/>
        </authorList>
    </citation>
    <scope>NUCLEOTIDE SEQUENCE [LARGE SCALE GENOMIC DNA]</scope>
    <scope>VARIANTS LEU-15; PRO-817 AND ILE-2261</scope>
</reference>
<reference key="8">
    <citation type="journal article" date="2004" name="Genome Res.">
        <title>The status, quality, and expansion of the NIH full-length cDNA project: the Mammalian Gene Collection (MGC).</title>
        <authorList>
            <consortium name="The MGC Project Team"/>
        </authorList>
    </citation>
    <scope>NUCLEOTIDE SEQUENCE [LARGE SCALE MRNA] (ISOFORM 10)</scope>
    <scope>VARIANTS LEU-15; PRO-817 AND ILE-2261</scope>
</reference>
<reference key="9">
    <citation type="journal article" date="1986" name="FEBS Lett.">
        <title>Human fibronectin is synthesized as a pre-propolypeptide.</title>
        <authorList>
            <person name="Gutman A."/>
            <person name="Yamada K.M."/>
            <person name="Kornblihtt A.R."/>
        </authorList>
    </citation>
    <scope>NUCLEOTIDE SEQUENCE [MRNA] OF 1-38</scope>
    <source>
        <tissue>Mammary cancer</tissue>
    </source>
</reference>
<reference key="10">
    <citation type="journal article" date="1987" name="Proc. Natl. Acad. Sci. U.S.A.">
        <title>Cloning and analysis of the promotor region of the human fibronectin gene.</title>
        <authorList>
            <person name="Dean D.C."/>
            <person name="Bowlus C.L."/>
            <person name="Bourgeois S."/>
        </authorList>
    </citation>
    <scope>NUCLEOTIDE SEQUENCE [GENOMIC DNA] OF 1-49</scope>
    <scope>VARIANT LEU-15</scope>
</reference>
<reference key="11">
    <citation type="journal article" date="1985" name="EMBO J.">
        <title>Primary structure of human fibronectin: differential splicing may generate at least 10 polypeptides from a single gene.</title>
        <authorList>
            <person name="Kornblihtt A.R."/>
            <person name="Umezawa K."/>
            <person name="Vibe-Pedersen K."/>
            <person name="Baralle F.E."/>
        </authorList>
    </citation>
    <scope>NUCLEOTIDE SEQUENCE [MRNA] OF 28-2386 (ISOFORM 3)</scope>
    <scope>VARIANTS PRO-817 AND ILE-2261</scope>
    <source>
        <tissue>Fibroblast</tissue>
    </source>
</reference>
<reference key="12">
    <citation type="journal article" date="1983" name="J. Biol. Chem.">
        <title>Primary structure of human plasma fibronectin. The 29,000-dalton NH2-terminal domain.</title>
        <authorList>
            <person name="Garcia-Pardo A."/>
            <person name="Pearlstein E."/>
            <person name="Frangione B."/>
        </authorList>
    </citation>
    <scope>PROTEIN SEQUENCE OF 32-290</scope>
    <scope>CLEAVAGE OF INITIATOR METHIONINE</scope>
    <scope>PYROGLUTAMATE FORMATION AT GLN-32</scope>
    <source>
        <tissue>Plasma</tissue>
    </source>
</reference>
<reference key="13">
    <citation type="submission" date="1995-12" db="EMBL/GenBank/DDBJ databases">
        <authorList>
            <person name="Godfrey H.P."/>
            <person name="Ebrahim A.A."/>
        </authorList>
    </citation>
    <scope>NUCLEOTIDE SEQUENCE [MRNA] OF 103-481 (ISOFORMS 1/3/4/5/6/7/8/9/10/11/12/13/14/15)</scope>
    <scope>NUCLEOTIDE SEQUENCE [MRNA] OF 1116-1422 (ISOFORMS 1/3/4/5/6/8/9/10/14)</scope>
    <scope>NUCLEOTIDE SEQUENCE [MRNA] OF 1238-2160 (ISOFORMS 9 AND 12)</scope>
    <scope>NUCLEOTIDE SEQUENCE [MRNA] OF 1540-1916 (ISOFORMS 8/9/10/13/14)</scope>
    <scope>NUCLEOTIDE SEQUENCE [MRNA] OF 2010-2252 (ISOFORMS 3/7/14)</scope>
    <scope>NUCLEOTIDE SEQUENCE [MRNA] OF 2319-2477 (ISOFORMS 1/3/6/7/8/9/10/11/12/13/14/15)</scope>
    <source>
        <tissue>Peripheral blood T-cell</tissue>
        <tissue>Umbilical vein endothelial cell</tissue>
    </source>
</reference>
<reference key="14">
    <citation type="journal article" date="1993" name="Infect. Immun.">
        <title>Mechanism of interaction of the 85B secreted protein of Mycobacterium bovis with fibronectin.</title>
        <authorList>
            <person name="Peake P."/>
            <person name="Gooley A."/>
            <person name="Britton W.J."/>
        </authorList>
    </citation>
    <scope>PROTEIN SEQUENCE OF 291-302</scope>
    <scope>BINDING TO M.BOVIS ANTIGEN 85B (FBPB) (MICROBIAL INFECTION)</scope>
</reference>
<reference key="15">
    <citation type="journal article" date="1986" name="EMBO J.">
        <title>Mapping the collagen-binding site of human fibronectin by expression in Escherichia coli.</title>
        <authorList>
            <person name="Owens R.J."/>
            <person name="Baralle F.E."/>
        </authorList>
    </citation>
    <scope>PROTEIN SEQUENCE OF 309-608</scope>
    <scope>FUNCTION</scope>
    <scope>COLLAGEN-BINDING</scope>
</reference>
<reference key="16">
    <citation type="journal article" date="1985" name="J. Biol. Chem.">
        <title>Primary structure of a DNA- and heparin-binding domain (Domain III) in human plasma fibronectin.</title>
        <authorList>
            <person name="Calaycay J."/>
            <person name="Pande H."/>
            <person name="Lee T."/>
            <person name="Borsi L."/>
            <person name="Siri A."/>
            <person name="Shively J.E."/>
            <person name="Zardi L."/>
        </authorList>
    </citation>
    <scope>PROTEIN SEQUENCE OF 616-705</scope>
    <scope>FUNCTION</scope>
</reference>
<reference key="17">
    <citation type="journal article" date="2007" name="FEBS J.">
        <title>Identification of novel fibronectin fragments detected specifically in juvenile urine.</title>
        <authorList>
            <person name="Iida R."/>
            <person name="Yasuda T."/>
            <person name="Kishi K."/>
        </authorList>
    </citation>
    <scope>PROTEIN SEQUENCE OF 723-911</scope>
    <scope>TISSUE SPECIFICITY</scope>
    <scope>DEVELOPMENTAL STAGE</scope>
    <scope>GLYCOSYLATION AT ASN-877</scope>
    <scope>VARIANT PRO-817</scope>
    <source>
        <tissue>Urine</tissue>
    </source>
</reference>
<reference key="18">
    <citation type="journal article" date="1984" name="Nucleic Acids Res.">
        <title>Human fibronectin: cell specific alternative mRNA splicing generates polypeptide chains differing in the number of internal repeats.</title>
        <authorList>
            <person name="Kornblihtt A.R."/>
            <person name="Vibe-Pedersen K."/>
            <person name="Baralle F.E."/>
        </authorList>
    </citation>
    <scope>NUCLEOTIDE SEQUENCE [MRNA] OF 973-2386 (ISOFORM 3)</scope>
    <scope>VARIANT ILE-2261</scope>
</reference>
<reference key="19">
    <citation type="journal article" date="1988" name="Nucleic Acids Res.">
        <title>Sequence analysis and in vivo expression show that alternative splicing of ED-B and ED-A regions of the human fibronectin gene are independent events.</title>
        <authorList>
            <person name="Paolella G."/>
            <person name="Henchcliffe C."/>
            <person name="Sebastio G."/>
            <person name="Baralle F.E."/>
        </authorList>
    </citation>
    <scope>NUCLEOTIDE SEQUENCE [GENOMIC DNA] OF 1232-1378</scope>
    <scope>NUCLEOTIDE SEQUENCE [GENOMIC DNA] OF 1685-1873</scope>
</reference>
<reference key="20">
    <citation type="journal article" date="1987" name="EMBO J.">
        <title>Transformed human cells produce a new fibronectin isoform by preferential alternative splicing of a previously unobserved exon.</title>
        <authorList>
            <person name="Zardi L."/>
            <person name="Carnemolla B."/>
            <person name="Siri A."/>
            <person name="Petersen T.E."/>
            <person name="Paolella G."/>
            <person name="Sebastio G."/>
            <person name="Baralle F.E."/>
        </authorList>
    </citation>
    <scope>PROTEIN SEQUENCE OF 1342-1349 AND 1352-1360 (ISOFORMS 7/11/13/15)</scope>
</reference>
<reference key="21">
    <citation type="journal article" date="1987" name="Proc. Natl. Acad. Sci. U.S.A.">
        <title>Identification of a third region of cell-specific alternative splicing in human fibronectin mRNA.</title>
        <authorList>
            <person name="Gutman A."/>
            <person name="Kornblihtt A.R."/>
        </authorList>
    </citation>
    <scope>NUCLEOTIDE SEQUENCE [GENOMIC DNA] OF 1257-1365</scope>
</reference>
<reference key="22">
    <citation type="journal article" date="1982" name="J. Biol. Chem.">
        <title>The cell attachment domain of fibronectin. Determination of the primary structure.</title>
        <authorList>
            <person name="Pierschbacher M.D."/>
            <person name="Ruoslahti E."/>
            <person name="Sundelin J."/>
            <person name="Lind P."/>
            <person name="Peterson P.A."/>
        </authorList>
    </citation>
    <scope>PROTEIN SEQUENCE OF 1532-1639</scope>
</reference>
<reference key="23">
    <citation type="journal article" date="1983" name="J. Biol. Chem.">
        <title>Molecular cloning and nucleotide sequence of a cDNA clone coding for the cell attachment domain in human fibronectin.</title>
        <authorList>
            <person name="Oldberg A."/>
            <person name="Linney E."/>
            <person name="Ruoslahti E."/>
        </authorList>
    </citation>
    <scope>NUCLEOTIDE SEQUENCE [MRNA] OF 1539-1631</scope>
</reference>
<reference key="24">
    <citation type="journal article" date="1986" name="J. Biol. Chem.">
        <title>Evolution of the fibronectin gene. Exon structure of cell attachment domain.</title>
        <authorList>
            <person name="Oldberg A."/>
            <person name="Ruoslahti E."/>
        </authorList>
    </citation>
    <scope>NUCLEOTIDE SEQUENCE [GENOMIC DNA] OF 1539-1631</scope>
</reference>
<reference key="25">
    <citation type="journal article" date="1987" name="Biochem. J.">
        <title>Primary structure of human plasma fibronectin. Characterization of a 38 kDa domain containing the C-terminal heparin-binding site (Hep III site) and a region of molecular heterogeneity.</title>
        <authorList>
            <person name="Garcia-Pardo A."/>
            <person name="Rostagno A."/>
            <person name="Frangione B."/>
        </authorList>
    </citation>
    <scope>PROTEIN SEQUENCE OF 1680-2149 (ISOFORMS 8/14)</scope>
    <scope>FUNCTION</scope>
</reference>
<reference key="26">
    <citation type="journal article" date="1985" name="Biochemistry">
        <title>Human cellular fibronectin: comparison of the carboxyl-terminal portion with rat identifies primary structural domains separated by hypervariable regions.</title>
        <authorList>
            <person name="Bernard M.P."/>
            <person name="Kolbe M."/>
            <person name="Weil D."/>
            <person name="Chu M.-L."/>
        </authorList>
    </citation>
    <scope>NUCLEOTIDE SEQUENCE [MRNA] OF 1685-2477 (ISOFORMS 1/11/15)</scope>
    <scope>VARIANT ILE-2261</scope>
</reference>
<reference key="27">
    <citation type="journal article" date="1991" name="Biochem. J.">
        <title>Human plasma fibronectin. Demonstration of structural differences between the A- and B-chains in the III CS region.</title>
        <authorList>
            <person name="Tressel T."/>
            <person name="McCarthy J.B."/>
            <person name="Calaycay J."/>
            <person name="Lee T.D."/>
            <person name="Legesse K."/>
            <person name="Shively J.E."/>
            <person name="Pande H."/>
        </authorList>
    </citation>
    <scope>PROTEIN SEQUENCE OF 1705-1719; 1821-1839; 1847-1850; 1894-1902; 1951-2014; 2021-2036; 2042-2063 AND 2073-2080 (ISOFORMS 1/3/4/5/6/7/8/9/10/11/12/13/14/15/17)</scope>
    <scope>PROTEIN SEQUENCE OF 2082-2094 (ISOFORMS 1/3/7/8/11/14/15)</scope>
    <scope>PROTEIN SEQUENCE OF 2111-2129 (ISOFORMS 1/3/7/8/9/11/12/14/15/17)</scope>
    <scope>PROTEIN SEQUENCE OF 2151-2161 (ISOFORMS 1/3/7/8/9/11/12/14/15)</scope>
    <scope>PROTEIN SEQUENCE OF 2162-2222 (ISOFORMS 1/8/11/15)</scope>
    <scope>PROTEIN SEQUENCE OF 2241-2271 (ISOFORMS 1/3/5/7/8/9/10/11/12/13/14/15/17)</scope>
    <scope>PROTEIN SEQUENCE OF 2276-2296 (ISOFORMS 1/3/7/8/9/10/11/12/13/14/15/17)</scope>
    <scope>PROTEIN SEQUENCE OF 2322-2333 (ISOFORMS 1/3/6/7/8/9/10/11/12/13/14/15/17)</scope>
    <scope>VARIANT ILE-2261</scope>
    <scope>IDENTIFICATION BY MASS SPECTROMETRY</scope>
    <source>
        <tissue>Plasma</tissue>
    </source>
</reference>
<reference key="28">
    <citation type="journal article" date="1984" name="EMBO J.">
        <title>Human fibronectin: molecular cloning evidence for two mRNA species differing by an internal segment coding for a structural domain.</title>
        <authorList>
            <person name="Kornblihtt A.R."/>
            <person name="Vibe-Pedersen K."/>
            <person name="Baralle F.E."/>
        </authorList>
    </citation>
    <scope>NUCLEOTIDE SEQUENCE [MRNA] OF 1632-1901 (ISOFORMS 1/3/6/7/11/15/17)</scope>
    <scope>NUCLEOTIDE SEQUENCE [MRNA] OF 1715-1818 (ISOFORMS 8/9/10/12/13/14)</scope>
</reference>
<reference key="29">
    <citation type="journal article" date="1986" name="Biochemistry">
        <title>Human liver fibronectin complementary DNAs: identification of two different messenger RNAs possibly encoding the alpha and beta subunits of plasma fibronectin.</title>
        <authorList>
            <person name="Sekiguchi K."/>
            <person name="Klos A.M."/>
            <person name="Kurachi K."/>
            <person name="Yoshitake S."/>
            <person name="Hakomori S."/>
        </authorList>
    </citation>
    <scope>NUCLEOTIDE SEQUENCE [MRNA] OF 1713-2218 (ISOFORMS 9/12)</scope>
</reference>
<reference key="30">
    <citation type="journal article" date="2002" name="Osteoarthritis Cartilage">
        <title>Novel cartilage-specific splice variants of fibronectin.</title>
        <authorList>
            <person name="Parker A.E."/>
            <person name="Boutell J."/>
            <person name="Carr A."/>
            <person name="Maciewicz R.A."/>
        </authorList>
    </citation>
    <scope>NUCLEOTIDE SEQUENCE [MRNA] OF 1879-2477 (ISOFORM 4)</scope>
    <scope>NUCLEOTIDE SEQUENCE [MRNA] OF 1879-2400 (ISOFORMS 5 AND 6)</scope>
    <scope>VARIANT ILE-2261</scope>
    <source>
        <tissue>Cartilage</tissue>
    </source>
</reference>
<reference key="31">
    <citation type="journal article" date="1985" name="FEBS Lett.">
        <title>Isolation and characterization of cDNA clones for human liver fibronectin.</title>
        <authorList>
            <person name="Umezawa K."/>
            <person name="Kornblihtt A.R."/>
            <person name="Baralle F.E."/>
        </authorList>
    </citation>
    <scope>NUCLEOTIDE SEQUENCE [MRNA] OF 2039-2157 (ISOFORMS 1/3/7/8/11/14/15)</scope>
</reference>
<reference key="32">
    <citation type="journal article" date="1986" name="FEBS Lett.">
        <title>Donor and acceptor splice signals within an exon of the human fibronectin gene: a new type of differential splicing.</title>
        <authorList>
            <person name="Vibe-Pedersen K."/>
            <person name="Magnusson S."/>
            <person name="Baralle F.E."/>
        </authorList>
    </citation>
    <scope>NUCLEOTIDE SEQUENCE [GENOMIC DNA] OF 2083-2238</scope>
</reference>
<reference key="33">
    <citation type="journal article" date="1985" name="J. Biol. Chem.">
        <title>Primary structure of human plasma fibronectin. Characterization of a 31,000-dalton fragment from the COOH-terminal region containing a free sulfhydryl group and a fibrin-binding site.</title>
        <authorList>
            <person name="Garcia-Pardo A."/>
            <person name="Pearlstein E."/>
            <person name="Frangione B."/>
        </authorList>
    </citation>
    <scope>PROTEIN SEQUENCE OF 2162-2447 (ISOFORMS 3/7/9/12/14/17)</scope>
    <scope>VARIANT ILE-2261</scope>
</reference>
<reference key="34">
    <citation type="journal article" date="1983" name="Proc. Natl. Acad. Sci. U.S.A.">
        <title>Isolation and characterization of cDNA clones for human and bovine fibronectins.</title>
        <authorList>
            <person name="Kornblihtt A.R."/>
            <person name="Vibe-Pedersen K."/>
            <person name="Baralle F.E."/>
        </authorList>
    </citation>
    <scope>NUCLEOTIDE SEQUENCE [MRNA] OF 2382-2477 (ISOFORMS 1/3/5/6/7/8/9/10/11/12/13/14/15/17)</scope>
    <source>
        <tissue>Mammary carcinoma</tissue>
    </source>
</reference>
<reference key="35">
    <citation type="journal article" date="1985" name="Proc. Natl. Acad. Sci. U.S.A.">
        <title>Tyrosine sulfation of proteins from the human hepatoma cell line HepG2.</title>
        <authorList>
            <person name="Liu M.C."/>
            <person name="Yu S."/>
            <person name="Sy J."/>
            <person name="Redman C.M."/>
            <person name="Lipmann F."/>
        </authorList>
    </citation>
    <scope>SULFATION</scope>
</reference>
<reference key="36">
    <citation type="journal article" date="1987" name="J. Biochem.">
        <title>Purification of a young age-related glycoprotein (Ugl-Y) from normal human urine.</title>
        <authorList>
            <person name="Iida R."/>
            <person name="Yasuda T."/>
            <person name="Kishi K."/>
        </authorList>
    </citation>
    <scope>IDENTIFICATION OF UGL-Y1</scope>
    <scope>TISSUE SPECIFICITY</scope>
    <scope>DEVELOPMENTAL STAGE</scope>
    <scope>GLYCOSYLATION</scope>
</reference>
<reference key="37">
    <citation type="journal article" date="1992" name="J. Biol. Chem.">
        <title>Fibulin binds to itself and to the carboxyl-terminal heparin-binding region of fibronectin.</title>
        <authorList>
            <person name="Balbona K."/>
            <person name="Tran H."/>
            <person name="Godyna S."/>
            <person name="Ingham K.C."/>
            <person name="Strickland D.K."/>
            <person name="Argraves W.S."/>
        </authorList>
    </citation>
    <scope>INTERACTION WITH FBLN1</scope>
</reference>
<reference key="38">
    <citation type="journal article" date="1994" name="J. Biol. Chem.">
        <title>Further characterization of the NH2-terminal fibrin-binding site on fibronectin.</title>
        <authorList>
            <person name="Rostagno A."/>
            <person name="Williams M.J."/>
            <person name="Baron M."/>
            <person name="Campbell I.D."/>
            <person name="Gold L.I."/>
        </authorList>
    </citation>
    <scope>FUNCTION</scope>
    <scope>CHARACTERIZATION OF FIBRIN-BINDING SITE 1</scope>
</reference>
<reference key="39">
    <citation type="journal article" date="1994" name="Nature">
        <title>Superfibronectin is a functionally distinct form of fibronectin.</title>
        <authorList>
            <person name="Morla A."/>
            <person name="Zhang Z."/>
            <person name="Ruoslahti E."/>
        </authorList>
    </citation>
    <scope>SUBUNIT</scope>
    <scope>FUNCTION (ANASTELLIN)</scope>
</reference>
<reference key="40">
    <citation type="journal article" date="1998" name="EMBO J.">
        <title>Mac-2 binding protein is a cell-adhesive protein of the extracellular matrix which self-assembles into ring-like structures and binds beta1 integrins, collagens and fibronectin.</title>
        <authorList>
            <person name="Sasaki T."/>
            <person name="Brakebusch C."/>
            <person name="Engel J."/>
            <person name="Timpl R."/>
        </authorList>
    </citation>
    <scope>INTERACTION WITH LGALS3BP</scope>
</reference>
<reference key="41">
    <citation type="journal article" date="2001" name="Mol. Microbiol.">
        <title>The pavA gene of Streptococcus pneumoniae encodes a fibronectin-binding protein that is essential for virulence.</title>
        <authorList>
            <person name="Holmes A.R."/>
            <person name="McNab R."/>
            <person name="Millsap K.W."/>
            <person name="Rohde M."/>
            <person name="Hammerschmidt S."/>
            <person name="Mawdsley J.L."/>
            <person name="Jenkinson H.F."/>
        </authorList>
    </citation>
    <scope>INTERACTION WITH S.PNEUMONIAE FIBRONECTIN-BINDING PROTEIN (MICROBIAL INFECTION)</scope>
</reference>
<reference key="42">
    <citation type="journal article" date="2001" name="Proc. Natl. Acad. Sci. U.S.A.">
        <title>A fibronectin fragment inhibits tumor growth, angiogenesis, and metastasis.</title>
        <authorList>
            <person name="Yi M."/>
            <person name="Ruoslahti E."/>
        </authorList>
    </citation>
    <scope>FUNCTION (ANASTELLIN)</scope>
</reference>
<reference key="43">
    <citation type="journal article" date="2002" name="J. Biol. Chem.">
        <title>The type XIII collagen ectodomain is a 150-nm rod and capable of binding to fibronectin, nidogen-2, perlecan, and heparin.</title>
        <authorList>
            <person name="Tu H."/>
            <person name="Sasaki T."/>
            <person name="Snellman A."/>
            <person name="Gohring W."/>
            <person name="Pirila P."/>
            <person name="Timpl R."/>
            <person name="Pihlajaniemi T."/>
        </authorList>
    </citation>
    <scope>INTERACTION WITH COL13A1</scope>
</reference>
<reference key="44">
    <citation type="journal article" date="2002" name="Matrix Biol.">
        <title>Matrix-matrix interaction of cartilage oligomeric matrix protein and fibronectin.</title>
        <authorList>
            <person name="Di Cesare P.E."/>
            <person name="Chen F.S."/>
            <person name="Moergelin M."/>
            <person name="Carlson C.S."/>
            <person name="Leslie M.P."/>
            <person name="Perris R."/>
            <person name="Fang C."/>
        </authorList>
    </citation>
    <scope>INTERACTION WITH COMP</scope>
</reference>
<reference key="45">
    <citation type="journal article" date="2002" name="Invest. Ophthalmol. Vis. Sci.">
        <title>In vitro localization of TIGR/MYOC in trabecular meshwork extracellular matrix and binding to fibronectin.</title>
        <authorList>
            <person name="Filla M.S."/>
            <person name="Liu X."/>
            <person name="Nguyen T.D."/>
            <person name="Polansky J.R."/>
            <person name="Brandt C.R."/>
            <person name="Kaufman P.L."/>
            <person name="Peters D.M."/>
        </authorList>
    </citation>
    <scope>INTERACTION WITH MYOC</scope>
</reference>
<reference key="46">
    <citation type="journal article" date="2004" name="Proteomics">
        <title>Screening for N-glycosylated proteins by liquid chromatography mass spectrometry.</title>
        <authorList>
            <person name="Bunkenborg J."/>
            <person name="Pilch B.J."/>
            <person name="Podtelejnikov A.V."/>
            <person name="Wisniewski J.R."/>
        </authorList>
    </citation>
    <scope>GLYCOSYLATION [LARGE SCALE ANALYSIS] AT ASN-528</scope>
    <source>
        <tissue>Plasma</tissue>
    </source>
</reference>
<reference key="47">
    <citation type="journal article" date="2005" name="Cancer Res.">
        <title>Anastellin, a fragment of the first type III repeat of fibronectin, inhibits extracellular signal-regulated kinase and causes G(1) arrest in human microvessel endothelial cells.</title>
        <authorList>
            <person name="Ambesi A."/>
            <person name="Klein R.M."/>
            <person name="Pumiglia K.M."/>
            <person name="McKeown-Longo P.J."/>
        </authorList>
    </citation>
    <scope>FUNCTION (ANASTELLIN)</scope>
</reference>
<reference key="48">
    <citation type="journal article" date="2005" name="Glycobiology">
        <title>Differential analysis of site-specific glycans on plasma and cellular fibronectins: application of a hydrophilic affinity method for glycopeptide enrichment.</title>
        <authorList>
            <person name="Tajiri M."/>
            <person name="Yoshida S."/>
            <person name="Wada Y."/>
        </authorList>
    </citation>
    <scope>GLYCOSYLATION AT THR-279; ASN-430; ASN-528; ASN-542; ASN-877; ASN-1007; ASN-1244 AND ASN-2199</scope>
</reference>
<reference key="49">
    <citation type="journal article" date="2005" name="J. Proteome Res.">
        <title>Human plasma N-glycoproteome analysis by immunoaffinity subtraction, hydrazide chemistry, and mass spectrometry.</title>
        <authorList>
            <person name="Liu T."/>
            <person name="Qian W.-J."/>
            <person name="Gritsenko M.A."/>
            <person name="Camp D.G. II"/>
            <person name="Monroe M.E."/>
            <person name="Moore R.J."/>
            <person name="Smith R.D."/>
        </authorList>
    </citation>
    <scope>GLYCOSYLATION [LARGE SCALE ANALYSIS] AT ASN-430; ASN-528; ASN-542; ASN-1007 AND ASN-1244</scope>
    <source>
        <tissue>Plasma</tissue>
    </source>
</reference>
<reference key="50">
    <citation type="journal article" date="2006" name="Cell">
        <title>Global, in vivo, and site-specific phosphorylation dynamics in signaling networks.</title>
        <authorList>
            <person name="Olsen J.V."/>
            <person name="Blagoev B."/>
            <person name="Gnad F."/>
            <person name="Macek B."/>
            <person name="Kumar C."/>
            <person name="Mortensen P."/>
            <person name="Mann M."/>
        </authorList>
    </citation>
    <scope>PHOSPHORYLATION [LARGE SCALE ANALYSIS] AT SER-2475</scope>
    <scope>IDENTIFICATION BY MASS SPECTROMETRY [LARGE SCALE ANALYSIS]</scope>
    <source>
        <tissue>Cervix carcinoma</tissue>
    </source>
</reference>
<reference key="51">
    <citation type="journal article" date="2006" name="Exp. Cell Res.">
        <title>A novel role for fibronectin type I domain in the regulation of human hematopoietic cell adhesiveness through binding to follistatin domains of FLRG and follistatin.</title>
        <authorList>
            <person name="Maguer-Satta V."/>
            <person name="Forissier S."/>
            <person name="Bartholin L."/>
            <person name="Martel S."/>
            <person name="Jeanpierre S."/>
            <person name="Bachelard E."/>
            <person name="Rimokh R."/>
        </authorList>
    </citation>
    <scope>INTERACTION WITH FST3</scope>
</reference>
<reference key="52">
    <citation type="journal article" date="2008" name="Matrix Biol.">
        <title>TSG-6 binds via its CUB_C domain to the cell-binding domain of fibronectin and increases fibronectin matrix assembly.</title>
        <authorList>
            <person name="Kuznetsova S.A."/>
            <person name="Mahoney D.J."/>
            <person name="Martin-Manso G."/>
            <person name="Ali T."/>
            <person name="Nentwich H.A."/>
            <person name="Sipes J.M."/>
            <person name="Zeng B."/>
            <person name="Vogel T."/>
            <person name="Day A.J."/>
            <person name="Roberts D.D."/>
        </authorList>
    </citation>
    <scope>INTERACTION WITH TNFAIP6 AND THBS1</scope>
</reference>
<reference key="53">
    <citation type="journal article" date="2008" name="Proteomics">
        <title>Large-scale phosphoproteome analysis of human liver tissue by enrichment and fractionation of phosphopeptides with strong anion exchange chromatography.</title>
        <authorList>
            <person name="Han G."/>
            <person name="Ye M."/>
            <person name="Zhou H."/>
            <person name="Jiang X."/>
            <person name="Feng S."/>
            <person name="Jiang X."/>
            <person name="Tian R."/>
            <person name="Wan D."/>
            <person name="Zou H."/>
            <person name="Gu J."/>
        </authorList>
    </citation>
    <scope>PHOSPHORYLATION [LARGE SCALE ANALYSIS] AT SER-2475</scope>
    <scope>IDENTIFICATION BY MASS SPECTROMETRY [LARGE SCALE ANALYSIS]</scope>
    <source>
        <tissue>Liver</tissue>
    </source>
</reference>
<reference key="54">
    <citation type="journal article" date="2009" name="J. Proteome Res.">
        <title>Glycoproteomics analysis of human liver tissue by combination of multiple enzyme digestion and hydrazide chemistry.</title>
        <authorList>
            <person name="Chen R."/>
            <person name="Jiang X."/>
            <person name="Sun D."/>
            <person name="Han G."/>
            <person name="Wang F."/>
            <person name="Ye M."/>
            <person name="Wang L."/>
            <person name="Zou H."/>
        </authorList>
    </citation>
    <scope>GLYCOSYLATION [LARGE SCALE ANALYSIS] AT ASN-528 AND ASN-1007</scope>
    <source>
        <tissue>Liver</tissue>
    </source>
</reference>
<reference key="55">
    <citation type="journal article" date="2009" name="Mol. Cell. Proteomics">
        <title>A strategy for precise and large scale identification of core fucosylated glycoproteins.</title>
        <authorList>
            <person name="Jia W."/>
            <person name="Lu Z."/>
            <person name="Fu Y."/>
            <person name="Wang H.P."/>
            <person name="Wang L.H."/>
            <person name="Chi H."/>
            <person name="Yuan Z.F."/>
            <person name="Zheng Z.B."/>
            <person name="Song L.N."/>
            <person name="Han H.H."/>
            <person name="Liang Y.M."/>
            <person name="Wang J.L."/>
            <person name="Cai Y."/>
            <person name="Zhang Y.K."/>
            <person name="Deng Y.L."/>
            <person name="Ying W.T."/>
            <person name="He S.M."/>
            <person name="Qian X.H."/>
        </authorList>
    </citation>
    <scope>GLYCOSYLATION AT ASN-528; ASN-542 AND ASN-1007</scope>
</reference>
<reference key="56">
    <citation type="journal article" date="2009" name="Matrix Biol.">
        <title>Regulation of p38 MAP kinase by anastellin is independent of anastellin's effect on matrix fibronectin.</title>
        <authorList>
            <person name="You R."/>
            <person name="Klein R.M."/>
            <person name="Zheng M."/>
            <person name="McKeown-Longo P.J."/>
        </authorList>
    </citation>
    <scope>FUNCTION (ANASTELLIN)</scope>
    <scope>MUTAGENESIS OF LEU-663 AND TYR-666</scope>
</reference>
<reference key="57">
    <citation type="journal article" date="2012" name="J. Proteome Res.">
        <title>Resveratrol-induced changes of the human adipocyte secretion profile.</title>
        <authorList>
            <person name="Rosenow A."/>
            <person name="Noben J.P."/>
            <person name="Jocken J."/>
            <person name="Kallendrusch S."/>
            <person name="Fischer-Posovszky P."/>
            <person name="Mariman E.C."/>
            <person name="Renes J."/>
        </authorList>
    </citation>
    <scope>IDENTIFICATION BY MASS SPECTROMETRY [LARGE SCALE ANALYSIS]</scope>
</reference>
<reference key="58">
    <citation type="journal article" date="2014" name="J. Proteomics">
        <title>An enzyme assisted RP-RPLC approach for in-depth analysis of human liver phosphoproteome.</title>
        <authorList>
            <person name="Bian Y."/>
            <person name="Song C."/>
            <person name="Cheng K."/>
            <person name="Dong M."/>
            <person name="Wang F."/>
            <person name="Huang J."/>
            <person name="Sun D."/>
            <person name="Wang L."/>
            <person name="Ye M."/>
            <person name="Zou H."/>
        </authorList>
    </citation>
    <scope>PHOSPHORYLATION [LARGE SCALE ANALYSIS] AT THR-2454 AND SER-2475</scope>
    <scope>IDENTIFICATION BY MASS SPECTROMETRY [LARGE SCALE ANALYSIS]</scope>
    <source>
        <tissue>Liver</tissue>
    </source>
</reference>
<reference key="59">
    <citation type="journal article" date="2015" name="Cell">
        <title>A single kinase generates the majority of the secreted phosphoproteome.</title>
        <authorList>
            <person name="Tagliabracci V.S."/>
            <person name="Wiley S.E."/>
            <person name="Guo X."/>
            <person name="Kinch L.N."/>
            <person name="Durrant E."/>
            <person name="Wen J."/>
            <person name="Xiao J."/>
            <person name="Cui J."/>
            <person name="Nguyen K.B."/>
            <person name="Engel J.L."/>
            <person name="Coon J.J."/>
            <person name="Grishin N."/>
            <person name="Pinna L.A."/>
            <person name="Pagliarini D.J."/>
            <person name="Dixon J.E."/>
        </authorList>
    </citation>
    <scope>PHOSPHORYLATION AT SER-2475</scope>
</reference>
<reference key="60">
    <citation type="journal article" date="2018" name="Acta Biomater.">
        <title>Extracellular matrix component expression in human pluripotent stem cell-derived retinal organoids recapitulates retinogenesis in vivo and reveals an important role for IMPG1 and CD44 in the development of photoreceptors and interphotoreceptor matrix.</title>
        <authorList>
            <person name="Felemban M."/>
            <person name="Dorgau B."/>
            <person name="Hunt N.C."/>
            <person name="Hallam D."/>
            <person name="Zerti D."/>
            <person name="Bauer R."/>
            <person name="Ding Y."/>
            <person name="Collin J."/>
            <person name="Steel D."/>
            <person name="Krasnogor N."/>
            <person name="Al-Aama J."/>
            <person name="Lindsay S."/>
            <person name="Mellough C."/>
            <person name="Lako M."/>
        </authorList>
    </citation>
    <scope>DEVELOPMENTAL STAGE</scope>
    <scope>TISSUE SPECIFICITY</scope>
</reference>
<reference key="61">
    <citation type="journal article" date="2016" name="Proc. Natl. Acad. Sci. U.S.A.">
        <title>Structural and functional analysis of an anchorless fibronectin-binding protein FBPS from Gram-positive bacterium Streptococcus suis.</title>
        <authorList>
            <person name="Musyoki A.M."/>
            <person name="Shi Z."/>
            <person name="Xuan C."/>
            <person name="Lu G."/>
            <person name="Qi J."/>
            <person name="Gao F."/>
            <person name="Zheng B."/>
            <person name="Zhang Q."/>
            <person name="Li Y."/>
            <person name="Haywood J."/>
            <person name="Liu C."/>
            <person name="Yan J."/>
            <person name="Shi Y."/>
            <person name="Gao G.F."/>
        </authorList>
    </citation>
    <scope>INTERACTION WITH S.SUIS FIBRONECTIN-BINDING PROTEIN (MICROBIAL INFECTION)</scope>
</reference>
<reference key="62">
    <citation type="journal article" date="2017" name="Am. J. Hum. Genet.">
        <title>Mutations in fibronectin cause a subtype of spondylometaphyseal dysplasia with 'corner fractures'.</title>
        <authorList>
            <consortium name="Baylor-Hopkins Center for Mendelian Genomics"/>
            <person name="Lee C.S."/>
            <person name="Fu H."/>
            <person name="Baratang N."/>
            <person name="Rousseau J."/>
            <person name="Kumra H."/>
            <person name="Sutton V.R."/>
            <person name="Niceta M."/>
            <person name="Ciolfi A."/>
            <person name="Yamamoto G."/>
            <person name="Bertola D."/>
            <person name="Marcelis C.L."/>
            <person name="Lugtenberg D."/>
            <person name="Bartuli A."/>
            <person name="Kim C."/>
            <person name="Hoover-Fong J."/>
            <person name="Sobreira N."/>
            <person name="Pauli R."/>
            <person name="Bacino C."/>
            <person name="Krakow D."/>
            <person name="Parboosingh J."/>
            <person name="Yap P."/>
            <person name="Kariminejad A."/>
            <person name="McDonald M.T."/>
            <person name="Aracena M.I."/>
            <person name="Lausch E."/>
            <person name="Unger S."/>
            <person name="Superti-Furga A."/>
            <person name="Lu J.T."/>
            <person name="Cohn D.H."/>
            <person name="Tartaglia M."/>
            <person name="Lee B.H."/>
            <person name="Reinhardt D.P."/>
            <person name="Campeau P.M."/>
        </authorList>
    </citation>
    <scope>SUBCELLULAR LOCATION</scope>
    <scope>INVOLVEMENT IN SMDCF</scope>
    <scope>VARIANTS SMDCF PHE-87; ARG-123; TRP-225; ASP-240; GLY-260 AND THR-809 DEL</scope>
    <scope>CHARACTERIZATION OF VARIANTS SMDCF PHE-87; ASP-240 AND GLY-260</scope>
</reference>
<reference key="63">
    <citation type="journal article" date="2021" name="Int. Immunol.">
        <title>Blockade of checkpoint ILT3/LILRB4/gp49B binding to fibronectin ameliorates autoimmune disease in BXSB/Yaa mice.</title>
        <authorList>
            <person name="Su M.T."/>
            <person name="Inui M."/>
            <person name="Wong Y.L."/>
            <person name="Takahashi M."/>
            <person name="Sugahara-Tobinai A."/>
            <person name="Ono K."/>
            <person name="Miyamoto S."/>
            <person name="Murakami K."/>
            <person name="Itoh-Nakadai A."/>
            <person name="Kezuka D."/>
            <person name="Itoi S."/>
            <person name="Endo S."/>
            <person name="Hirayasu K."/>
            <person name="Arase H."/>
            <person name="Takai T."/>
        </authorList>
    </citation>
    <scope>FUNCTION</scope>
    <scope>LILRB4-BINDING REGION</scope>
</reference>
<reference key="64">
    <citation type="journal article" date="1992" name="Biochemistry">
        <title>1H NMR assignment and secondary structure of the cell adhesion type III module of fibronectin.</title>
        <authorList>
            <person name="Baron M."/>
            <person name="Main A.L."/>
            <person name="Driscoll P.C."/>
            <person name="Mardon H.J."/>
            <person name="Boyd J."/>
            <person name="Campbell I.D."/>
        </authorList>
    </citation>
    <scope>STRUCTURE BY NMR OF 1538-1631</scope>
</reference>
<reference key="65">
    <citation type="journal article" date="1992" name="Cell">
        <title>The three-dimensional structure of the tenth type III module of fibronectin: an insight into RGD-mediated interactions.</title>
        <authorList>
            <person name="Main A.L."/>
            <person name="Harvey T.S."/>
            <person name="Baron M."/>
            <person name="Boyd J."/>
            <person name="Campbell I.D."/>
        </authorList>
    </citation>
    <scope>STRUCTURE BY NMR OF 1538-1631</scope>
</reference>
<reference key="66">
    <citation type="journal article" date="1994" name="J. Mol. Biol.">
        <title>Solution structure of a pair of fibronectin type 1 modules with fibrin binding activity.</title>
        <authorList>
            <person name="Williams M.J."/>
            <person name="Phan I."/>
            <person name="Harvey T.S."/>
            <person name="Rostagno A."/>
            <person name="Gold L.I."/>
            <person name="Campbell I.D."/>
        </authorList>
    </citation>
    <scope>STRUCTURE BY NMR OF 183-275</scope>
    <scope>DISULFIDE BONDS</scope>
</reference>
<reference key="67">
    <citation type="journal article" date="1995" name="Nat. Struct. Biol.">
        <title>High-resolution structural studies of the factor XIIIa crosslinking site and the first type 1 module of fibronectin.</title>
        <authorList>
            <person name="Potts J.R."/>
            <person name="Phan I."/>
            <person name="Williams M.J."/>
            <person name="Campbell I.D."/>
        </authorList>
    </citation>
    <scope>STRUCTURE BY NMR OF 32-92</scope>
</reference>
<reference key="68">
    <citation type="journal article" date="1998" name="J. Mol. Biol.">
        <title>Solution structure of the glycosylated second type 2 module of fibronectin.</title>
        <authorList>
            <person name="Sticht H."/>
            <person name="Pickford A.R."/>
            <person name="Potts J.R."/>
            <person name="Campbell I.D."/>
        </authorList>
    </citation>
    <scope>STRUCTURE BY NMR OF 406-464</scope>
</reference>
<reference key="69">
    <citation type="journal article" date="1999" name="Structure">
        <title>NMR structure of the human oncofoetal fibronectin ED-B domain, a specific marker for angiogenesis.</title>
        <authorList>
            <person name="Fattorusso R."/>
            <person name="Pellecchia M."/>
            <person name="Viti F."/>
            <person name="Neri P."/>
            <person name="Neri D."/>
            <person name="Wuethrich K."/>
        </authorList>
    </citation>
    <scope>STRUCTURE BY NMR OF EXTRA DOMAIN B FROM ISOFORM 7</scope>
</reference>
<reference key="70">
    <citation type="journal article" date="1999" name="Structure">
        <title>Solution structure of a pair of modules from the gelatin-binding domain of fibronectin.</title>
        <authorList>
            <person name="Bocquier A.A."/>
            <person name="Potts J.R."/>
            <person name="Pickford A.R."/>
            <person name="Campbell I.D."/>
        </authorList>
    </citation>
    <scope>STRUCTURE BY NMR OF 305-405</scope>
</reference>
<reference key="71">
    <citation type="journal article" date="2001" name="EMBO J.">
        <title>The hairpin structure of the (6)F1(1)F2(2)F2 fragment from human fibronectin enhances gelatin binding.</title>
        <authorList>
            <person name="Pickford A.R."/>
            <person name="Smith S.P."/>
            <person name="Staunton D."/>
            <person name="Boyd J."/>
            <person name="Campbell I.D."/>
        </authorList>
    </citation>
    <scope>STRUCTURE BY NMR OF 305-464</scope>
    <scope>DISULFIDE BONDS</scope>
    <scope>GLYCOSYLATION AT ASN-430</scope>
</reference>
<reference key="72">
    <citation type="journal article" date="2001" name="J. Biomol. NMR">
        <title>NMR structure of human fibronectin EDA.</title>
        <authorList>
            <person name="Niimi T."/>
            <person name="Osawa M."/>
            <person name="Yamaji N."/>
            <person name="Yasunaga K."/>
            <person name="Sakashita H."/>
            <person name="Mase T."/>
            <person name="Tanaka A."/>
            <person name="Fujita S."/>
        </authorList>
    </citation>
    <scope>STRUCTURE BY NMR OF 1722-1815</scope>
</reference>
<reference key="73">
    <citation type="journal article" date="2003" name="J. Mol. Biol.">
        <title>Anastellin, an FN3 fragment with fibronectin polymerization activity, resembles amyloid fibril precursors.</title>
        <authorList>
            <person name="Briknarova K."/>
            <person name="Aakerman M.E."/>
            <person name="Hoyt D.W."/>
            <person name="Ruoslahti E."/>
            <person name="Ely K.R."/>
        </authorList>
    </citation>
    <scope>STRUCTURE BY NMR OF 631-705</scope>
    <scope>MUTAGENESIS OF TYR-641; ILE-642; LEU-663; TYR-666; LEU-681; ILE-682; SER-683; ILE-684; GLU-691; VAL-692; ARG-694; PHE-695; ASP-696 AND PHE-697</scope>
</reference>
<reference key="74">
    <citation type="journal article" date="2003" name="Nature">
        <title>Pathogenic bacteria attach to human fibronectin through a tandem beta-zipper.</title>
        <authorList>
            <person name="Schwarz-Linek U."/>
            <person name="Werner J.M."/>
            <person name="Pickford A.R."/>
            <person name="Gurusiddappa S."/>
            <person name="Kim J.H."/>
            <person name="Pilka E.S."/>
            <person name="Briggs J.A."/>
            <person name="Gough T.S."/>
            <person name="Hoeoek M."/>
            <person name="Campbell I.D."/>
            <person name="Potts J.R."/>
        </authorList>
    </citation>
    <scope>STRUCTURE BY NMR OF 48-140 IN COMPLEX WITH A STAPHYLOCOCCUS FIBRONECTIN-BINDING PROTEIN</scope>
    <scope>SUBUNIT (MICROBIAL INFECTION)</scope>
    <scope>DISULFIDE BONDS</scope>
</reference>
<reference key="75">
    <citation type="journal article" date="1994" name="J. Mol. Biol.">
        <title>Crystal structure of the tenth type III cell adhesion module of human fibronectin.</title>
        <authorList>
            <person name="Dickinson C.D."/>
            <person name="Veerapandian B."/>
            <person name="Dai X.-P."/>
            <person name="Hamlin R.C."/>
            <person name="Xuong N.-H."/>
            <person name="Ruoslahti E."/>
            <person name="Ely K.R."/>
        </authorList>
    </citation>
    <scope>X-RAY CRYSTALLOGRAPHY (1.8 ANGSTROMS) OF 1538-1626</scope>
</reference>
<reference key="76">
    <citation type="journal article" date="1996" name="Cell">
        <title>2.0 A crystal structure of a four-domain segment of human fibronectin encompassing the RGD loop and synergy region.</title>
        <authorList>
            <person name="Leahy D.J."/>
            <person name="Aukhil I."/>
            <person name="Erickson H.P."/>
        </authorList>
    </citation>
    <scope>X-RAY CRYSTALLOGRAPHY (2.0 ANGSTROMS) OF 1173-1540</scope>
</reference>
<reference key="77">
    <citation type="journal article" date="1999" name="EMBO J.">
        <title>Crystal structure of a heparin- and integrin-binding segment of human fibronectin.</title>
        <authorList>
            <person name="Sharma A."/>
            <person name="Askari J.A."/>
            <person name="Humphries M.J."/>
            <person name="Jones E.Y."/>
            <person name="Stuart D.I."/>
        </authorList>
    </citation>
    <scope>X-RAY CRYSTALLOGRAPHY (2.8 ANGSTROMS) OF 1812-2082</scope>
</reference>
<reference key="78">
    <citation type="journal article" date="2003" name="Proc. Natl. Acad. Sci. U.S.A.">
        <title>Structure and functional significance of mechanically unfolded fibronectin type III1 intermediates.</title>
        <authorList>
            <person name="Gao M."/>
            <person name="Craig D."/>
            <person name="Lequin O."/>
            <person name="Campbell I.D."/>
            <person name="Vogel V."/>
            <person name="Schulten K."/>
        </authorList>
    </citation>
    <scope>STRUCTURE BY NMR OF 608-701</scope>
</reference>
<reference key="79">
    <citation type="journal article" date="2007" name="EMBO J.">
        <title>Interdomain association in fibronectin: insight into cryptic sites and fibrillogenesis.</title>
        <authorList>
            <person name="Vakonakis I."/>
            <person name="Staunton D."/>
            <person name="Rooney L.M."/>
            <person name="Campbell I.D."/>
        </authorList>
    </citation>
    <scope>STRUCTURE BY NMR OF 609-809</scope>
</reference>
<reference key="80">
    <citation type="journal article" date="2007" name="J. Mol. Biol.">
        <title>The solution and crystal structures of a module pair from the Staphylococcus aureus-binding site of human fibronectin -- a tale with a twist.</title>
        <authorList>
            <person name="Rudino-Pinera E."/>
            <person name="Ravelli R.B."/>
            <person name="Sheldrick G.M."/>
            <person name="Nanao M.H."/>
            <person name="Korostelev V.V."/>
            <person name="Werner J.M."/>
            <person name="Schwarz-Linek U."/>
            <person name="Potts J.R."/>
            <person name="Garman E.F."/>
        </authorList>
    </citation>
    <scope>STRUCTURE BY NMR OF 93-182</scope>
    <scope>X-RAY CRYSTALLOGRAPHY (1.2 ANGSTROMS) OF 93-182</scope>
    <scope>DISULFIDE BONDS</scope>
</reference>
<reference key="81">
    <citation type="journal article" date="2008" name="Proc. Natl. Acad. Sci. U.S.A.">
        <title>Crystal structures of fibronectin-binding sites from Staphylococcus aureus FnBPA in complex with fibronectin domains.</title>
        <authorList>
            <person name="Bingham R.J."/>
            <person name="Rudino-Pinera E."/>
            <person name="Meenan N.A.G."/>
            <person name="Schwarz-Linek U."/>
            <person name="Turkenburg J.P."/>
            <person name="Hoeoek M."/>
            <person name="Garman E.F."/>
            <person name="Potts J.R."/>
        </authorList>
    </citation>
    <scope>X-RAY CRYSTALLOGRAPHY (1.8 ANGSTROMS) OF 93-275 IN COMPLEX WITH STAPHYLOCOCCUS AUREUS FNBA</scope>
</reference>
<reference key="82">
    <citation type="submission" date="2008-03" db="PDB data bank">
        <title>Solution structure of the 11th FN1 domain from human fibronectin 1.</title>
        <authorList>
            <consortium name="RIKEN structural genomics initiative (RSGI)"/>
        </authorList>
    </citation>
    <scope>STRUCTURE BY NMR OF 2330-2390</scope>
</reference>
<reference key="83">
    <citation type="journal article" date="2009" name="Proc. Natl. Acad. Sci. U.S.A.">
        <title>Identification and structural analysis of type I collagen sites in complex with fibronectin fragments.</title>
        <authorList>
            <person name="Erat M.C."/>
            <person name="Slatter D.A."/>
            <person name="Lowe E.D."/>
            <person name="Millard C.J."/>
            <person name="Farndale R.W."/>
            <person name="Campbell I.D."/>
            <person name="Vakonakis I."/>
        </authorList>
    </citation>
    <scope>X-RAY CRYSTALLOGRAPHY (2.1 ANGSTROMS) OF 516-608 IN COMPLEX WITH TYPE I COLLAGEN</scope>
</reference>
<reference key="84">
    <citation type="journal article" date="2006" name="Science">
        <title>The consensus coding sequences of human breast and colorectal cancers.</title>
        <authorList>
            <person name="Sjoeblom T."/>
            <person name="Jones S."/>
            <person name="Wood L.D."/>
            <person name="Parsons D.W."/>
            <person name="Lin J."/>
            <person name="Barber T.D."/>
            <person name="Mandelker D."/>
            <person name="Leary R.J."/>
            <person name="Ptak J."/>
            <person name="Silliman N."/>
            <person name="Szabo S."/>
            <person name="Buckhaults P."/>
            <person name="Farrell C."/>
            <person name="Meeh P."/>
            <person name="Markowitz S.D."/>
            <person name="Willis J."/>
            <person name="Dawson D."/>
            <person name="Willson J.K.V."/>
            <person name="Gazdar A.F."/>
            <person name="Hartigan J."/>
            <person name="Wu L."/>
            <person name="Liu C."/>
            <person name="Parmigiani G."/>
            <person name="Park B.H."/>
            <person name="Bachman K.E."/>
            <person name="Papadopoulos N."/>
            <person name="Vogelstein B."/>
            <person name="Kinzler K.W."/>
            <person name="Velculescu V.E."/>
        </authorList>
    </citation>
    <scope>VARIANTS [LARGE SCALE ANALYSIS] ASN-940; PRO-1120 AND ASN-2471</scope>
</reference>
<reference key="85">
    <citation type="journal article" date="2008" name="Proc. Natl. Acad. Sci. U.S.A.">
        <title>Mutations in FN1 cause glomerulopathy with fibronectin deposits.</title>
        <authorList>
            <person name="Castelletti F."/>
            <person name="Donadelli R."/>
            <person name="Banterla F."/>
            <person name="Hildebrandt F."/>
            <person name="Zipfel P.F."/>
            <person name="Bresin E."/>
            <person name="Otto E."/>
            <person name="Skerka C."/>
            <person name="Renieri A."/>
            <person name="Todeschini M."/>
            <person name="Caprioli J."/>
            <person name="Caruso R.M."/>
            <person name="Artuso R."/>
            <person name="Remuzzi G."/>
            <person name="Noris M."/>
        </authorList>
    </citation>
    <scope>VARIANTS GFND2 CYS-973; ARG-1925 AND ARG-1974</scope>
    <scope>VARIANTS LEU-15 AND VAL-2051</scope>
    <scope>CHARACTERIZATION OF VARIANTS GFND2 ARG-1925 AND ARG-1974</scope>
</reference>
<reference key="86">
    <citation type="journal article" date="2011" name="BMC Syst. Biol.">
        <title>Initial characterization of the human central proteome.</title>
        <authorList>
            <person name="Burkard T.R."/>
            <person name="Planyavsky M."/>
            <person name="Kaupe I."/>
            <person name="Breitwieser F.P."/>
            <person name="Buerckstuemmer T."/>
            <person name="Bennett K.L."/>
            <person name="Superti-Furga G."/>
            <person name="Colinge J."/>
        </authorList>
    </citation>
    <scope>VARIANT [LARGE SCALE ANALYSIS] ILE-2261</scope>
    <scope>IDENTIFICATION BY MASS SPECTROMETRY [LARGE SCALE ANALYSIS]</scope>
</reference>
<keyword id="KW-0002">3D-structure</keyword>
<keyword id="KW-0011">Acute phase</keyword>
<keyword id="KW-0025">Alternative splicing</keyword>
<keyword id="KW-0037">Angiogenesis</keyword>
<keyword id="KW-0130">Cell adhesion</keyword>
<keyword id="KW-0133">Cell shape</keyword>
<keyword id="KW-0903">Direct protein sequencing</keyword>
<keyword id="KW-0225">Disease variant</keyword>
<keyword id="KW-1015">Disulfide bond</keyword>
<keyword id="KW-0242">Dwarfism</keyword>
<keyword id="KW-0272">Extracellular matrix</keyword>
<keyword id="KW-0325">Glycoprotein</keyword>
<keyword id="KW-0358">Heparin-binding</keyword>
<keyword id="KW-1017">Isopeptide bond</keyword>
<keyword id="KW-0558">Oxidation</keyword>
<keyword id="KW-0597">Phosphoprotein</keyword>
<keyword id="KW-1267">Proteomics identification</keyword>
<keyword id="KW-0873">Pyrrolidone carboxylic acid</keyword>
<keyword id="KW-1185">Reference proteome</keyword>
<keyword id="KW-0677">Repeat</keyword>
<keyword id="KW-0964">Secreted</keyword>
<keyword id="KW-0732">Signal</keyword>
<keyword id="KW-0765">Sulfation</keyword>
<gene>
    <name evidence="64" type="primary">FN1</name>
    <name type="synonym">FN</name>
</gene>
<sequence length="2477" mass="272320">MLRGPGPGLLLLAVQCLGTAVPSTGASKSKRQAQQMVQPQSPVAVSQSKPGCYDNGKHYQINQQWERTYLGNALVCTCYGGSRGFNCESKPEAEETCFDKYTGNTYRVGDTYERPKDSMIWDCTCIGAGRGRISCTIANRCHEGGQSYKIGDTWRRPHETGGYMLECVCLGNGKGEWTCKPIAEKCFDHAAGTSYVVGETWEKPYQGWMMVDCTCLGEGSGRITCTSRNRCNDQDTRTSYRIGDTWSKKDNRGNLLQCICTGNGRGEWKCERHTSVQTTSSGSGPFTDVRAAVYQPQPHPQPPPYGHCVTDSGVVYSVGMQWLKTQGNKQMLCTCLGNGVSCQETAVTQTYGGNSNGEPCVLPFTYNGRTFYSCTTEGRQDGHLWCSTTSNYEQDQKYSFCTDHTVLVQTRGGNSNGALCHFPFLYNNHNYTDCTSEGRRDNMKWCGTTQNYDADQKFGFCPMAAHEEICTTNEGVMYRIGDQWDKQHDMGHMMRCTCVGNGRGEWTCIAYSQLRDQCIVDDITYNVNDTFHKRHEEGHMLNCTCFGQGRGRWKCDPVDQCQDSETGTFYQIGDSWEKYVHGVRYQCYCYGRGIGEWHCQPLQTYPSSSGPVEVFITETPSQPNSHPIQWNAPQPSHISKYILRWRPKNSVGRWKEATIPGHLNSYTIKGLKPGVVYEGQLISIQQYGHQEVTRFDFTTTSTSTPVTSNTVTGETTPFSPLVATSESVTEITASSFVVSWVSASDTVSGFRVEYELSEEGDEPQYLDLPSTATSVNIPDLLPGRKYIVNVYQISEDGEQSLILSTSQTTAPDAPPDTTVDQVDDTSIVVRWSRPQAPITGYRIVYSPSVEGSSTELNLPETANSVTLSDLQPGVQYNITIYAVEENQESTPVVIQQETTGTPRSDTVPSPRDLQFVEVTDVKVTIMWTPPESAVTGYRVDVIPVNLPGEHGQRLPISRNTFAEVTGLSPGVTYYFKVFAVSHGRESKPLTAQQTTKLDAPTNLQFVNETDSTVLVRWTPPRAQITGYRLTVGLTRRGQPRQYNVGPSVSKYPLRNLQPASEYTVSLVAIKGNQESPKATGVFTTLQPGSSIPPYNTEVTETTIVITWTPAPRIGFKLGVRPSQGGEAPREVTSDSGSIVVSGLTPGVEYVYTIQVLRDGQERDAPIVNKVVTPLSPPTNLHLEANPDTGVLTVSWERSTTPDITGYRITTTPTNGQQGNSLEEVVHADQSSCTFDNLSPGLEYNVSVYTVKDDKESVPISDTIIPEVPQLTDLSFVDITDSSIGLRWTPLNSSTIIGYRITVVAAGEGIPIFEDFVDSSVGYYTVTGLEPGIDYDISVITLINGGESAPTTLTQQTAVPPPTDLRFTNIGPDTMRVTWAPPPSIDLTNFLVRYSPVKNEEDVAELSISPSDNAVVLTNLLPGTEYVVSVSSVYEQHESTPLRGRQKTGLDSPTGIDFSDITANSFTVHWIAPRATITGYRIRHHPEHFSGRPREDRVPHSRNSITLTNLTPGTEYVVSIVALNGREESPLLIGQQSTVSDVPRDLEVVAATPTSLLISWDAPAVTVRYYRITYGETGGNSPVQEFTVPGSKSTATISGLKPGVDYTITVYAVTGRGDSPASSKPISINYRTEIDKPSQMQVTDVQDNSISVKWLPSSSPVTGYRVTTTPKNGPGPTKTKTAGPDQTEMTIEGLQPTVEYVVSVYAQNPSGESQPLVQTAVTNIDRPKGLAFTDVDVDSIKIAWESPQGQVSRYRVTYSSPEDGIHELFPAPDGEEDTAELQGLRPGSEYTVSVVALHDDMESQPLIGTQSTAIPAPTDLKFTQVTPTSLSAQWTPPNVQLTGYRVRVTPKEKTGPMKEINLAPDSSSVVVSGLMVATKYEVSVYALKDTLTSRPAQGVVTTLENVSPPRRARVTDATETTITISWRTKTETITGFQVDAVPANGQTPIQRTIKPDVRSYTITGLQPGTDYKIYLYTLNDNARSSPVVIDASTAIDAPSNLRFLATTPNSLLVSWQPPRARITGYIIKYEKPGSPPREVVPRPRPGVTEATITGLEPGTEYTIYVIALKNNQKSEPLIGRKKTDELPQLVTLPHPNLHGPEILDVPSTVQKTPFVTHPGYDTGNGIQLPGTSGQQPSVGQQMIFEEHGFRRTTPPTTATPIRHRPRPYPPNVGEEIQIGHIPREDVDYHLYPHGPGLNPNASTGQEALSQTTISWAPFQDTSEYIISCHPVGTDEEPLQFRVPGTSTSATLTGLTRGATYNVIVEALKDQQRHKVREEVVTVGNSVNEGLNQPTDDSCFDPYTVSHYAVGDEWERMSESGFKLLCQCLGFGSGHFRCDSSRWCHDNGVNYKIGEKWDRQGENGQMMSCTCLGNGKGEFKCDPHEATCYDDGKTYHVGEQWQKEYLGAICSCTCFGGQRGWRCDNCRRPGGEPSPEGTTGQSYNQYSQRYHQRTNTNVNCPIECFMPLDVQADREDSRE</sequence>